<evidence type="ECO:0000255" key="1"/>
<evidence type="ECO:0000255" key="2">
    <source>
        <dbReference type="PROSITE-ProRule" id="PRU00081"/>
    </source>
</evidence>
<evidence type="ECO:0000256" key="3">
    <source>
        <dbReference type="SAM" id="MobiDB-lite"/>
    </source>
</evidence>
<evidence type="ECO:0000269" key="4">
    <source>
    </source>
</evidence>
<evidence type="ECO:0000269" key="5">
    <source>
    </source>
</evidence>
<evidence type="ECO:0000269" key="6">
    <source>
    </source>
</evidence>
<evidence type="ECO:0000269" key="7">
    <source>
    </source>
</evidence>
<evidence type="ECO:0000269" key="8">
    <source>
    </source>
</evidence>
<evidence type="ECO:0000269" key="9">
    <source>
    </source>
</evidence>
<evidence type="ECO:0000269" key="10">
    <source>
    </source>
</evidence>
<evidence type="ECO:0000269" key="11">
    <source>
    </source>
</evidence>
<evidence type="ECO:0000269" key="12">
    <source>
    </source>
</evidence>
<evidence type="ECO:0000269" key="13">
    <source>
    </source>
</evidence>
<evidence type="ECO:0000269" key="14">
    <source>
    </source>
</evidence>
<evidence type="ECO:0000269" key="15">
    <source>
    </source>
</evidence>
<evidence type="ECO:0000269" key="16">
    <source>
    </source>
</evidence>
<evidence type="ECO:0000269" key="17">
    <source>
    </source>
</evidence>
<evidence type="ECO:0000269" key="18">
    <source>
    </source>
</evidence>
<evidence type="ECO:0000269" key="19">
    <source>
    </source>
</evidence>
<evidence type="ECO:0000269" key="20">
    <source>
    </source>
</evidence>
<evidence type="ECO:0000269" key="21">
    <source>
    </source>
</evidence>
<evidence type="ECO:0000269" key="22">
    <source>
    </source>
</evidence>
<evidence type="ECO:0000269" key="23">
    <source>
    </source>
</evidence>
<evidence type="ECO:0000269" key="24">
    <source>
    </source>
</evidence>
<evidence type="ECO:0000269" key="25">
    <source>
    </source>
</evidence>
<evidence type="ECO:0000269" key="26">
    <source>
    </source>
</evidence>
<evidence type="ECO:0000269" key="27">
    <source>
    </source>
</evidence>
<evidence type="ECO:0000269" key="28">
    <source>
    </source>
</evidence>
<evidence type="ECO:0000269" key="29">
    <source>
    </source>
</evidence>
<evidence type="ECO:0000269" key="30">
    <source>
    </source>
</evidence>
<evidence type="ECO:0000269" key="31">
    <source>
    </source>
</evidence>
<evidence type="ECO:0000269" key="32">
    <source>
    </source>
</evidence>
<evidence type="ECO:0000269" key="33">
    <source>
    </source>
</evidence>
<evidence type="ECO:0000269" key="34">
    <source>
    </source>
</evidence>
<evidence type="ECO:0000269" key="35">
    <source>
    </source>
</evidence>
<evidence type="ECO:0000269" key="36">
    <source>
    </source>
</evidence>
<evidence type="ECO:0000269" key="37">
    <source>
    </source>
</evidence>
<evidence type="ECO:0000269" key="38">
    <source>
    </source>
</evidence>
<evidence type="ECO:0000269" key="39">
    <source>
    </source>
</evidence>
<evidence type="ECO:0000269" key="40">
    <source>
    </source>
</evidence>
<evidence type="ECO:0000269" key="41">
    <source>
    </source>
</evidence>
<evidence type="ECO:0000269" key="42">
    <source>
    </source>
</evidence>
<evidence type="ECO:0000269" key="43">
    <source>
    </source>
</evidence>
<evidence type="ECO:0000269" key="44">
    <source>
    </source>
</evidence>
<evidence type="ECO:0000269" key="45">
    <source>
    </source>
</evidence>
<evidence type="ECO:0000269" key="46">
    <source>
    </source>
</evidence>
<evidence type="ECO:0000269" key="47">
    <source>
    </source>
</evidence>
<evidence type="ECO:0000269" key="48">
    <source>
    </source>
</evidence>
<evidence type="ECO:0000269" key="49">
    <source>
    </source>
</evidence>
<evidence type="ECO:0000269" key="50">
    <source>
    </source>
</evidence>
<evidence type="ECO:0000269" key="51">
    <source>
    </source>
</evidence>
<evidence type="ECO:0000269" key="52">
    <source>
    </source>
</evidence>
<evidence type="ECO:0000269" key="53">
    <source>
    </source>
</evidence>
<evidence type="ECO:0000269" key="54">
    <source>
    </source>
</evidence>
<evidence type="ECO:0000269" key="55">
    <source>
    </source>
</evidence>
<evidence type="ECO:0000269" key="56">
    <source>
    </source>
</evidence>
<evidence type="ECO:0000269" key="57">
    <source>
    </source>
</evidence>
<evidence type="ECO:0000269" key="58">
    <source>
    </source>
</evidence>
<evidence type="ECO:0000269" key="59">
    <source>
    </source>
</evidence>
<evidence type="ECO:0000269" key="60">
    <source>
    </source>
</evidence>
<evidence type="ECO:0000269" key="61">
    <source>
    </source>
</evidence>
<evidence type="ECO:0000269" key="62">
    <source>
    </source>
</evidence>
<evidence type="ECO:0000269" key="63">
    <source>
    </source>
</evidence>
<evidence type="ECO:0000269" key="64">
    <source>
    </source>
</evidence>
<evidence type="ECO:0000269" key="65">
    <source>
    </source>
</evidence>
<evidence type="ECO:0000269" key="66">
    <source>
    </source>
</evidence>
<evidence type="ECO:0000269" key="67">
    <source>
    </source>
</evidence>
<evidence type="ECO:0000269" key="68">
    <source>
    </source>
</evidence>
<evidence type="ECO:0000269" key="69">
    <source>
    </source>
</evidence>
<evidence type="ECO:0000269" key="70">
    <source>
    </source>
</evidence>
<evidence type="ECO:0000269" key="71">
    <source>
    </source>
</evidence>
<evidence type="ECO:0000269" key="72">
    <source>
    </source>
</evidence>
<evidence type="ECO:0000269" key="73">
    <source>
    </source>
</evidence>
<evidence type="ECO:0000269" key="74">
    <source>
    </source>
</evidence>
<evidence type="ECO:0000269" key="75">
    <source>
    </source>
</evidence>
<evidence type="ECO:0000269" key="76">
    <source>
    </source>
</evidence>
<evidence type="ECO:0000269" key="77">
    <source>
    </source>
</evidence>
<evidence type="ECO:0000269" key="78">
    <source>
    </source>
</evidence>
<evidence type="ECO:0000269" key="79">
    <source>
    </source>
</evidence>
<evidence type="ECO:0000269" key="80">
    <source>
    </source>
</evidence>
<evidence type="ECO:0000269" key="81">
    <source>
    </source>
</evidence>
<evidence type="ECO:0000269" key="82">
    <source>
    </source>
</evidence>
<evidence type="ECO:0000269" key="83">
    <source>
    </source>
</evidence>
<evidence type="ECO:0000269" key="84">
    <source>
    </source>
</evidence>
<evidence type="ECO:0000269" key="85">
    <source>
    </source>
</evidence>
<evidence type="ECO:0000269" key="86">
    <source>
    </source>
</evidence>
<evidence type="ECO:0000269" key="87">
    <source>
    </source>
</evidence>
<evidence type="ECO:0000269" key="88">
    <source>
    </source>
</evidence>
<evidence type="ECO:0000269" key="89">
    <source>
    </source>
</evidence>
<evidence type="ECO:0000269" key="90">
    <source>
    </source>
</evidence>
<evidence type="ECO:0000269" key="91">
    <source>
    </source>
</evidence>
<evidence type="ECO:0000269" key="92">
    <source>
    </source>
</evidence>
<evidence type="ECO:0000269" key="93">
    <source>
    </source>
</evidence>
<evidence type="ECO:0000269" key="94">
    <source>
    </source>
</evidence>
<evidence type="ECO:0000269" key="95">
    <source ref="6"/>
</evidence>
<evidence type="ECO:0000303" key="96">
    <source>
    </source>
</evidence>
<evidence type="ECO:0000303" key="97">
    <source>
    </source>
</evidence>
<evidence type="ECO:0000303" key="98">
    <source>
    </source>
</evidence>
<evidence type="ECO:0000305" key="99"/>
<evidence type="ECO:0007829" key="100">
    <source>
        <dbReference type="PDB" id="1D7P"/>
    </source>
</evidence>
<evidence type="ECO:0007829" key="101">
    <source>
        <dbReference type="PDB" id="3HNY"/>
    </source>
</evidence>
<evidence type="ECO:0007829" key="102">
    <source>
        <dbReference type="PDB" id="6MF0"/>
    </source>
</evidence>
<evidence type="ECO:0007829" key="103">
    <source>
        <dbReference type="PDB" id="7KWO"/>
    </source>
</evidence>
<evidence type="ECO:0007829" key="104">
    <source>
        <dbReference type="PDB" id="8TY1"/>
    </source>
</evidence>
<comment type="function">
    <text>Factor VIII, along with calcium and phospholipid, acts as a cofactor for F9/factor IXa when it converts F10/factor X to the activated form, factor Xa.</text>
</comment>
<comment type="subunit">
    <text evidence="40 84">Interacts with VWF/vWF. vWF binding is essential for the stabilization of F8 in circulation.</text>
</comment>
<comment type="interaction">
    <interactant intactId="EBI-1046394">
        <id>P00451</id>
    </interactant>
    <interactant intactId="EBI-981819">
        <id>P04275</id>
        <label>VWF</label>
    </interactant>
    <organismsDiffer>false</organismsDiffer>
    <experiments>2</experiments>
</comment>
<comment type="interaction">
    <interactant intactId="EBI-25852704">
        <id>P00451-2</id>
    </interactant>
    <interactant intactId="EBI-6447163">
        <id>Q8N7X4</id>
        <label>MAGEB6</label>
    </interactant>
    <organismsDiffer>false</organismsDiffer>
    <experiments>3</experiments>
</comment>
<comment type="interaction">
    <interactant intactId="EBI-25852704">
        <id>P00451-2</id>
    </interactant>
    <interactant intactId="EBI-752324">
        <id>Q8N488</id>
        <label>RYBP</label>
    </interactant>
    <organismsDiffer>false</organismsDiffer>
    <experiments>3</experiments>
</comment>
<comment type="interaction">
    <interactant intactId="EBI-21454065">
        <id>PRO_0000002967</id>
    </interactant>
    <interactant intactId="EBI-981819">
        <id>P04275</id>
        <label>VWF</label>
    </interactant>
    <organismsDiffer>false</organismsDiffer>
    <experiments>2</experiments>
</comment>
<comment type="interaction">
    <interactant intactId="EBI-11621603">
        <id>PRO_0000002968</id>
    </interactant>
    <interactant intactId="EBI-9640450">
        <id>P00740</id>
        <label>F9</label>
    </interactant>
    <organismsDiffer>false</organismsDiffer>
    <experiments>2</experiments>
</comment>
<comment type="subcellular location">
    <subcellularLocation>
        <location>Secreted</location>
        <location>Extracellular space</location>
    </subcellularLocation>
</comment>
<comment type="alternative products">
    <event type="alternative splicing"/>
    <isoform>
        <id>P00451-1</id>
        <name>1</name>
        <sequence type="displayed"/>
    </isoform>
    <isoform>
        <id>P00451-2</id>
        <name>2</name>
        <name>F8B</name>
        <sequence type="described" ref="VSP_042656 VSP_042657"/>
    </isoform>
</comment>
<comment type="domain">
    <text>Domain F5/8 type C 2 is responsible for phospholipid-binding and essential for factor VIII activity.</text>
</comment>
<comment type="PTM">
    <text evidence="6 40 49">Sulfation on Tyr-1699 is essential for binding vWF.</text>
</comment>
<comment type="PTM">
    <text evidence="47">Proteolytically cleaved by cathepsin CTSG to produce a partially activated form.</text>
</comment>
<comment type="disease" evidence="4 5 7 8 9 10 11 12 13 14 15 16 17 18 19 20 21 22 23 24 25 26 27 28 29 30 31 32 33 34 35 36 37 38 39 41 42 44 45 46 48 50 51 52 53 54 55 56 57 58 59 60 61 62 63 64 65 66 67 68 69 70 71 74 76 77 78 79 80 81 82 83 85 86 87 88 89 90 91 92 93 94">
    <disease id="DI-01705">
        <name>Hemophilia A</name>
        <acronym>HEMA</acronym>
        <description>A disorder of blood coagulation characterized by a permanent tendency to hemorrhage. About 50% of patients have severe hemophilia resulting in frequent spontaneous bleeding into joints, muscles and internal organs. Less severe forms are characterized by bleeding after trauma or surgery.</description>
        <dbReference type="MIM" id="306700"/>
    </disease>
    <text>The disease is caused by variants affecting the gene represented in this entry. Of particular interest for the understanding of the function of F8 is the category of CRM (cross-reacting material) positive patients (approximately 5%) that have considerable amount of F8 in their plasma (at least 30% of normal), but the protein is non-functional; i.e. the F8 activity is much less than the plasma protein level. CRM-reduced is another category of patients in which the F8C antigen and activity are reduced to approximately the same level. Most mutations are CRM negative, and probably affect the folding and stability of the protein.</text>
</comment>
<comment type="disease" evidence="73">
    <disease id="DI-06326">
        <name>Thrombophilia 13, X-linked, due to factor VIII defect</name>
        <acronym>THPH13</acronym>
        <description>An X-linked dominant, hemostatic disorder associated with markedly elevated F8 levels, and characterized by severe thrombophilia.</description>
        <dbReference type="MIM" id="301071"/>
    </disease>
    <text>The disease is caused by variants affecting the gene represented in this entry.</text>
</comment>
<comment type="pharmaceutical">
    <text>Available under the names Kogenate (Bayer) and Recombinate (Baxter and American Home Products). Used to treat hemophilia A.</text>
</comment>
<comment type="similarity">
    <text evidence="99">Belongs to the multicopper oxidase family.</text>
</comment>
<comment type="online information" name="Wikipedia">
    <link uri="https://en.wikipedia.org/wiki/Factor_VIII"/>
    <text>Factor VIII entry</text>
</comment>
<comment type="online information" name="Factor VIII variant database">
    <link uri="https://f8-db.eahad.org/"/>
</comment>
<keyword id="KW-0002">3D-structure</keyword>
<keyword id="KW-0011">Acute phase</keyword>
<keyword id="KW-0025">Alternative splicing</keyword>
<keyword id="KW-0094">Blood coagulation</keyword>
<keyword id="KW-0106">Calcium</keyword>
<keyword id="KW-0903">Direct protein sequencing</keyword>
<keyword id="KW-0225">Disease variant</keyword>
<keyword id="KW-1015">Disulfide bond</keyword>
<keyword id="KW-0325">Glycoprotein</keyword>
<keyword id="KW-0355">Hemophilia</keyword>
<keyword id="KW-0356">Hemostasis</keyword>
<keyword id="KW-0479">Metal-binding</keyword>
<keyword id="KW-0582">Pharmaceutical</keyword>
<keyword id="KW-1267">Proteomics identification</keyword>
<keyword id="KW-1185">Reference proteome</keyword>
<keyword id="KW-0677">Repeat</keyword>
<keyword id="KW-0964">Secreted</keyword>
<keyword id="KW-0732">Signal</keyword>
<keyword id="KW-0765">Sulfation</keyword>
<keyword id="KW-0792">Thrombophilia</keyword>
<name>FA8_HUMAN</name>
<proteinExistence type="evidence at protein level"/>
<sequence>MQIELSTCFFLCLLRFCFSATRRYYLGAVELSWDYMQSDLGELPVDARFPPRVPKSFPFNTSVVYKKTLFVEFTDHLFNIAKPRPPWMGLLGPTIQAEVYDTVVITLKNMASHPVSLHAVGVSYWKASEGAEYDDQTSQREKEDDKVFPGGSHTYVWQVLKENGPMASDPLCLTYSYLSHVDLVKDLNSGLIGALLVCREGSLAKEKTQTLHKFILLFAVFDEGKSWHSETKNSLMQDRDAASARAWPKMHTVNGYVNRSLPGLIGCHRKSVYWHVIGMGTTPEVHSIFLEGHTFLVRNHRQASLEISPITFLTAQTLLMDLGQFLLFCHISSHQHDGMEAYVKVDSCPEEPQLRMKNNEEAEDYDDDLTDSEMDVVRFDDDNSPSFIQIRSVAKKHPKTWVHYIAAEEEDWDYAPLVLAPDDRSYKSQYLNNGPQRIGRKYKKVRFMAYTDETFKTREAIQHESGILGPLLYGEVGDTLLIIFKNQASRPYNIYPHGITDVRPLYSRRLPKGVKHLKDFPILPGEIFKYKWTVTVEDGPTKSDPRCLTRYYSSFVNMERDLASGLIGPLLICYKESVDQRGNQIMSDKRNVILFSVFDENRSWYLTENIQRFLPNPAGVQLEDPEFQASNIMHSINGYVFDSLQLSVCLHEVAYWYILSIGAQTDFLSVFFSGYTFKHKMVYEDTLTLFPFSGETVFMSMENPGLWILGCHNSDFRNRGMTALLKVSSCDKNTGDYYEDSYEDISAYLLSKNNAIEPRSFSQNSRHPSTRQKQFNATTIPENDIEKTDPWFAHRTPMPKIQNVSSSDLLMLLRQSPTPHGLSLSDLQEAKYETFSDDPSPGAIDSNNSLSEMTHFRPQLHHSGDMVFTPESGLQLRLNEKLGTTAATELKKLDFKVSSTSNNLISTIPSDNLAAGTDNTSSLGPPSMPVHYDSQLDTTLFGKKSSPLTESGGPLSLSEENNDSKLLESGLMNSQESSWGKNVSSTESGRLFKGKRAHGPALLTKDNALFKVSISLLKTNKTSNNSATNRKTHIDGPSLLIENSPSVWQNILESDTEFKKVTPLIHDRMLMDKNATALRLNHMSNKTTSSKNMEMVQQKKEGPIPPDAQNPDMSFFKMLFLPESARWIQRTHGKNSLNSGQGPSPKQLVSLGPEKSVEGQNFLSEKNKVVVGKGEFTKDVGLKEMVFPSSRNLFLTNLDNLHENNTHNQEKKIQEEIEKKETLIQENVVLPQIHTVTGTKNFMKNLFLLSTRQNVEGSYDGAYAPVLQDFRSLNDSTNRTKKHTAHFSKKGEEENLEGLGNQTKQIVEKYACTTRISPNTSQQNFVTQRSKRALKQFRLPLEETELEKRIIVDDTSTQWSKNMKHLTPSTLTQIDYNEKEKGAITQSPLSDCLTRSHSIPQANRSPLPIAKVSSFPSIRPIYLTRVLFQDNSSHLPAASYRKKDSGVQESSHFLQGAKKNNLSLAILTLEMTGDQREVGSLGTSATNSVTYKKVENTVLPKPDLPKTSGKVELLPKVHIYQKDLFPTETSNGSPGHLDLVEGSLLQGTEGAIKWNEANRPGKVPFLRVATESSAKTPSKLLDPLAWDNHYGTQIPKEEWKSQEKSPEKTAFKKKDTILSLNACESNHAIAAINEGQNKPEIEVTWAKQGRTERLCSQNPPVLKRHQREITRTTLQSDQEEIDYDDTISVEMKKEDFDIYDEDENQSPRSFQKKTRHYFIAAVERLWDYGMSSSPHVLRNRAQSGSVPQFKKVVFQEFTDGSFTQPLYRGELNEHLGLLGPYIRAEVEDNIMVTFRNQASRPYSFYSSLISYEEDQRQGAEPRKNFVKPNETKTYFWKVQHHMAPTKDEFDCKAWAYFSDVDLEKDVHSGLIGPLLVCHTNTLNPAHGRQVTVQEFALFFTIFDETKSWYFTENMERNCRAPCNIQMEDPTFKENYRFHAINGYIMDTLPGLVMAQDQRIRWYLLSMGSNENIHSIHFSGHVFTVRKKEEYKMALYNLYPGVFETVEMLPSKAGIWRVECLIGEHLHAGMSTLFLVYSNKCQTPLGMASGHIRDFQITASGQYGQWAPKLARLHYSGSINAWSTKEPFSWIKVDLLAPMIIHGIKTQGARQKFSSLYISQFIIMYSLDGKKWQTYRGNSTGTLMVFFGNVDSSGIKHNIFNPPIIARYIRLHPTHYSIRSTLRMELMGCDLNSCSMPLGMESKAISDAQITASSYFTNMFATWSPSKARLHLQGRSNAWRPQVNNPKEWLQVDFQKTMKVTGVTTQGVKSLLTSMYVKEFLISSSQDGHQWTLFFQNGKVKVFQGNQDSFTPVVNSLDPPLLTRYLRIHPQSWVHQIALRMEVLGCEAQDLY</sequence>
<reference key="1">
    <citation type="journal article" date="1985" name="DNA">
        <title>Characterization of the polypeptide composition of human factor VIII:C and the nucleotide sequence and expression of the human kidney cDNA.</title>
        <authorList>
            <person name="Truett M.A."/>
            <person name="Blacher R."/>
            <person name="Burke R.L."/>
            <person name="Caput D."/>
            <person name="Chu C."/>
            <person name="Dina D."/>
            <person name="Hartog K."/>
            <person name="Kuo C.H."/>
            <person name="Masiarz F.R."/>
            <person name="Merryweather J.P."/>
            <person name="Najarian R."/>
            <person name="Pachl C."/>
            <person name="Potter S.J."/>
            <person name="Puma J."/>
            <person name="Quiroga M."/>
            <person name="Rall L.B."/>
            <person name="Randolph A."/>
            <person name="Urdea M.S."/>
            <person name="Valenzuela P."/>
            <person name="Dahl H.-H.M."/>
            <person name="Favalaro J."/>
            <person name="Hansen J."/>
            <person name="Nordfang O."/>
            <person name="Ezban M."/>
        </authorList>
    </citation>
    <scope>NUCLEOTIDE SEQUENCE [MRNA] (ISOFORM 1)</scope>
</reference>
<reference key="2">
    <citation type="journal article" date="1984" name="Nature">
        <title>Expression of active human factor VIII from recombinant DNA clones.</title>
        <authorList>
            <person name="Wood W.I."/>
            <person name="Capon D.J."/>
            <person name="Simonsen C.C."/>
            <person name="Eaton D.L."/>
            <person name="Gitschier J."/>
            <person name="Keyt B."/>
            <person name="Seeburg P.H."/>
            <person name="Smith D.H."/>
            <person name="Hollingshead P."/>
            <person name="Wion K.L."/>
            <person name="Delwart E."/>
            <person name="Tuddenham E.G.D."/>
            <person name="Vehar G.A."/>
            <person name="Lawn R.M."/>
        </authorList>
    </citation>
    <scope>NUCLEOTIDE SEQUENCE [MRNA] (ISOFORM 1)</scope>
</reference>
<reference key="3">
    <citation type="journal article" date="1992" name="Genomics">
        <title>Evidence for a third transcript from the human factor VIII gene.</title>
        <authorList>
            <person name="Levinson B."/>
            <person name="Kenwrick S."/>
            <person name="Gamel P."/>
            <person name="Fisher K."/>
            <person name="Gitschier J."/>
        </authorList>
    </citation>
    <scope>NUCLEOTIDE SEQUENCE [MRNA] (ISOFORM 2)</scope>
    <scope>ALTERNATIVE SPLICING</scope>
</reference>
<reference key="4">
    <citation type="journal article" date="1984" name="Nature">
        <title>Molecular cloning of a cDNA encoding human antihaemophilic factor.</title>
        <authorList>
            <person name="Toole J.J."/>
            <person name="Knopf J.L."/>
            <person name="Wozney J.M."/>
            <person name="Sultzman L.A."/>
            <person name="Buecker J.L."/>
            <person name="Pittman D.D."/>
            <person name="Kaufman R.J."/>
            <person name="Brown E."/>
            <person name="Shoemaker C."/>
            <person name="Orr E.C."/>
            <person name="Amphlett G.W."/>
            <person name="Foster W.B."/>
            <person name="Coe M.L."/>
            <person name="Knutson G.J."/>
            <person name="Fass D.N."/>
            <person name="Hewick R.M."/>
        </authorList>
    </citation>
    <scope>NUCLEOTIDE SEQUENCE [MRNA] (ISOFORM 1)</scope>
</reference>
<reference key="5">
    <citation type="journal article" date="1992" name="Hum. Mol. Genet.">
        <title>Sequence of the exon-containing regions of the human factor VIII gene.</title>
        <authorList>
            <person name="Gitschier J."/>
            <person name="Wood W.I."/>
        </authorList>
    </citation>
    <scope>NUCLEOTIDE SEQUENCE [GENOMIC DNA]</scope>
</reference>
<reference key="6">
    <citation type="submission" date="2004-10" db="EMBL/GenBank/DDBJ databases">
        <authorList>
            <consortium name="SeattleSNPs variation discovery resource"/>
        </authorList>
    </citation>
    <scope>NUCLEOTIDE SEQUENCE [GENOMIC DNA]</scope>
    <scope>VARIANTS GLU-1260 AND VAL-2257</scope>
</reference>
<reference key="7">
    <citation type="journal article" date="2004" name="Nat. Genet.">
        <title>Complete sequencing and characterization of 21,243 full-length human cDNAs.</title>
        <authorList>
            <person name="Ota T."/>
            <person name="Suzuki Y."/>
            <person name="Nishikawa T."/>
            <person name="Otsuki T."/>
            <person name="Sugiyama T."/>
            <person name="Irie R."/>
            <person name="Wakamatsu A."/>
            <person name="Hayashi K."/>
            <person name="Sato H."/>
            <person name="Nagai K."/>
            <person name="Kimura K."/>
            <person name="Makita H."/>
            <person name="Sekine M."/>
            <person name="Obayashi M."/>
            <person name="Nishi T."/>
            <person name="Shibahara T."/>
            <person name="Tanaka T."/>
            <person name="Ishii S."/>
            <person name="Yamamoto J."/>
            <person name="Saito K."/>
            <person name="Kawai Y."/>
            <person name="Isono Y."/>
            <person name="Nakamura Y."/>
            <person name="Nagahari K."/>
            <person name="Murakami K."/>
            <person name="Yasuda T."/>
            <person name="Iwayanagi T."/>
            <person name="Wagatsuma M."/>
            <person name="Shiratori A."/>
            <person name="Sudo H."/>
            <person name="Hosoiri T."/>
            <person name="Kaku Y."/>
            <person name="Kodaira H."/>
            <person name="Kondo H."/>
            <person name="Sugawara M."/>
            <person name="Takahashi M."/>
            <person name="Kanda K."/>
            <person name="Yokoi T."/>
            <person name="Furuya T."/>
            <person name="Kikkawa E."/>
            <person name="Omura Y."/>
            <person name="Abe K."/>
            <person name="Kamihara K."/>
            <person name="Katsuta N."/>
            <person name="Sato K."/>
            <person name="Tanikawa M."/>
            <person name="Yamazaki M."/>
            <person name="Ninomiya K."/>
            <person name="Ishibashi T."/>
            <person name="Yamashita H."/>
            <person name="Murakawa K."/>
            <person name="Fujimori K."/>
            <person name="Tanai H."/>
            <person name="Kimata M."/>
            <person name="Watanabe M."/>
            <person name="Hiraoka S."/>
            <person name="Chiba Y."/>
            <person name="Ishida S."/>
            <person name="Ono Y."/>
            <person name="Takiguchi S."/>
            <person name="Watanabe S."/>
            <person name="Yosida M."/>
            <person name="Hotuta T."/>
            <person name="Kusano J."/>
            <person name="Kanehori K."/>
            <person name="Takahashi-Fujii A."/>
            <person name="Hara H."/>
            <person name="Tanase T.-O."/>
            <person name="Nomura Y."/>
            <person name="Togiya S."/>
            <person name="Komai F."/>
            <person name="Hara R."/>
            <person name="Takeuchi K."/>
            <person name="Arita M."/>
            <person name="Imose N."/>
            <person name="Musashino K."/>
            <person name="Yuuki H."/>
            <person name="Oshima A."/>
            <person name="Sasaki N."/>
            <person name="Aotsuka S."/>
            <person name="Yoshikawa Y."/>
            <person name="Matsunawa H."/>
            <person name="Ichihara T."/>
            <person name="Shiohata N."/>
            <person name="Sano S."/>
            <person name="Moriya S."/>
            <person name="Momiyama H."/>
            <person name="Satoh N."/>
            <person name="Takami S."/>
            <person name="Terashima Y."/>
            <person name="Suzuki O."/>
            <person name="Nakagawa S."/>
            <person name="Senoh A."/>
            <person name="Mizoguchi H."/>
            <person name="Goto Y."/>
            <person name="Shimizu F."/>
            <person name="Wakebe H."/>
            <person name="Hishigaki H."/>
            <person name="Watanabe T."/>
            <person name="Sugiyama A."/>
            <person name="Takemoto M."/>
            <person name="Kawakami B."/>
            <person name="Yamazaki M."/>
            <person name="Watanabe K."/>
            <person name="Kumagai A."/>
            <person name="Itakura S."/>
            <person name="Fukuzumi Y."/>
            <person name="Fujimori Y."/>
            <person name="Komiyama M."/>
            <person name="Tashiro H."/>
            <person name="Tanigami A."/>
            <person name="Fujiwara T."/>
            <person name="Ono T."/>
            <person name="Yamada K."/>
            <person name="Fujii Y."/>
            <person name="Ozaki K."/>
            <person name="Hirao M."/>
            <person name="Ohmori Y."/>
            <person name="Kawabata A."/>
            <person name="Hikiji T."/>
            <person name="Kobatake N."/>
            <person name="Inagaki H."/>
            <person name="Ikema Y."/>
            <person name="Okamoto S."/>
            <person name="Okitani R."/>
            <person name="Kawakami T."/>
            <person name="Noguchi S."/>
            <person name="Itoh T."/>
            <person name="Shigeta K."/>
            <person name="Senba T."/>
            <person name="Matsumura K."/>
            <person name="Nakajima Y."/>
            <person name="Mizuno T."/>
            <person name="Morinaga M."/>
            <person name="Sasaki M."/>
            <person name="Togashi T."/>
            <person name="Oyama M."/>
            <person name="Hata H."/>
            <person name="Watanabe M."/>
            <person name="Komatsu T."/>
            <person name="Mizushima-Sugano J."/>
            <person name="Satoh T."/>
            <person name="Shirai Y."/>
            <person name="Takahashi Y."/>
            <person name="Nakagawa K."/>
            <person name="Okumura K."/>
            <person name="Nagase T."/>
            <person name="Nomura N."/>
            <person name="Kikuchi H."/>
            <person name="Masuho Y."/>
            <person name="Yamashita R."/>
            <person name="Nakai K."/>
            <person name="Yada T."/>
            <person name="Nakamura Y."/>
            <person name="Ohara O."/>
            <person name="Isogai T."/>
            <person name="Sugano S."/>
        </authorList>
    </citation>
    <scope>NUCLEOTIDE SEQUENCE [LARGE SCALE MRNA] (ISOFORM 2)</scope>
    <source>
        <tissue>Hippocampus</tissue>
        <tissue>Kidney</tissue>
    </source>
</reference>
<reference key="8">
    <citation type="journal article" date="2005" name="Nature">
        <title>The DNA sequence of the human X chromosome.</title>
        <authorList>
            <person name="Ross M.T."/>
            <person name="Grafham D.V."/>
            <person name="Coffey A.J."/>
            <person name="Scherer S."/>
            <person name="McLay K."/>
            <person name="Muzny D."/>
            <person name="Platzer M."/>
            <person name="Howell G.R."/>
            <person name="Burrows C."/>
            <person name="Bird C.P."/>
            <person name="Frankish A."/>
            <person name="Lovell F.L."/>
            <person name="Howe K.L."/>
            <person name="Ashurst J.L."/>
            <person name="Fulton R.S."/>
            <person name="Sudbrak R."/>
            <person name="Wen G."/>
            <person name="Jones M.C."/>
            <person name="Hurles M.E."/>
            <person name="Andrews T.D."/>
            <person name="Scott C.E."/>
            <person name="Searle S."/>
            <person name="Ramser J."/>
            <person name="Whittaker A."/>
            <person name="Deadman R."/>
            <person name="Carter N.P."/>
            <person name="Hunt S.E."/>
            <person name="Chen R."/>
            <person name="Cree A."/>
            <person name="Gunaratne P."/>
            <person name="Havlak P."/>
            <person name="Hodgson A."/>
            <person name="Metzker M.L."/>
            <person name="Richards S."/>
            <person name="Scott G."/>
            <person name="Steffen D."/>
            <person name="Sodergren E."/>
            <person name="Wheeler D.A."/>
            <person name="Worley K.C."/>
            <person name="Ainscough R."/>
            <person name="Ambrose K.D."/>
            <person name="Ansari-Lari M.A."/>
            <person name="Aradhya S."/>
            <person name="Ashwell R.I."/>
            <person name="Babbage A.K."/>
            <person name="Bagguley C.L."/>
            <person name="Ballabio A."/>
            <person name="Banerjee R."/>
            <person name="Barker G.E."/>
            <person name="Barlow K.F."/>
            <person name="Barrett I.P."/>
            <person name="Bates K.N."/>
            <person name="Beare D.M."/>
            <person name="Beasley H."/>
            <person name="Beasley O."/>
            <person name="Beck A."/>
            <person name="Bethel G."/>
            <person name="Blechschmidt K."/>
            <person name="Brady N."/>
            <person name="Bray-Allen S."/>
            <person name="Bridgeman A.M."/>
            <person name="Brown A.J."/>
            <person name="Brown M.J."/>
            <person name="Bonnin D."/>
            <person name="Bruford E.A."/>
            <person name="Buhay C."/>
            <person name="Burch P."/>
            <person name="Burford D."/>
            <person name="Burgess J."/>
            <person name="Burrill W."/>
            <person name="Burton J."/>
            <person name="Bye J.M."/>
            <person name="Carder C."/>
            <person name="Carrel L."/>
            <person name="Chako J."/>
            <person name="Chapman J.C."/>
            <person name="Chavez D."/>
            <person name="Chen E."/>
            <person name="Chen G."/>
            <person name="Chen Y."/>
            <person name="Chen Z."/>
            <person name="Chinault C."/>
            <person name="Ciccodicola A."/>
            <person name="Clark S.Y."/>
            <person name="Clarke G."/>
            <person name="Clee C.M."/>
            <person name="Clegg S."/>
            <person name="Clerc-Blankenburg K."/>
            <person name="Clifford K."/>
            <person name="Cobley V."/>
            <person name="Cole C.G."/>
            <person name="Conquer J.S."/>
            <person name="Corby N."/>
            <person name="Connor R.E."/>
            <person name="David R."/>
            <person name="Davies J."/>
            <person name="Davis C."/>
            <person name="Davis J."/>
            <person name="Delgado O."/>
            <person name="Deshazo D."/>
            <person name="Dhami P."/>
            <person name="Ding Y."/>
            <person name="Dinh H."/>
            <person name="Dodsworth S."/>
            <person name="Draper H."/>
            <person name="Dugan-Rocha S."/>
            <person name="Dunham A."/>
            <person name="Dunn M."/>
            <person name="Durbin K.J."/>
            <person name="Dutta I."/>
            <person name="Eades T."/>
            <person name="Ellwood M."/>
            <person name="Emery-Cohen A."/>
            <person name="Errington H."/>
            <person name="Evans K.L."/>
            <person name="Faulkner L."/>
            <person name="Francis F."/>
            <person name="Frankland J."/>
            <person name="Fraser A.E."/>
            <person name="Galgoczy P."/>
            <person name="Gilbert J."/>
            <person name="Gill R."/>
            <person name="Gloeckner G."/>
            <person name="Gregory S.G."/>
            <person name="Gribble S."/>
            <person name="Griffiths C."/>
            <person name="Grocock R."/>
            <person name="Gu Y."/>
            <person name="Gwilliam R."/>
            <person name="Hamilton C."/>
            <person name="Hart E.A."/>
            <person name="Hawes A."/>
            <person name="Heath P.D."/>
            <person name="Heitmann K."/>
            <person name="Hennig S."/>
            <person name="Hernandez J."/>
            <person name="Hinzmann B."/>
            <person name="Ho S."/>
            <person name="Hoffs M."/>
            <person name="Howden P.J."/>
            <person name="Huckle E.J."/>
            <person name="Hume J."/>
            <person name="Hunt P.J."/>
            <person name="Hunt A.R."/>
            <person name="Isherwood J."/>
            <person name="Jacob L."/>
            <person name="Johnson D."/>
            <person name="Jones S."/>
            <person name="de Jong P.J."/>
            <person name="Joseph S.S."/>
            <person name="Keenan S."/>
            <person name="Kelly S."/>
            <person name="Kershaw J.K."/>
            <person name="Khan Z."/>
            <person name="Kioschis P."/>
            <person name="Klages S."/>
            <person name="Knights A.J."/>
            <person name="Kosiura A."/>
            <person name="Kovar-Smith C."/>
            <person name="Laird G.K."/>
            <person name="Langford C."/>
            <person name="Lawlor S."/>
            <person name="Leversha M."/>
            <person name="Lewis L."/>
            <person name="Liu W."/>
            <person name="Lloyd C."/>
            <person name="Lloyd D.M."/>
            <person name="Loulseged H."/>
            <person name="Loveland J.E."/>
            <person name="Lovell J.D."/>
            <person name="Lozado R."/>
            <person name="Lu J."/>
            <person name="Lyne R."/>
            <person name="Ma J."/>
            <person name="Maheshwari M."/>
            <person name="Matthews L.H."/>
            <person name="McDowall J."/>
            <person name="McLaren S."/>
            <person name="McMurray A."/>
            <person name="Meidl P."/>
            <person name="Meitinger T."/>
            <person name="Milne S."/>
            <person name="Miner G."/>
            <person name="Mistry S.L."/>
            <person name="Morgan M."/>
            <person name="Morris S."/>
            <person name="Mueller I."/>
            <person name="Mullikin J.C."/>
            <person name="Nguyen N."/>
            <person name="Nordsiek G."/>
            <person name="Nyakatura G."/>
            <person name="O'dell C.N."/>
            <person name="Okwuonu G."/>
            <person name="Palmer S."/>
            <person name="Pandian R."/>
            <person name="Parker D."/>
            <person name="Parrish J."/>
            <person name="Pasternak S."/>
            <person name="Patel D."/>
            <person name="Pearce A.V."/>
            <person name="Pearson D.M."/>
            <person name="Pelan S.E."/>
            <person name="Perez L."/>
            <person name="Porter K.M."/>
            <person name="Ramsey Y."/>
            <person name="Reichwald K."/>
            <person name="Rhodes S."/>
            <person name="Ridler K.A."/>
            <person name="Schlessinger D."/>
            <person name="Schueler M.G."/>
            <person name="Sehra H.K."/>
            <person name="Shaw-Smith C."/>
            <person name="Shen H."/>
            <person name="Sheridan E.M."/>
            <person name="Shownkeen R."/>
            <person name="Skuce C.D."/>
            <person name="Smith M.L."/>
            <person name="Sotheran E.C."/>
            <person name="Steingruber H.E."/>
            <person name="Steward C.A."/>
            <person name="Storey R."/>
            <person name="Swann R.M."/>
            <person name="Swarbreck D."/>
            <person name="Tabor P.E."/>
            <person name="Taudien S."/>
            <person name="Taylor T."/>
            <person name="Teague B."/>
            <person name="Thomas K."/>
            <person name="Thorpe A."/>
            <person name="Timms K."/>
            <person name="Tracey A."/>
            <person name="Trevanion S."/>
            <person name="Tromans A.C."/>
            <person name="d'Urso M."/>
            <person name="Verduzco D."/>
            <person name="Villasana D."/>
            <person name="Waldron L."/>
            <person name="Wall M."/>
            <person name="Wang Q."/>
            <person name="Warren J."/>
            <person name="Warry G.L."/>
            <person name="Wei X."/>
            <person name="West A."/>
            <person name="Whitehead S.L."/>
            <person name="Whiteley M.N."/>
            <person name="Wilkinson J.E."/>
            <person name="Willey D.L."/>
            <person name="Williams G."/>
            <person name="Williams L."/>
            <person name="Williamson A."/>
            <person name="Williamson H."/>
            <person name="Wilming L."/>
            <person name="Woodmansey R.L."/>
            <person name="Wray P.W."/>
            <person name="Yen J."/>
            <person name="Zhang J."/>
            <person name="Zhou J."/>
            <person name="Zoghbi H."/>
            <person name="Zorilla S."/>
            <person name="Buck D."/>
            <person name="Reinhardt R."/>
            <person name="Poustka A."/>
            <person name="Rosenthal A."/>
            <person name="Lehrach H."/>
            <person name="Meindl A."/>
            <person name="Minx P.J."/>
            <person name="Hillier L.W."/>
            <person name="Willard H.F."/>
            <person name="Wilson R.K."/>
            <person name="Waterston R.H."/>
            <person name="Rice C.M."/>
            <person name="Vaudin M."/>
            <person name="Coulson A."/>
            <person name="Nelson D.L."/>
            <person name="Weinstock G."/>
            <person name="Sulston J.E."/>
            <person name="Durbin R.M."/>
            <person name="Hubbard T."/>
            <person name="Gibbs R.A."/>
            <person name="Beck S."/>
            <person name="Rogers J."/>
            <person name="Bentley D.R."/>
        </authorList>
    </citation>
    <scope>NUCLEOTIDE SEQUENCE [LARGE SCALE GENOMIC DNA]</scope>
</reference>
<reference key="9">
    <citation type="submission" date="2005-09" db="EMBL/GenBank/DDBJ databases">
        <authorList>
            <person name="Mural R.J."/>
            <person name="Istrail S."/>
            <person name="Sutton G."/>
            <person name="Florea L."/>
            <person name="Halpern A.L."/>
            <person name="Mobarry C.M."/>
            <person name="Lippert R."/>
            <person name="Walenz B."/>
            <person name="Shatkay H."/>
            <person name="Dew I."/>
            <person name="Miller J.R."/>
            <person name="Flanigan M.J."/>
            <person name="Edwards N.J."/>
            <person name="Bolanos R."/>
            <person name="Fasulo D."/>
            <person name="Halldorsson B.V."/>
            <person name="Hannenhalli S."/>
            <person name="Turner R."/>
            <person name="Yooseph S."/>
            <person name="Lu F."/>
            <person name="Nusskern D.R."/>
            <person name="Shue B.C."/>
            <person name="Zheng X.H."/>
            <person name="Zhong F."/>
            <person name="Delcher A.L."/>
            <person name="Huson D.H."/>
            <person name="Kravitz S.A."/>
            <person name="Mouchard L."/>
            <person name="Reinert K."/>
            <person name="Remington K.A."/>
            <person name="Clark A.G."/>
            <person name="Waterman M.S."/>
            <person name="Eichler E.E."/>
            <person name="Adams M.D."/>
            <person name="Hunkapiller M.W."/>
            <person name="Myers E.W."/>
            <person name="Venter J.C."/>
        </authorList>
    </citation>
    <scope>NUCLEOTIDE SEQUENCE [LARGE SCALE GENOMIC DNA]</scope>
</reference>
<reference key="10">
    <citation type="journal article" date="2004" name="Genome Res.">
        <title>The status, quality, and expansion of the NIH full-length cDNA project: the Mammalian Gene Collection (MGC).</title>
        <authorList>
            <consortium name="The MGC Project Team"/>
        </authorList>
    </citation>
    <scope>NUCLEOTIDE SEQUENCE [LARGE SCALE MRNA] (ISOFORM 2)</scope>
    <source>
        <tissue>Brain</tissue>
    </source>
</reference>
<reference key="11">
    <citation type="submission" date="1997-06" db="EMBL/GenBank/DDBJ databases">
        <title>Factor VIII gene normal intron 20 sequence.</title>
        <authorList>
            <person name="de Water N.S."/>
            <person name="Williams R."/>
            <person name="Browett P.J."/>
        </authorList>
    </citation>
    <scope>NUCLEOTIDE SEQUENCE [GENOMIC DNA] OF 2064-2070</scope>
</reference>
<reference key="12">
    <citation type="journal article" date="1999" name="Rapid Commun. Mass Spectrom.">
        <title>Characterization of tyrosine sulfate residues in antihemophilic recombinant factor VIII by liquid chromatography electrospray ionization tandem mass spectrometry and amino acid analysis.</title>
        <authorList>
            <person name="Severs J.C."/>
            <person name="Carnine M."/>
            <person name="Eguizabal H."/>
            <person name="Mock K.K."/>
        </authorList>
    </citation>
    <scope>PROTEIN SEQUENCE OF 356-378; 727-752 AND 1672-1708</scope>
    <scope>SULFATION AT TYR-365; TYR-737; TYR-738; TYR-742; TYR-1683 AND TYR-1699</scope>
</reference>
<reference key="13">
    <citation type="journal article" date="1991" name="J. Biol. Chem.">
        <title>Sulfation of Tyr1680 of human blood coagulation factor VIII is essential for the interaction of factor VIII with von Willebrand factor.</title>
        <authorList>
            <person name="Leyte A."/>
            <person name="van Schijndel H.B."/>
            <person name="Niehrs C."/>
            <person name="Huttner W.B."/>
            <person name="Verbeet M.P."/>
            <person name="Mertens K."/>
            <person name="van Mourik J.A."/>
        </authorList>
    </citation>
    <scope>SULFATION AT TYR-1699</scope>
</reference>
<reference key="14">
    <citation type="journal article" date="1992" name="Biochemistry">
        <title>Identification and functional importance of tyrosine sulfate residues within recombinant factor VIII.</title>
        <authorList>
            <person name="Pittman D.D."/>
            <person name="Wang J.H."/>
            <person name="Kaufman R.J."/>
        </authorList>
    </citation>
    <scope>SULFATION AT TYR-365; TYR-1683 AND TYR-1699</scope>
    <scope>INTERACTION WITH VWF</scope>
</reference>
<reference key="15">
    <citation type="journal article" date="1997" name="J. Biol. Chem.">
        <title>The acidic region of the factor VIII light chain and the C2 domain together form the high affinity binding site for von Willebrand factor.</title>
        <authorList>
            <person name="Saenko E.L."/>
            <person name="Scandella D."/>
        </authorList>
    </citation>
    <scope>INTERACTION WITH VWF</scope>
</reference>
<reference key="16">
    <citation type="journal article" date="1995" name="Protein Sci.">
        <title>Locations of disulfide bonds and free cysteines in the heavy and light chains of recombinant human factor VIII (antihemophilic factor A).</title>
        <authorList>
            <person name="McMullen B.A."/>
            <person name="Fujikawa K."/>
            <person name="Davie E.W."/>
            <person name="Hedner U."/>
            <person name="Ezban M."/>
        </authorList>
    </citation>
    <scope>DISULFIDE BONDS</scope>
</reference>
<reference key="17">
    <citation type="journal article" date="2005" name="J. Proteome Res.">
        <title>Human plasma N-glycoproteome analysis by immunoaffinity subtraction, hydrazide chemistry, and mass spectrometry.</title>
        <authorList>
            <person name="Liu T."/>
            <person name="Qian W.-J."/>
            <person name="Gritsenko M.A."/>
            <person name="Camp D.G. II"/>
            <person name="Monroe M.E."/>
            <person name="Moore R.J."/>
            <person name="Smith R.D."/>
        </authorList>
    </citation>
    <scope>GLYCOSYLATION [LARGE SCALE ANALYSIS] AT ASN-601</scope>
    <source>
        <tissue>Plasma</tissue>
    </source>
</reference>
<reference key="18">
    <citation type="journal article" date="2008" name="Thromb. Haemost.">
        <title>Cathepsin G, a leukocyte protease, activates coagulation factor VIII.</title>
        <authorList>
            <person name="Gale A.J."/>
            <person name="Rozenshteyn D."/>
        </authorList>
    </citation>
    <scope>PROTEOLYTIC CLEAVAGE</scope>
</reference>
<reference key="19">
    <citation type="journal article" date="2021" name="Blood">
        <title>Partial F8 gene duplication (factor VIII Padua) associated with high factor VIII levels and familial thrombophilia.</title>
        <authorList>
            <person name="Simioni P."/>
            <person name="Cagnin S."/>
            <person name="Sartorello F."/>
            <person name="Sales G."/>
            <person name="Pagani L."/>
            <person name="Bulato C."/>
            <person name="Gavasso S."/>
            <person name="Nuzzo F."/>
            <person name="Chemello F."/>
            <person name="Radu C.M."/>
            <person name="Tormene D."/>
            <person name="Spiezia L."/>
            <person name="Hackeng T.M."/>
            <person name="Campello E."/>
            <person name="Castoldi E."/>
        </authorList>
    </citation>
    <scope>INVOLVEMENT IN THPH13</scope>
</reference>
<reference key="20">
    <citation type="journal article" date="1995" name="Biochemistry">
        <title>Membrane-binding peptide from the C2 domain of factor VIII forms an amphipathic structure as determined by NMR spectroscopy.</title>
        <authorList>
            <person name="Gilbert G.E."/>
            <person name="Baleja J.D."/>
        </authorList>
    </citation>
    <scope>STRUCTURE BY NMR OF 2322-2343</scope>
</reference>
<reference key="21">
    <citation type="journal article" date="2020" name="Haemophilia">
        <title>The European Association for Haemophilia and Allied Disorders (EAHAD) Coagulation Factor Variant Databases: Important resources for haemostasis clinicians and researchers.</title>
        <authorList>
            <person name="McVey J.H."/>
            <person name="Rallapalli P.M."/>
            <person name="Kemball-Cook G."/>
            <person name="Hampshire D.J."/>
            <person name="Giansily-Blaizot M."/>
            <person name="Gomez K."/>
            <person name="Perkins S.J."/>
            <person name="Ludlam C.A."/>
        </authorList>
    </citation>
    <scope>REVIEW ON VARIANTS</scope>
    <scope>DATABASE</scope>
</reference>
<reference key="22">
    <citation type="journal article" date="1991" name="Ann. N. Y. Acad. Sci.">
        <title>The molecular basis of hemophilia A.</title>
        <authorList>
            <person name="Gitschier J."/>
        </authorList>
    </citation>
    <scope>REVIEW ON MOLECULAR BASIS OF HEMA</scope>
</reference>
<reference key="23">
    <citation type="journal article" date="1989" name="Blood">
        <title>Factor VIII gene and hemophilia A.</title>
        <authorList>
            <person name="White G.C. II"/>
            <person name="Shoemaker C.B."/>
        </authorList>
    </citation>
    <scope>REVIEW ON MOLECULAR BASIS OF HEMA</scope>
</reference>
<reference key="24">
    <citation type="journal article" date="1995" name="Hum. Mutat.">
        <title>Molecular etiology of factor VIII deficiency in hemophilia A.</title>
        <authorList>
            <person name="Antonarakis S.E."/>
            <person name="Kazazian H.H. Jr."/>
            <person name="Tuddenham E.G.D."/>
        </authorList>
    </citation>
    <scope>REVIEW ON MOLECULAR BASIS OF HEMA</scope>
</reference>
<reference key="25">
    <citation type="journal article" date="1986" name="Science">
        <title>Identification of a missense mutation in the factor VIII gene of a mild hemophiliac.</title>
        <authorList>
            <person name="Gitschier J."/>
            <person name="Wood W.I."/>
            <person name="Shuman M.A."/>
            <person name="Lawn R.M."/>
        </authorList>
    </citation>
    <scope>VARIANT HEMA GLN-2326</scope>
</reference>
<reference key="26">
    <citation type="journal article" date="1987" name="Nucleic Acids Res.">
        <title>A novel missense mutation in the factor VIII gene identified by analysis of amplified hemophilia DNA sequences.</title>
        <authorList>
            <person name="Levinson B."/>
            <person name="Janco R.L."/>
            <person name="Phillips J.A. III"/>
            <person name="Gitschier J."/>
        </authorList>
    </citation>
    <scope>VARIANT HEMA PRO-2135</scope>
</reference>
<reference key="27">
    <citation type="journal article" date="1988" name="Am. J. Hum. Genet.">
        <title>Nonsense and missense mutations in hemophilia A: estimate of the relative mutation rate at CG dinucleotides.</title>
        <authorList>
            <person name="Youssoufian H."/>
            <person name="Antonarakis S.E."/>
            <person name="Bell W."/>
            <person name="Griffin A.M."/>
            <person name="Kazazian H.H. Jr."/>
        </authorList>
    </citation>
    <scope>VARIANT HEMA GLN-2228</scope>
</reference>
<reference key="28">
    <citation type="journal article" date="1988" name="Am. J. Hum. Genet.">
        <title>Moderately severe hemophilia A resulting from Glu--&gt;Gly substitution in exon 7 of the factor VIII gene.</title>
        <authorList>
            <person name="Youssoufian H."/>
            <person name="Wong C."/>
            <person name="Aronis S."/>
            <person name="Platokoukis H."/>
            <person name="Kazazian H.H. Jr."/>
            <person name="Antonarakis S.E."/>
        </authorList>
    </citation>
    <scope>VARIANT HEMA GLY-291</scope>
</reference>
<reference key="29">
    <citation type="journal article" date="1989" name="Blood">
        <title>Purification and characterization of factor VIII 1,689-Cys: a nonfunctional cofactor occurring in a patient with severe hemophilia A.</title>
        <authorList>
            <person name="O'Brien D.P."/>
            <person name="Tuddenham E.G."/>
        </authorList>
    </citation>
    <scope>VARIANT HEMA CYS-1708</scope>
</reference>
<reference key="30">
    <citation type="journal article" date="1989" name="Blood">
        <title>An arginine to cysteine amino acid substitution at a critical thrombin cleavage site in a dysfunctional factor VIII molecule.</title>
        <authorList>
            <person name="Shima M."/>
            <person name="Ware J."/>
            <person name="Yoshioka A."/>
            <person name="Fukui H."/>
            <person name="Fulcher C.A."/>
        </authorList>
    </citation>
    <scope>VARIANT HEMA CYS-391</scope>
</reference>
<reference key="31">
    <citation type="journal article" date="1989" name="Blood">
        <title>A novel missense mutation in exon 4 of the factor VIII:C gene resulting in moderately severe hemophilia A.</title>
        <authorList>
            <person name="Chan V."/>
            <person name="Chan T.K."/>
            <person name="Tong T.M."/>
            <person name="Todd D."/>
        </authorList>
    </citation>
    <scope>VARIANT HEMA LEU-189</scope>
</reference>
<reference key="32">
    <citation type="journal article" date="1989" name="Hum. Genet.">
        <title>Mild hemophilia A resulting from Arg-to-Leu substitution in exon 26 of the factor VIII gene.</title>
        <authorList>
            <person name="Inaba H."/>
            <person name="Fujimaki M."/>
            <person name="Kazazian H.H. Jr."/>
            <person name="Antonarakis S.E."/>
        </authorList>
    </citation>
    <scope>VARIANT HEMA LEU-2326</scope>
</reference>
<reference key="33">
    <citation type="journal article" date="1989" name="Proc. Natl. Acad. Sci. U.S.A.">
        <title>Direct characterization of factor VIII in plasma: detection of a mutation altering a thrombin cleavage site (arginine-372--&gt;histidine).</title>
        <authorList>
            <person name="Arai M."/>
            <person name="Inaba H."/>
            <person name="Higuchi M."/>
            <person name="Antonarakis S.E."/>
            <person name="Kazazian H.H. Jr."/>
            <person name="Fujimaki M."/>
            <person name="Hoyer L.W."/>
        </authorList>
    </citation>
    <scope>VARIANT HEMA HIS-391</scope>
</reference>
<reference key="34">
    <citation type="journal article" date="1990" name="Blood">
        <title>Characterization of a thrombin cleavage site mutation (Arg 1689 to Cys) in the factor VIII gene of two unrelated patients with cross-reacting material-positive hemophilia A.</title>
        <authorList>
            <person name="Arai M."/>
            <person name="Higuchi M."/>
            <person name="Antonarakis S.E."/>
            <person name="Kazazian H.H. Jr."/>
            <person name="Phillips J.A. III"/>
            <person name="Janco R.L."/>
            <person name="Hoyer L.W."/>
        </authorList>
    </citation>
    <scope>VARIANT HEMA CYS-1708</scope>
</reference>
<reference key="35">
    <citation type="journal article" date="1990" name="Blood">
        <title>Recurrent mutations and three novel rearrangements in the factor VIII gene of hemophilia A patients of Italian descent.</title>
        <authorList>
            <person name="Casula L."/>
            <person name="Murru S."/>
            <person name="Pecorara M."/>
            <person name="Ristaldi M.S."/>
            <person name="Restagno G."/>
            <person name="Mancuso G."/>
            <person name="Morfini M."/>
            <person name="de Biasi R."/>
            <person name="Baudo F."/>
            <person name="Carbonara A."/>
        </authorList>
    </citation>
    <scope>VARIANTS HEMA GLN-2228 AND LEU-2326</scope>
</reference>
<reference key="36">
    <citation type="journal article" date="1990" name="Br. J. Haematol.">
        <title>CRM+ haemophilia A due to a missense mutation (372--&gt;Cys) at the internal heavy chain thrombin cleavage site.</title>
        <authorList>
            <person name="Pattinson J.K."/>
            <person name="McVey J.H."/>
            <person name="Boon M."/>
            <person name="Ajani A."/>
            <person name="Tuddenham E.G."/>
        </authorList>
    </citation>
    <scope>VARIANT HEMA CYS-391</scope>
</reference>
<reference key="37">
    <citation type="journal article" date="1990" name="Genomics">
        <title>Characterization of mutations in the factor VIII gene by direct sequencing of amplified genomic DNA.</title>
        <authorList>
            <person name="Higuchi M."/>
            <person name="Wong C."/>
            <person name="Kochhan L."/>
            <person name="Olek K."/>
            <person name="Aronis S."/>
            <person name="Kasper C.K."/>
            <person name="Kazazian H.H. Jr."/>
            <person name="Antonarakis S.E."/>
        </authorList>
    </citation>
    <scope>VARIANTS HEMA PHE-1699 AND CYS-1708</scope>
</reference>
<reference key="38">
    <citation type="journal article" date="1990" name="Genomics">
        <title>Use of denaturing gradient gel electrophoresis to detect point mutations in the factor VIII gene.</title>
        <authorList>
            <person name="Traystman M.D."/>
            <person name="Higuchi M."/>
            <person name="Kasper C.K."/>
            <person name="Antonarakis S.E."/>
            <person name="Kazazian H.H. Jr."/>
        </authorList>
    </citation>
    <scope>VARIANTS HEMA CYS-1728 AND ASP-1941</scope>
</reference>
<reference key="39">
    <citation type="journal article" date="1990" name="Proc. Natl. Acad. Sci. U.S.A.">
        <title>Mutations and a polymorphism in the factor VIII gene discovered by denaturing gradient gel electrophoresis.</title>
        <authorList>
            <person name="Kogan S."/>
            <person name="Gitschier J."/>
        </authorList>
    </citation>
    <scope>VARIANTS HEMA LEU-345 AND ARG-348</scope>
</reference>
<reference key="40">
    <citation type="journal article" date="1991" name="Hum. Genet.">
        <title>Identification of mutations in two families with sporadic hemophilia A.</title>
        <authorList>
            <person name="Paynton C."/>
            <person name="Sarkar G."/>
            <person name="Sommer S.S."/>
        </authorList>
    </citation>
    <scope>VARIANTS HEMA LYS-1723 AND SER-2319</scope>
</reference>
<reference key="41">
    <citation type="journal article" date="1991" name="Proc. Natl. Acad. Sci. U.S.A.">
        <title>Molecular characterization of severe hemophilia A suggests that about half the mutations are not within the coding regions and splice junctions of the factor VIII gene.</title>
        <authorList>
            <person name="Higuchi M."/>
            <person name="Kazazian H.H. Jr."/>
            <person name="Kasch L."/>
            <person name="Warren T.C."/>
            <person name="McGinniss M.J."/>
            <person name="Phillips J.A. III"/>
            <person name="Kasper C."/>
            <person name="Janco R."/>
            <person name="Antonarakis S.E."/>
        </authorList>
    </citation>
    <scope>VARIANTS HEMA THR-108; VAL-110; GLY-285; HIS-301; SER-312; ARG-444; HIS-492; GLY-561; CYS-612; THR-723; PHE-1699; HIS-1800; TYR-1803; ASP-1941; SER-1941; HIS-2169; GLN-2228 AND CYS-2323</scope>
</reference>
<reference key="42">
    <citation type="journal article" date="1991" name="Proc. Natl. Acad. Sci. U.S.A.">
        <title>Molecular characterization of mild-to-moderate hemophilia A: detection of the mutation in 25 of 29 patients by denaturing gradient gel electrophoresis.</title>
        <authorList>
            <person name="Higuchi M."/>
            <person name="Antonarakis S.E."/>
            <person name="Kasch L."/>
            <person name="Oldenburg J."/>
            <person name="Economou-Petersen E."/>
            <person name="Olek K."/>
            <person name="Arai M."/>
            <person name="Inaba H."/>
            <person name="Kazazian H.H. Jr."/>
        </authorList>
    </citation>
    <scope>VARIANTS HEMA THR-185; TRP-224; ALA-314; PHE-431; CYS-492; TRP-546; CYS-550; GLY-550; LYS-584; VAL-663; LYS-1057; SER-1844; ARG-1867; TRP-2016; LEU-2120; TYR-2138; HIS-2169; CYS-2178 AND LEU-2319</scope>
</reference>
<reference key="43">
    <citation type="journal article" date="1991" name="Thromb. Res.">
        <title>Detection and characterisation of two missense mutations at a cleavage site in the factor VIII light chain.</title>
        <authorList>
            <person name="Schwaab R."/>
            <person name="Ludwig M."/>
            <person name="Kochhan L."/>
            <person name="Oldenburg J."/>
            <person name="McVey J.H."/>
            <person name="Egli H."/>
            <person name="Brackmann H.H."/>
            <person name="Olek K."/>
        </authorList>
    </citation>
    <scope>VARIANTS HEMA CYS-1708 AND HIS-1708</scope>
</reference>
<reference key="44">
    <citation type="journal article" date="1992" name="Br. J. Haematol.">
        <title>GAA(Glu)272-&gt;AAA(Lys) and CGA(Arg)1941-&gt;CAA(Gln) in the factor VIII gene in two haemophilia A patients of Czech origin.</title>
        <authorList>
            <person name="Krepelova A."/>
            <person name="Vorlova Z."/>
            <person name="Acquila M."/>
            <person name="Mori P."/>
        </authorList>
    </citation>
    <scope>VARIANTS HEMA LYS-291 AND GLN-1960</scope>
</reference>
<reference key="45">
    <citation type="journal article" date="1992" name="Genomics">
        <title>Detection of mutations in the factor VIII gene using single-stranded conformational polymorphism (SSCP).</title>
        <authorList>
            <person name="Economou E.P."/>
            <person name="Kazazian H.H. Jr."/>
            <person name="Antonarakis S.E."/>
        </authorList>
    </citation>
    <scope>VARIANTS HEMA PRO-1845 AND PRO-2224 DEL</scope>
</reference>
<reference key="46">
    <citation type="journal article" date="1992" name="Hum. Genet.">
        <title>Screening for nonsense mutations in patients with severe hemophilia A can provide rapid, direct carrier detection.</title>
        <authorList>
            <person name="Reiner A.P."/>
            <person name="Thompson A.R."/>
        </authorList>
    </citation>
    <scope>VARIANT HEMA GLY-1715</scope>
</reference>
<reference key="47">
    <citation type="journal article" date="1992" name="Hum. Mutat.">
        <title>A novel mutation (Arg--&gt;Leu in exon 18) in factor VIII gene responsible for moderate hemophilia A.</title>
        <authorList>
            <person name="Nafa K."/>
            <person name="Baudis M."/>
            <person name="Deburgrave N."/>
            <person name="Bardin J.M."/>
            <person name="Sultan Y."/>
            <person name="Kaplan J.C."/>
            <person name="Delpech M."/>
        </authorList>
    </citation>
    <scope>VARIANT HEMA LEU-1960</scope>
</reference>
<reference key="48">
    <citation type="journal article" date="1992" name="Hum. Mutat.">
        <title>Amino acid substitutions in conserved domains of factor VIII and related proteins: study of patients with mild and moderately severe hemophilia A.</title>
        <authorList>
            <person name="Diamond C."/>
            <person name="Kogan S."/>
            <person name="Levinson B."/>
            <person name="Gitschier J."/>
        </authorList>
    </citation>
    <scope>VARIANTS HEMA VAL-30; VAL-89; VAL-92; ASP-104; VAL-164; MET-181; CYS-550; GLY-554; CYS-612; TRP-717; PHE-1808; SER-1941; ARG-2065; HIS-2169; CYS-2178 AND CYS-2248</scope>
</reference>
<reference key="49">
    <citation type="journal article" date="1992" name="Hum. Mutat.">
        <title>Missense mutations causing mild hemophilia A in Iceland detected by denaturing gradient gel electrophoresis.</title>
        <authorList>
            <person name="Jonsdottir S."/>
            <person name="Diamond C."/>
            <person name="Levinson B."/>
            <person name="Magnusson S."/>
            <person name="Jensson O."/>
            <person name="Gitschier J."/>
        </authorList>
    </citation>
    <scope>VARIANTS HEMA CYS-1800 AND ILE-2173</scope>
</reference>
<reference key="50">
    <citation type="journal article" date="1993" name="Genomics">
        <title>Spectrum of mutations in CRM-positive and CRM-reduced hemophilia A.</title>
        <authorList>
            <person name="McGinniss M.J."/>
            <person name="Kazazian H.H. Jr."/>
            <person name="Hoyer L.W."/>
            <person name="Bi L."/>
            <person name="Inaba H."/>
            <person name="Antonarakis S.E."/>
        </authorList>
    </citation>
    <scope>VARIANTS HEMA LEU-308; HIS-391; TRP-546; PHE-577; ALA-653; MET-653; PHE-671 DEL; LYS-1460 AND CYS-2178</scope>
</reference>
<reference key="51">
    <citation type="journal article" date="1993" name="Thromb. Haemost.">
        <title>Double strand conformation polymorphism (DSCP) detects two point mutations at codon 280 (AAC--&gt;ATC) and at codon 431 (TAC--&gt;AAC) of the blood coagulation factor VIII gene.</title>
        <authorList>
            <person name="Pieneman W.C."/>
            <person name="Reitsma P.H."/>
            <person name="Briet E."/>
        </authorList>
    </citation>
    <scope>VARIANTS HEMA ILE-299 AND ASN-450</scope>
</reference>
<reference key="52">
    <citation type="journal article" date="1995" name="Blood">
        <title>Eleven novel mutations in the factor VIII gene from Brazilian hemophilia A patients.</title>
        <authorList>
            <person name="Arruda V.R."/>
            <person name="Pieneman W.C."/>
            <person name="Reitsma P.H."/>
            <person name="Deutz-Terlouw P.P."/>
            <person name="Annichino-Bizzacchi J.M."/>
            <person name="Brieet E."/>
            <person name="Costa F.F."/>
        </authorList>
    </citation>
    <scope>VARIANTS HEMA ARG-113; ASN-202; LEU-275; GLY-285; CYS-301; ASP-637; PHE-1808; PRO-1867; GLN-1960; HIS-2169; CYS-2178 AND THR-2281</scope>
    <scope>VARIANT VAL-2257</scope>
</reference>
<reference key="53">
    <citation type="journal article" date="1995" name="Br. J. Haematol.">
        <title>Screening for mutations in haemophilia A patients by multiplex PCR-SSCP, Southern blotting and RNA analysis: the detection of a genetic abnormality in the factor VIII gene in 30 out of 35 patients.</title>
        <authorList>
            <person name="Pieneman W.C."/>
            <person name="Deutz-Terlouw P.P."/>
            <person name="Reitsma P.H."/>
            <person name="Brieet E."/>
        </authorList>
    </citation>
    <scope>VARIANTS HEMA HIS-217; ILE-299; ASN-450; TRP-546; CYS-612; VAL-705; CYS-1708; TRP-2016 AND ARG-2119</scope>
</reference>
<reference key="54">
    <citation type="journal article" date="1995" name="Hum. Genet.">
        <title>Detection of mutations in ectopic factor VIII transcripts from nine haemophilia A patients and the correlation with phenotype.</title>
        <authorList>
            <person name="Bidichandani S.I."/>
            <person name="Lanyon W.G."/>
            <person name="Shiach C.R."/>
            <person name="Lowe G.D.O."/>
            <person name="Connor J.M."/>
        </authorList>
    </citation>
    <scope>VARIANTS HEMA GLU-75; MET-181; ASP-720; THR-1853 AND ILE-1888</scope>
</reference>
<reference key="55">
    <citation type="journal article" date="1996" name="Am. J. Hum. Genet.">
        <title>Characterization of the factor VIII defect in 147 patients with sporadic hemophilia A: family studies indicate a mutation type-dependent sex ratio of mutation frequencies.</title>
        <authorList>
            <person name="Becker J."/>
            <person name="Schwaab R."/>
            <person name="Moeller-Taube A."/>
            <person name="Schwaab U."/>
            <person name="Schmidt W."/>
            <person name="Brackmann H.H."/>
            <person name="Grimm T."/>
            <person name="Olek K."/>
            <person name="Oldenburg J."/>
        </authorList>
    </citation>
    <scope>VARIANTS HEMA ARG-26; LYS-48; ASP-89; ASP-99; VAL-101; ARG-117; GLY-135; ASP-219; ARG-278; LEU-301; GLN-302 DEL; PRO-327; PRO-659; LEU-1012; GLU-1260; CYS-1708; ASN-1865; ARG-1873; THR-1971; TRP-2016; GLN-2228; LEU-2326 AND SER-2344</scope>
</reference>
<reference key="56">
    <citation type="journal article" date="1996" name="Br. J. Haematol.">
        <title>Molecular characterization of haemophilia A in southern Chinese.</title>
        <authorList>
            <person name="Chan V."/>
            <person name="Pang A."/>
            <person name="Chan T.P.T."/>
            <person name="Chan V.W.-Y."/>
            <person name="Chan T.K."/>
        </authorList>
    </citation>
    <scope>VARIANTS HEMA LEU-189; SER-263; ARG-947; LYS-1057; SER-1610 AND HIS-2169</scope>
    <scope>VARIANT MET-2242</scope>
</reference>
<reference key="57">
    <citation type="journal article" date="1996" name="Br. J. Haematol.">
        <title>Mutations in a subgroup of patients with mild haemophilia A and a familial discrepancy between the one-stage and two-stage factor VIII:C methods.</title>
        <authorList>
            <person name="Rudzki Z."/>
            <person name="Duncan E.M."/>
            <person name="Casey G.J."/>
            <person name="Neumann M."/>
            <person name="Favaloro E.J."/>
            <person name="Lloyd J.V."/>
        </authorList>
    </citation>
    <scope>VARIANTS HEMA GLU-303; LEU-308; HIS-550; LEU-717; TRP-717 AND PHE-1951</scope>
</reference>
<reference key="58">
    <citation type="journal article" date="1997" name="Br. J. Haematol.">
        <title>Mutations in the FVIII gene in seven families with mild haemophilia A.</title>
        <authorList>
            <person name="Mazurier C."/>
            <person name="Gaucher C."/>
            <person name="Jorieux S."/>
            <person name="Parquet-Gernez A."/>
        </authorList>
    </citation>
    <scope>VARIANTS HEMA PRO-303; TRP-546; HIS-550 AND ILE-1966</scope>
</reference>
<reference key="59">
    <citation type="journal article" date="1997" name="Br. J. Haematol.">
        <title>Factor VIII gene analysis in Japanese CRM-positive and CRM-reduced haemophilia A patients by single-strand conformation polymorphism.</title>
        <authorList>
            <person name="Morichika S."/>
            <person name="Shima M."/>
            <person name="Kamisue S."/>
            <person name="Tanaka I."/>
            <person name="Imanaka Y."/>
            <person name="Suzuki H."/>
            <person name="Shibata H."/>
            <person name="Pemberton S."/>
            <person name="Gale K."/>
            <person name="McVey J."/>
            <person name="Tuddenham E.G.D."/>
            <person name="Yoshioka A."/>
        </authorList>
    </citation>
    <scope>VARIANTS HEMA CYS-274; CYS-492; ARG-498; HIS-550; ARG-686; CYS-1708; GLN-1960; HIS-2169; CYS-2178; ALA-2264 AND VAL-2304</scope>
</reference>
<reference key="60">
    <citation type="journal article" date="1997" name="Hum. Genet.">
        <title>Mutational analysis of ectopic factor VIII transcripts from hemophilia A patients: identification of cryptic splice site, exon skipping and novel point mutations.</title>
        <authorList>
            <person name="Tavassoli K."/>
            <person name="Eigel A."/>
            <person name="Pollmann H."/>
            <person name="Horst J."/>
        </authorList>
    </citation>
    <scope>VARIANTS HEMA GLY-33; CYS-639; HIS-1800; LEU-1908 AND ARG-2106</scope>
</reference>
<reference key="61">
    <citation type="journal article" date="1998" name="Br. J. Haematol.">
        <title>A domain mutations in 65 haemophilia A families and molecular modelling of dysfunctional factor VIII proteins.</title>
        <authorList>
            <person name="Liu M."/>
            <person name="Murphy M.E.P."/>
            <person name="Thompson A.R."/>
        </authorList>
    </citation>
    <scope>VARIANTS HEMA LYS-98; GLY-101; CYS-133; HIS-145; ALA-159; LYS-163; ASP-164; PRO-179; MET-181; LYS-291; ALA-297; GLU-303; SER-312; HIS-391; ILE-427; TRP-437; ASN-450; ILE-454; LEU-470; SER-541; TRP-546; CYS-550; HIS-550; PRO-553; THR-560; ALA-578; ARG-603; ILE-633; ASN-683; LEU-721; CYS-742; THR-1698; GLY-1715; ARG-1779; THR-1791; HIS-1800; ALA-1801; PHE-1901; GLN-1960; GLN-1985; ILE-2007; TRP-2016; ASP-2022; ASN-2030 AND SER-2038</scope>
</reference>
<reference key="62">
    <citation type="journal article" date="1998" name="Hum. Mutat.">
        <title>Protein truncation test: detection of severe haemophilia a mutation and analysis of factor VIII transcripts.</title>
        <authorList>
            <person name="Maugard C."/>
            <person name="Tuffery S."/>
            <person name="Aguilar-Martinez P."/>
            <person name="Schved J.-F."/>
            <person name="Gris J.-C."/>
            <person name="Demaille J."/>
            <person name="Claustres M."/>
        </authorList>
    </citation>
    <scope>VARIANTS HEMA VAL-129; LYS-631 AND HIS-1800</scope>
</reference>
<reference key="63">
    <citation type="journal article" date="1998" name="Hum. Mutat.">
        <title>Independent occurrence of the novel Arg2163 to His mutation in the factor VIII gene in three unrelated families with haemophilia A with different phenotypes.</title>
        <authorList>
            <person name="Theophilus B.D.M."/>
            <person name="Enayat M.S."/>
            <person name="Higuchi M."/>
            <person name="Kazazian H.H. Jr."/>
            <person name="Antonarakis S.E."/>
            <person name="Hill F.G.H."/>
        </authorList>
    </citation>
    <scope>VARIANT HEMA HIS-2182</scope>
</reference>
<reference key="64">
    <citation type="journal article" date="1998" name="Hum. Mutat.">
        <title>Fluorescent chemical cleavage of mismatches for efficient screening of the factor VIII gene.</title>
        <authorList>
            <person name="Freson K."/>
            <person name="Peerlinck K."/>
            <person name="Aguirre T."/>
            <person name="Arnout J."/>
            <person name="Vermylen J."/>
            <person name="Cassiman J.-J."/>
            <person name="Matthijs G."/>
        </authorList>
    </citation>
    <scope>VARIANTS HEMA ASP-132; PHE-253; ILE-314; VAL-331; ARG-474; ARG-498; VAL-644; VAL-699; ASP-720; PHE-727 AND ASN-2105</scope>
</reference>
<reference key="65">
    <citation type="journal article" date="1998" name="Hum. Mutat. Suppl.">
        <title>Identification of four novel mutations in the factor VIII gene: three missense mutations (E1875G, G2088S, I2185T) and a 2-bp deletion (1780delTC).</title>
        <authorList>
            <person name="Tavassoli K."/>
            <person name="Eigel A."/>
            <person name="Dworniczak B."/>
            <person name="Valtseva E."/>
            <person name="Horst J."/>
        </authorList>
    </citation>
    <scope>VARIANTS HEMA GLY-550; THR-723; GLY-1894; SER-2107 AND THR-2204</scope>
</reference>
<reference key="66">
    <citation type="journal article" date="1998" name="Hum. Mutat.">
        <title>Molecular diagnostics of 15 hemophilia A patients: characterization of eight novel mutations in the factor VIII gene, two of which result in exon skipping.</title>
        <authorList>
            <person name="Tavassoli K."/>
            <person name="Eigel A."/>
            <person name="Wilke K."/>
            <person name="Pollmann H."/>
            <person name="Horst J."/>
        </authorList>
    </citation>
    <scope>VARIANTS HEMA CYS-133; ARG-498; CYS-550; ASP-556; HIS-1708; VAL-1869; SER-2148; HIS-2169; VAL-2183 AND ASN-2209</scope>
</reference>
<reference key="67">
    <citation type="journal article" date="1998" name="Hum. Mutat.">
        <title>Use of denaturing gradient gel blots to screen for point mutations in the factor VIII gene.</title>
        <authorList>
            <person name="Laprise S.L."/>
            <person name="Mak E.K."/>
            <person name="Killoran K.A."/>
            <person name="Layman L.C."/>
            <person name="Gray M.R."/>
        </authorList>
    </citation>
    <scope>VARIANTS HEMA VAL-439; CYS-1800; HIS-2169; HIS-2182 AND SER-2319</scope>
</reference>
<reference key="68">
    <citation type="journal article" date="1998" name="Thromb. Haemost.">
        <title>Precise carrier diagnosis in families with haemophilia A: use of conformation sensitive gel electrophoresis for mutation screening and polymorphism analysis.</title>
        <authorList>
            <person name="Williams I.J."/>
            <person name="Abuzenadah A."/>
            <person name="Winship P.R."/>
            <person name="Preston F.E."/>
            <person name="Dolan G."/>
            <person name="Wright J."/>
            <person name="Peake I.R."/>
            <person name="Goodeve A.C."/>
        </authorList>
    </citation>
    <scope>VARIANTS HEMA LYS-223; VAL-2045 AND CYS-2279</scope>
    <scope>VARIANT VAL-2257</scope>
</reference>
<reference key="69">
    <citation type="journal article" date="1998" name="Thromb. Haemost.">
        <title>Factor VIII inhibitors in mild and moderate-severity haemophilia A.</title>
        <authorList>
            <consortium name="UK haemophilia centre directors organisation"/>
            <person name="Hay C.R.M."/>
            <person name="Ludlam C.A."/>
            <person name="Colvin B.T."/>
            <person name="Hill F.G.H."/>
            <person name="Preston F.E."/>
            <person name="Wasseem N."/>
            <person name="Bagnall R."/>
            <person name="Peake I.R."/>
            <person name="Berntorp E."/>
            <person name="Mauser Bunschoten E.P."/>
            <person name="Fijnvandraat K."/>
            <person name="Kasper C.K."/>
            <person name="White G."/>
            <person name="Santagostino E."/>
        </authorList>
    </citation>
    <scope>VARIANTS HEMA CYS-612; PHE-682; ARG-2028; CYS-2124; HIS-2169; HIS-2182; ASP-2200; CYS-2248 AND ILE-2279</scope>
</reference>
<reference key="70">
    <citation type="journal article" date="1999" name="Br. J. Haematol.">
        <title>Diagnostic importance of the two-stage factor VIII:C assay demonstrated by a case of mild haemophilia associated with His1954--&gt;Leu substitution in the factor VIII A3 domain.</title>
        <authorList>
            <person name="Keeling D.M."/>
            <person name="Sukhu K."/>
            <person name="Kemball-Cook G."/>
            <person name="Waseem N."/>
            <person name="Bagnall R."/>
            <person name="Lloyd J.V."/>
        </authorList>
    </citation>
    <scope>VARIANT HEMA LEU-1973</scope>
</reference>
<reference key="71">
    <citation type="journal article" date="1999" name="Hum. Mutat.">
        <title>Screen of 55 Slovenian haemophilia A patients: identification of 2 novel mutations (S-1R and IVS23+1G--&gt;A) and discussion of mutation spectrum.</title>
        <authorList>
            <person name="Strmecki L."/>
            <person name="Benedik-Dolnicar M."/>
            <person name="Vouk K."/>
            <person name="Komel R."/>
        </authorList>
    </citation>
    <scope>VARIANTS HEMA ARG-19; HIS-301; LEU-308; HIS-2169; GLN-2228 AND GLN-2326</scope>
</reference>
<reference key="72">
    <citation type="journal article" date="1999" name="Hum. Mutat.">
        <title>Mutational-screening in the factor VIII gene resulting in the identification of three novel mutations, one of which is a donor splice mutation.</title>
        <authorList>
            <person name="Moeller-Morlang K."/>
            <person name="Tavassoli K."/>
            <person name="Eigel A."/>
            <person name="Pollmann H."/>
            <person name="Horst J."/>
        </authorList>
    </citation>
    <scope>VARIANTS HEMA ARG-202 AND HIS-301</scope>
</reference>
<reference key="73">
    <citation type="journal article" date="1999" name="Thromb. Haemost.">
        <title>Start of UK confidential haemophilia A database: analysis of 142 patients by solid phase fluorescent chemical cleavage of mismatch.</title>
        <authorList>
            <consortium name="The haemophilia centres"/>
            <person name="Waseem N.H."/>
            <person name="Bagnall R."/>
            <person name="Green P.M."/>
            <person name="Giannelli F."/>
        </authorList>
    </citation>
    <scope>VARIANTS HEMA CYS-24; ARG-26; TYR-113; SER-121; TRP-172; PRO-176; MET-181; VAL-214; THR-219; LYS-291; ALA-314; VAL-315; LYS-340; PHE-405; GLY-412; THR-470; GLU-474; ASN-478; CYS-484; GLY-490; ARG-498; TRP-546; CYS-550; HIS-561; ARG-584; THR-585; GLY-588; ASP-601; LYS-601; GLY-602; HIS-605; CYS-612; TRP-717; CYS-1708; GLN-1751; HIS-1800; CYS-1802; THR-1853; GLU-1864; PRO-1882; ILE-1888; LEU-1973; TRP-2016; ALA-2035; TYR-2040; CYS-2120; CYS-2145; HIS-2169; CYS-2178; HIS-2182; VAL-2183; VAL-2198; CYS-2248 AND GLY-2326</scope>
</reference>
<reference key="74">
    <citation type="journal article" date="2000" name="Blood">
        <title>A novel cause of mild/moderate hemophilia A: mutations scattered in the factor VIII C1 domain reduce factor VIII binding to von Willebrand factor.</title>
        <authorList>
            <person name="Jacquemin M."/>
            <person name="Lavend'homme R."/>
            <person name="Benhida A."/>
            <person name="Vanzieleghem B."/>
            <person name="d'Oiron R."/>
            <person name="Lavergne J.-M."/>
            <person name="Brackmann H.H."/>
            <person name="Schwaab R."/>
            <person name="VandenDriessche T."/>
            <person name="Chuah M.K.L."/>
            <person name="Hoylaerts M."/>
            <person name="Gilles J.G.G."/>
            <person name="Peerlinck K."/>
            <person name="Vermylen J."/>
            <person name="Saint-Remy J.-M.R."/>
        </authorList>
    </citation>
    <scope>VARIANTS HEMA SER-2117; TYR-2138; SER-2148; HIS-2169 AND GLN-2172</scope>
    <scope>CHARACTERIZATION OF VARIANTS HEMA SER-2117; TYR-2138 AND HIS-2169</scope>
</reference>
<reference key="75">
    <citation type="journal article" date="2000" name="Blood">
        <title>Hemophilic factor VIII C1- and C2-domain missense mutations and their modeling to the 1.5-angstrom human C2-domain crystal structure.</title>
        <authorList>
            <person name="Liu M.-L."/>
            <person name="Shen B.W."/>
            <person name="Nakaya S."/>
            <person name="Pratt K.P."/>
            <person name="Fujikawa K."/>
            <person name="Davie E.W."/>
            <person name="Stoddard B.L."/>
            <person name="Thompson A.R."/>
        </authorList>
    </citation>
    <scope>VARIANTS HEMA GLU-2106; CYS-2109; CYS-2169; CYS-2178; CYS-2182; ARG-2183; ILE-2192; PRO-2220; ALA-2251; LEU-2319; CYS-2323; GLY-2323; GLN-2326 AND THR-2339</scope>
</reference>
<reference key="76">
    <citation type="journal article" date="2000" name="Br. J. Haematol.">
        <title>Intracellular accumulation of factor VIII induced by missense mutations Arg593--&gt;Cys and Asn618--&gt;Ser explains cross-reacting material-reduced haemophilia A.</title>
        <authorList>
            <person name="Roelse J.C."/>
            <person name="De Laaf R.T.M."/>
            <person name="Timmermans S.M.H."/>
            <person name="Peters M."/>
            <person name="Van Mourik J.A."/>
            <person name="Voorberg J."/>
        </authorList>
    </citation>
    <scope>VARIANTS HEMA CYS-612 AND SER-637</scope>
    <scope>CHARACTERIZATION OF VARIANTS HEMA CYS-612 AND SER-637</scope>
</reference>
<reference key="77">
    <citation type="journal article" date="2000" name="Br. J. Haematol.">
        <title>Assay discrepancy in mild haemophilia A due to a factor VIII missense mutation (Asn694Ile) in a large Danish family.</title>
        <authorList>
            <person name="Schwaab R."/>
            <person name="Oldenburg J."/>
            <person name="Kemball-Cook G."/>
            <person name="Albert T."/>
            <person name="Juhler C."/>
            <person name="Hanfland P."/>
            <person name="Ingerslev J."/>
        </authorList>
    </citation>
    <scope>VARIANT HEMA ILE-713</scope>
</reference>
<reference key="78">
    <citation type="journal article" date="2000" name="Haematologica">
        <title>Experience of a single Italian center in genetic counseling for hemophilia: from linkage analysis to molecular diagnosis.</title>
        <authorList>
            <person name="Tagariello G."/>
            <person name="Belvini D."/>
            <person name="Salviato R."/>
            <person name="Are A."/>
            <person name="De Biasi E."/>
            <person name="Goodeve A."/>
            <person name="Davoli P."/>
        </authorList>
    </citation>
    <scope>VARIANTS HEMA HIS-35; LEU-295; SER-307; CYS-1909; PRO-2058; GLN-2228 AND ARG-2332</scope>
</reference>
<reference key="79">
    <citation type="journal article" date="2000" name="Thromb. Haemost.">
        <title>Relationship between factor VIII mutation type and inhibitor development in a cohort of previously untreated patients treated with recombinant factor VIII (Recombinate).</title>
        <authorList>
            <consortium name="Recombinate PUP study group"/>
            <person name="Goodeve A.C."/>
            <person name="Williams I."/>
            <person name="Bray G.L."/>
            <person name="Peake I.R."/>
        </authorList>
    </citation>
    <scope>VARIANTS HEMA PRO-69; TYR-75; ARG-585; PRO-664; GLU-1779; ALA-2000; HIS-2169 AND PRO-2228</scope>
</reference>
<reference key="80">
    <citation type="journal article" date="2000" name="Hum. Mutat.">
        <title>Mutations of the factor VIII gene in Thai hemophilia A patients.</title>
        <authorList>
            <person name="Akkarapatumwong V."/>
            <person name="Oranwiroon S."/>
            <person name="Pung-amritt P."/>
            <person name="Treesucon A."/>
            <person name="Thanootarakul P."/>
            <person name="Veerakul G."/>
            <person name="Mahasandana C."/>
            <person name="Panyim S."/>
            <person name="Yenchitsomanus P."/>
        </authorList>
    </citation>
    <scope>VARIANTS HEMA TYR-561; VAL-1869 AND CYS-2344</scope>
</reference>
<reference key="81">
    <citation type="journal article" date="2001" name="Am. J. Hum. Genet.">
        <title>Somatic mosaicism in hemophilia A: a fairly common event.</title>
        <authorList>
            <person name="Leuer M."/>
            <person name="Oldenburg J."/>
            <person name="Lavergne J.-M."/>
            <person name="Ludwig M."/>
            <person name="Fregin A."/>
            <person name="Eigel A."/>
            <person name="Ljung R."/>
            <person name="Goodeve A."/>
            <person name="Peake I."/>
            <person name="Olek K."/>
        </authorList>
    </citation>
    <scope>VARIANTS HEMA ASP-89; ASP-99; HIS-101; TYR-135; PRO-327; GLY-409; ARG-498; ARG-603; ASP-637; GLY-1894; VAL-2045; LEU-2067; ARG-2172; CYS-2182; SER-2185; CYS-2279; LEU-2319; LEU-2326 AND PRO-2326</scope>
</reference>
<reference key="82">
    <citation type="journal article" date="2001" name="Br. J. Haematol.">
        <title>Lithuanian haemophilia A and B registry comprising phenotypic and genotypic data.</title>
        <authorList>
            <person name="Ivaskevicius V."/>
            <person name="Jurgutis R."/>
            <person name="Rost S."/>
            <person name="Muller A."/>
            <person name="Schmitt C."/>
            <person name="Wulff K."/>
            <person name="Herrmann F.H."/>
            <person name="Muller C.R."/>
            <person name="Schwaab R."/>
            <person name="Oldenburg J."/>
        </authorList>
    </citation>
    <scope>VARIANTS HEMA VAL-255; GLU-323; CYS-391; CYS-550; VAL-586; CYS-1708; CYS-1800; ALA-1942; PRO-1963; CYS-2036; CYS-2124; ARG-2172; CYS-2182; GLN-2228 AND ALA-2307</scope>
</reference>
<reference key="83">
    <citation type="journal article" date="2001" name="Haemophilia">
        <title>Site and type of mutations in the factor VIII gene in patients and carriers of haemophilia A.</title>
        <authorList>
            <person name="Theophilus B.D.M."/>
            <person name="Enayat M.S."/>
            <person name="Williams M.D."/>
            <person name="Hill F.G.H."/>
        </authorList>
    </citation>
    <scope>VARIANTS HEMA ASP-132; LYS-141; GLU-466; THR-470; HIS-503; GLY-602; THR-1853; GLN-1985; ARG-2004; TRP-2016; TYR-2093; HIS-2169; HIS-2182; VAL-2198 AND GLN-2228</scope>
</reference>
<reference key="84">
    <citation type="journal article" date="2001" name="Haemophilia">
        <title>Mild haemophilia A discovered in a previously multi-operated 73-year-old man: characterization of a new mutation.</title>
        <authorList>
            <person name="Bauduer F."/>
            <person name="Ducout L."/>
            <person name="Bendriss P."/>
            <person name="Falaises B."/>
            <person name="Lavergne J.-M."/>
        </authorList>
    </citation>
    <scope>VARIANT HEMA ALA-92</scope>
</reference>
<reference key="85">
    <citation type="journal article" date="2001" name="Haemophilia">
        <title>Molecular pathology of haemophilia A in Turkish patients: identification of 36 independent mutations.</title>
        <authorList>
            <person name="Timur A.A."/>
            <person name="Guergey A."/>
            <person name="Aktuglu G."/>
            <person name="Kavakli K."/>
            <person name="Canatan D."/>
            <person name="Olek K."/>
            <person name="Caglayan S.H."/>
        </authorList>
    </citation>
    <scope>VARIANTS HEMA ASN-67; PHE-117; ALA-137; TYR-267; CYS-301; HIS-301; TYR-348; LYS-475; ALA-579; CYS-612; CYS-683; LEU-698; TRP-710; CYS-1708; HIS-1788; LEU-1876; TRP-2016; GLU-2045; CYS-2178; CYS-2182; HIS-2182; PRO-2182; ALA-2307 AND LEU-2323</scope>
</reference>
<reference key="86">
    <citation type="journal article" date="2001" name="Hum. Mutat.">
        <title>Seven novel and four recurrent point mutations in the factor VIII (F8C) gene.</title>
        <authorList>
            <person name="Bogdanova N."/>
            <person name="Lemcke B."/>
            <person name="Markoff A."/>
            <person name="Pollmann H."/>
            <person name="Dworniczak B."/>
            <person name="Eigel A."/>
            <person name="Horst J."/>
        </authorList>
    </citation>
    <scope>VARIANTS HEMA MET-181; THR-339; CYS-455; TRP-546; CYS-554; CYS-2178 AND PRO-2326</scope>
</reference>
<reference key="87">
    <citation type="journal article" date="2001" name="Thromb. Haemost.">
        <title>Rapid hemophilia A molecular diagnosis by a simple DNA sequencing procedure: identification of 14 novel mutations.</title>
        <authorList>
            <person name="Vidal F."/>
            <person name="Farssac E."/>
            <person name="Altisent C."/>
            <person name="Puig L."/>
            <person name="Gallardo D."/>
        </authorList>
    </citation>
    <scope>VARIANTS HEMA ARG-193; CYS-391; CYS-550; CYS-612; HIS-1705; ARG-1782; GLU-1872; TRP-2016; PRO-2016; HIS-2169 AND HIS-2182</scope>
</reference>
<reference key="88">
    <citation type="journal article" date="2001" name="Thromb. Haemost.">
        <authorList>
            <person name="Vidal F."/>
            <person name="Farssac E."/>
            <person name="Altisent C."/>
            <person name="Puig L."/>
            <person name="Gallardo D."/>
        </authorList>
    </citation>
    <scope>ERRATUM OF PUBMED:11341489</scope>
</reference>
<reference key="89">
    <citation type="journal article" date="2002" name="Blood">
        <title>Skewed X-chromosome inactivation in monochorionic diamniotic twin sisters results in severe and mild hemophilia A.</title>
        <authorList>
            <person name="Valleix S."/>
            <person name="Vinciguerra C."/>
            <person name="Lavergne J.-M."/>
            <person name="Leuer M."/>
            <person name="Delpech M."/>
            <person name="Negrier C."/>
        </authorList>
    </citation>
    <scope>VARIANT HEMA CYS-35</scope>
</reference>
<reference key="90">
    <citation type="journal article" date="2002" name="Br. J. Haematol.">
        <title>Factor VIII deficiency not induced by FVIII gene mutation in a female first cousin of two brothers with haemophilia A.</title>
        <authorList>
            <person name="Mazurier C."/>
            <person name="Parquet-Gernez A."/>
            <person name="Gaucher C."/>
            <person name="Lavergne J.-M."/>
            <person name="Goudemand J."/>
        </authorList>
    </citation>
    <scope>VARIANT HEMA GLY-198</scope>
</reference>
<reference key="91">
    <citation type="journal article" date="2002" name="Haemophilia">
        <title>Three novel point mutations causing haemophilia A.</title>
        <authorList>
            <person name="Sukarova-Stefanovska E."/>
            <person name="Zisovski N."/>
            <person name="Muratovska O."/>
            <person name="Kostova S."/>
            <person name="Efremov G.D."/>
        </authorList>
    </citation>
    <scope>VARIANTS HEMA PRO-97 AND GLY-2193</scope>
</reference>
<reference key="92">
    <citation type="journal article" date="2002" name="Hum. Mutat.">
        <title>The identification and classification of 41 novel mutations in the factor VIII gene (F8C).</title>
        <authorList>
            <person name="Cutler J.A."/>
            <person name="Mitchell M.J."/>
            <person name="Smith M.P."/>
            <person name="Savidge G.F."/>
        </authorList>
    </citation>
    <scope>VARIANTS HEMA THR-22; CYS-25; PRO-26; VAL-111; ARG-138; GLY-186; LYS-284; VAL-327; CYS-365; SER-431; PRO-437; CYS-455; HIS-579; HIS-584; PHE-650; ILE-681; GLN-725; VAL-1727; GLY-1740; CYS-1858; ASP-1869; ARG-1968; CYS-1998; ASN-2056; VAL-2070; ASN-2082; CYS-2145; ASP-2157; ALA-2173 AND PRO-2330</scope>
</reference>
<reference key="93">
    <citation type="journal article" date="2002" name="Hum. Mutat.">
        <title>Identification of seven novel mutations of F8C by DHPLC.</title>
        <authorList>
            <person name="Frusconi S."/>
            <person name="Passerini I."/>
            <person name="Girolami F."/>
            <person name="Masieri M."/>
            <person name="Linari S."/>
            <person name="Longo G."/>
            <person name="Morfini M."/>
            <person name="Torricelli F."/>
        </authorList>
    </citation>
    <scope>VARIANTS HEMA VAL-477; SER-1714; PRO-1777 AND PRO-2330</scope>
</reference>
<reference key="94">
    <citation type="journal article" date="2002" name="Hum. Mutat.">
        <title>High throughput mutation screening of the factor VIII gene (F8C) in hemophilia A: 37 novel mutations and genotype-phenotype correlation.</title>
        <authorList>
            <person name="Citron M."/>
            <person name="Godmilow L."/>
            <person name="Ganguly T."/>
            <person name="Ganguly A."/>
        </authorList>
    </citation>
    <scope>VARIANTS HEMA TRP-172; LYS-291; CYS-301; ALA-345; HIS-391; VAL-439; CYS-442; LEU-470; GLY-532; MET-653; CYS-683; LYS-1336; HIS-1708; PRO-1875; ARG-1877; ILE-1965; PHE-2117; CYS-2182; TRP-2185; LEU-2224; GLU-2251; LEU-2290; CYS-2323 AND TYR-2345</scope>
</reference>
<reference key="95">
    <citation type="journal article" date="2002" name="Thromb. Haemost.">
        <title>Non-inversion factor VIII mutations in 80 hemophilia A families including 24 with alloimmune responses.</title>
        <authorList>
            <person name="Liu M.-L."/>
            <person name="Nakaya S."/>
            <person name="Thompson A.R."/>
        </authorList>
    </citation>
    <scope>VARIANTS HEMA GLU-67; 84-ARG-PRO-85 DEL; PRO-85 DEL; MET-181; TYR-186; GLY-220; LEU-262; ARG-412; PHE-438; ASP-439; ARG-470; SER-513; SER-541; CYS-550; GLY-554; SER-583; GLN-594; ILE-609; CYS-612; ASN-635; THR-699; ILE-701; ILE-721; ARG-1779; LEU-1780; THR-1791; PRO-1798; HIS-1800; GLY-1848; ARG-1907; CYS-1907; THR-1939; VAL-1939; ILE-1982; GLN-1985; CYS-2015; TRP-2016; SER-2038; HIS-2169; ILE-2192 AND LEU-2326</scope>
</reference>
<reference key="96">
    <citation type="journal article" date="2002" name="Thromb. Haemost.">
        <title>11 hemophilia A patients without mutations in the factor VIII encoding gene.</title>
        <authorList>
            <person name="Klopp N."/>
            <person name="Oldenburg J."/>
            <person name="Uen C."/>
            <person name="Schneppenheim R."/>
            <person name="Graw J."/>
        </authorList>
    </citation>
    <scope>VARIANTS HEMA ASP-147; CYS-301; CYS-612; VAL-1945; CYS-2178 AND GLN-2326</scope>
    <scope>VARIANT GLU-1260</scope>
</reference>
<reference key="97">
    <citation type="journal article" date="2003" name="Br. J. Haematol.">
        <title>Analysis of 18 novel mutations in the factor VIII gene.</title>
        <authorList>
            <person name="Bicocchi M.P."/>
            <person name="Pasino M."/>
            <person name="Lanza T."/>
            <person name="Bottini F."/>
            <person name="Boeri E."/>
            <person name="Mori P.G."/>
            <person name="Molinari A.C."/>
            <person name="Rosano C."/>
            <person name="Acquila M."/>
        </authorList>
    </citation>
    <scope>VARIANTS HEMA LYS-72; HIS-155; GLU-181; ILE-254; SER-439; GLU-529; THR-567; SER-1804; SER-2051; ASN-2141 AND GLN-2262 INS</scope>
</reference>
<reference key="98">
    <citation type="journal article" date="2003" name="J. Thromb. Haemost.">
        <title>Thirty-four novel mutations detected in factor VIII gene by multiplex CSGE: modeling of 13 novel amino acid substitutions.</title>
        <authorList>
            <person name="Habart D."/>
            <person name="Kalabova D."/>
            <person name="Novotny M."/>
            <person name="Vorlova Z."/>
        </authorList>
    </citation>
    <scope>VARIANTS HEMA ARG-26; PRO-326; PHE-329; HIS-391; GLY-401; TYR-522; THR-540; TRP-546; TYR-588; CYS-683; SER-720; TYR-1066; HIS-1768; PRO-1771; HIS-1800; ASP-1904; PRO-1980; CYS-2169; HIS-2169; ASP-2174; CYS-2178; HIS-2178; CYS-2182; GLY-2228; PHE-2229; LEU-2319; CYS-2323; HIS-2323 AND SER-2345</scope>
</reference>
<reference key="99">
    <citation type="journal article" date="2003" name="Haemophilia">
        <title>Genotype and phenotype of haemophilia A in Thai patients.</title>
        <authorList>
            <person name="Yenchitsomanus P."/>
            <person name="Akkarapatumwong V."/>
            <person name="Pung-Amritt P."/>
            <person name="Intorasoot S."/>
            <person name="Thanootarakul P."/>
            <person name="Oranwiroon S."/>
            <person name="Veerakul G."/>
            <person name="Mahasandana C."/>
        </authorList>
    </citation>
    <scope>VARIANTS HEMA ILE-252; TYR-561; VAL-1869; SER-2248 AND CYS-2344</scope>
</reference>
<reference key="100">
    <citation type="journal article" date="2005" name="Am. J. Hematol.">
        <title>Small FVIII gene rearrangements in 18 hemophilia A patients: five novel mutations.</title>
        <authorList>
            <person name="Bicocchi M.P."/>
            <person name="Pasino M."/>
            <person name="Lanza T."/>
            <person name="Bottini F."/>
            <person name="Molinari A.C."/>
            <person name="Caprino D."/>
            <person name="Rosano C."/>
            <person name="Acquila M."/>
        </authorList>
    </citation>
    <scope>VARIANTS HEMA THR-111; ASP-450; CYS-612; HIS-1800; CYS-1802 AND ALA-2251</scope>
</reference>
<reference key="101">
    <citation type="journal article" date="2005" name="Haemophilia">
        <title>Mutation analysis in 51 patients with haemophilia A: report of 10 novel mutations and correlations between genotype and clinical phenotype.</title>
        <authorList>
            <person name="Hill M."/>
            <person name="Deam S."/>
            <person name="Gordon B."/>
            <person name="Dolan G."/>
        </authorList>
    </citation>
    <scope>VARIANTS HEMA CYS-365; THR-470; SER-541; GLY-602; TRP-717; LYS-1701; CYS-1708; VAL-1727; ILE-1888; VAL-1966; TRP-2016; GLY-2018; LEU-2067; LEU-2162 AND HIS-2182</scope>
</reference>
<reference key="102">
    <citation type="journal article" date="2006" name="J. Thromb. Haemost.">
        <title>Female haemophilia A heterozygous for a de novo frameshift and a novel missense mutation of factor VIII.</title>
        <authorList>
            <person name="Cai X.-H."/>
            <person name="Wang X.-F."/>
            <person name="Dai J."/>
            <person name="Fang Y."/>
            <person name="Ding Q.-L."/>
            <person name="Xie F."/>
            <person name="Wang H.-L."/>
        </authorList>
    </citation>
    <scope>VARIANT HEMA PRO-1994</scope>
</reference>
<reference key="103">
    <citation type="journal article" date="2008" name="Blood">
        <title>Identification of 31 novel mutations in the F8 gene in Spanish hemophilia A patients: structural analysis of 20 missense mutations suggests new intermolecular binding sites.</title>
        <authorList>
            <person name="Vencesla A."/>
            <person name="Corral-Rodriguez M.A."/>
            <person name="Baena M."/>
            <person name="Cornet M."/>
            <person name="Domenech M."/>
            <person name="Baiget M."/>
            <person name="Fuentes-Prior P."/>
            <person name="Tizzano E.F."/>
        </authorList>
    </citation>
    <scope>VARIANTS HEMA ARG-83; ASN-186; PRO-195; PRO-261; ASP-280; SER-394; VAL-474; ARG-496; VAL-513; ARG-569; ILE-637; VAL-1720; LEU-1762; ASP-2101; PRO-2106; VAL-2143; LEU-2172; GLY-2286 AND PHE-2336</scope>
</reference>
<reference key="104">
    <citation type="journal article" date="2011" name="Haemophilia">
        <title>Identification of factor VIII gene mutations in patients with severe haemophilia A in Venezuela: identification of seven novel mutations.</title>
        <authorList>
            <person name="Albanez S."/>
            <person name="Ruiz-Saez A."/>
            <person name="Boadas A."/>
            <person name="De Bosch N."/>
            <person name="Porco A."/>
        </authorList>
    </citation>
    <scope>VARIANTS HEMA PHE-191; TYR-1877; ARG-2013 AND ASP-2344</scope>
</reference>
<reference key="105">
    <citation type="journal article" date="2016" name="Clin. Appl. Thromb. Hemost.">
        <title>Factor VIII Antigen, Activity, and Mutations in Hemophilia A.</title>
        <authorList>
            <person name="Nair P.S."/>
            <person name="Shetty S."/>
            <person name="Ghosh K."/>
        </authorList>
    </citation>
    <scope>VARIANTS HEMA SER-439 AND THR-723</scope>
</reference>
<reference key="106">
    <citation type="journal article" date="2015" name="J. Thromb. Haemost.">
        <title>Mild hemophilia A patient with novel Pro1809Leu mutation develops an anti-C2 antibody inhibiting allogeneic but not autologous factor VIII activity.</title>
        <authorList>
            <person name="Yada K."/>
            <person name="Nogami K."/>
            <person name="Takeyama M."/>
            <person name="Ogiwara K."/>
            <person name="Wakabayashi H."/>
            <person name="Shima M."/>
        </authorList>
    </citation>
    <scope>VARIANT HEMA LEU-1828</scope>
    <scope>CHARACTERIZATION OF VARIANT HEMA LEU-1828</scope>
</reference>
<reference key="107">
    <citation type="journal article" date="2018" name="Am. J. Hum. Genet.">
        <title>Reccurrent F8 Intronic Deletion Found in Mild Hemophilia A Causes Alu Exonization.</title>
        <authorList>
            <person name="Jourdy Y."/>
            <person name="Janin A."/>
            <person name="Fretigny M."/>
            <person name="Lienhart A."/>
            <person name="Negrier C."/>
            <person name="Bozon D."/>
            <person name="Vinciguerra C."/>
        </authorList>
    </citation>
    <scope>INVOLVEMENT IN HEMA</scope>
</reference>
<dbReference type="EMBL" id="M14113">
    <property type="protein sequence ID" value="AAA52485.1"/>
    <property type="molecule type" value="mRNA"/>
</dbReference>
<dbReference type="EMBL" id="X01179">
    <property type="protein sequence ID" value="CAA25619.1"/>
    <property type="molecule type" value="mRNA"/>
</dbReference>
<dbReference type="EMBL" id="M90707">
    <property type="protein sequence ID" value="AAA58466.1"/>
    <property type="molecule type" value="mRNA"/>
</dbReference>
<dbReference type="EMBL" id="K01740">
    <property type="protein sequence ID" value="AAA52484.1"/>
    <property type="molecule type" value="mRNA"/>
</dbReference>
<dbReference type="EMBL" id="M88648">
    <property type="protein sequence ID" value="AAA52420.1"/>
    <property type="molecule type" value="Genomic_DNA"/>
</dbReference>
<dbReference type="EMBL" id="M88628">
    <property type="protein sequence ID" value="AAA52420.1"/>
    <property type="status" value="JOINED"/>
    <property type="molecule type" value="Genomic_DNA"/>
</dbReference>
<dbReference type="EMBL" id="M88629">
    <property type="protein sequence ID" value="AAA52420.1"/>
    <property type="status" value="JOINED"/>
    <property type="molecule type" value="Genomic_DNA"/>
</dbReference>
<dbReference type="EMBL" id="M88630">
    <property type="protein sequence ID" value="AAA52420.1"/>
    <property type="status" value="JOINED"/>
    <property type="molecule type" value="Genomic_DNA"/>
</dbReference>
<dbReference type="EMBL" id="M88631">
    <property type="protein sequence ID" value="AAA52420.1"/>
    <property type="status" value="JOINED"/>
    <property type="molecule type" value="Genomic_DNA"/>
</dbReference>
<dbReference type="EMBL" id="M88632">
    <property type="protein sequence ID" value="AAA52420.1"/>
    <property type="status" value="JOINED"/>
    <property type="molecule type" value="Genomic_DNA"/>
</dbReference>
<dbReference type="EMBL" id="M88633">
    <property type="protein sequence ID" value="AAA52420.1"/>
    <property type="status" value="JOINED"/>
    <property type="molecule type" value="Genomic_DNA"/>
</dbReference>
<dbReference type="EMBL" id="M88634">
    <property type="protein sequence ID" value="AAA52420.1"/>
    <property type="status" value="JOINED"/>
    <property type="molecule type" value="Genomic_DNA"/>
</dbReference>
<dbReference type="EMBL" id="M88635">
    <property type="protein sequence ID" value="AAA52420.1"/>
    <property type="status" value="JOINED"/>
    <property type="molecule type" value="Genomic_DNA"/>
</dbReference>
<dbReference type="EMBL" id="M88636">
    <property type="protein sequence ID" value="AAA52420.1"/>
    <property type="status" value="JOINED"/>
    <property type="molecule type" value="Genomic_DNA"/>
</dbReference>
<dbReference type="EMBL" id="M88638">
    <property type="protein sequence ID" value="AAA52420.1"/>
    <property type="status" value="JOINED"/>
    <property type="molecule type" value="Genomic_DNA"/>
</dbReference>
<dbReference type="EMBL" id="M88639">
    <property type="protein sequence ID" value="AAA52420.1"/>
    <property type="status" value="JOINED"/>
    <property type="molecule type" value="Genomic_DNA"/>
</dbReference>
<dbReference type="EMBL" id="M88640">
    <property type="protein sequence ID" value="AAA52420.1"/>
    <property type="status" value="JOINED"/>
    <property type="molecule type" value="Genomic_DNA"/>
</dbReference>
<dbReference type="EMBL" id="M88641">
    <property type="protein sequence ID" value="AAA52420.1"/>
    <property type="status" value="JOINED"/>
    <property type="molecule type" value="Genomic_DNA"/>
</dbReference>
<dbReference type="EMBL" id="M88642">
    <property type="protein sequence ID" value="AAA52420.1"/>
    <property type="status" value="JOINED"/>
    <property type="molecule type" value="Genomic_DNA"/>
</dbReference>
<dbReference type="EMBL" id="M88643">
    <property type="protein sequence ID" value="AAA52420.1"/>
    <property type="status" value="JOINED"/>
    <property type="molecule type" value="Genomic_DNA"/>
</dbReference>
<dbReference type="EMBL" id="M88644">
    <property type="protein sequence ID" value="AAA52420.1"/>
    <property type="status" value="JOINED"/>
    <property type="molecule type" value="Genomic_DNA"/>
</dbReference>
<dbReference type="EMBL" id="M88645">
    <property type="protein sequence ID" value="AAA52420.1"/>
    <property type="status" value="JOINED"/>
    <property type="molecule type" value="Genomic_DNA"/>
</dbReference>
<dbReference type="EMBL" id="M88646">
    <property type="protein sequence ID" value="AAA52420.1"/>
    <property type="status" value="JOINED"/>
    <property type="molecule type" value="Genomic_DNA"/>
</dbReference>
<dbReference type="EMBL" id="M88647">
    <property type="protein sequence ID" value="AAA52420.1"/>
    <property type="status" value="JOINED"/>
    <property type="molecule type" value="Genomic_DNA"/>
</dbReference>
<dbReference type="EMBL" id="AY769950">
    <property type="protein sequence ID" value="AAV85964.1"/>
    <property type="molecule type" value="Genomic_DNA"/>
</dbReference>
<dbReference type="EMBL" id="AK289947">
    <property type="protein sequence ID" value="BAF82636.1"/>
    <property type="molecule type" value="mRNA"/>
</dbReference>
<dbReference type="EMBL" id="AK313707">
    <property type="protein sequence ID" value="BAG36452.1"/>
    <property type="molecule type" value="mRNA"/>
</dbReference>
<dbReference type="EMBL" id="AC109993">
    <property type="status" value="NOT_ANNOTATED_CDS"/>
    <property type="molecule type" value="Genomic_DNA"/>
</dbReference>
<dbReference type="EMBL" id="BX470111">
    <property type="status" value="NOT_ANNOTATED_CDS"/>
    <property type="molecule type" value="Genomic_DNA"/>
</dbReference>
<dbReference type="EMBL" id="BX842559">
    <property type="status" value="NOT_ANNOTATED_CDS"/>
    <property type="molecule type" value="Genomic_DNA"/>
</dbReference>
<dbReference type="EMBL" id="BX842564">
    <property type="status" value="NOT_ANNOTATED_CDS"/>
    <property type="molecule type" value="Genomic_DNA"/>
</dbReference>
<dbReference type="EMBL" id="BX890586">
    <property type="status" value="NOT_ANNOTATED_CDS"/>
    <property type="molecule type" value="Genomic_DNA"/>
</dbReference>
<dbReference type="EMBL" id="CH471172">
    <property type="protein sequence ID" value="EAW72645.1"/>
    <property type="molecule type" value="Genomic_DNA"/>
</dbReference>
<dbReference type="EMBL" id="BC022513">
    <property type="protein sequence ID" value="AAH22513.1"/>
    <property type="molecule type" value="mRNA"/>
</dbReference>
<dbReference type="EMBL" id="BC064380">
    <property type="protein sequence ID" value="AAH64380.1"/>
    <property type="molecule type" value="mRNA"/>
</dbReference>
<dbReference type="EMBL" id="BC098389">
    <property type="protein sequence ID" value="AAH98389.1"/>
    <property type="molecule type" value="mRNA"/>
</dbReference>
<dbReference type="EMBL" id="BC111967">
    <property type="protein sequence ID" value="AAI11968.1"/>
    <property type="molecule type" value="mRNA"/>
</dbReference>
<dbReference type="EMBL" id="BC111969">
    <property type="protein sequence ID" value="AAI11970.1"/>
    <property type="molecule type" value="mRNA"/>
</dbReference>
<dbReference type="EMBL" id="U80228">
    <property type="protein sequence ID" value="AAB61261.1"/>
    <property type="molecule type" value="Genomic_DNA"/>
</dbReference>
<dbReference type="CCDS" id="CCDS35457.1">
    <molecule id="P00451-1"/>
</dbReference>
<dbReference type="CCDS" id="CCDS44026.1">
    <molecule id="P00451-2"/>
</dbReference>
<dbReference type="PIR" id="I54318">
    <property type="entry name" value="EZHU"/>
</dbReference>
<dbReference type="RefSeq" id="NP_000123.1">
    <molecule id="P00451-1"/>
    <property type="nucleotide sequence ID" value="NM_000132.4"/>
</dbReference>
<dbReference type="RefSeq" id="NP_063916.1">
    <molecule id="P00451-2"/>
    <property type="nucleotide sequence ID" value="NM_019863.3"/>
</dbReference>
<dbReference type="PDB" id="1CFG">
    <property type="method" value="NMR"/>
    <property type="chains" value="A=2322-2343"/>
</dbReference>
<dbReference type="PDB" id="1D7P">
    <property type="method" value="X-ray"/>
    <property type="resolution" value="1.50 A"/>
    <property type="chains" value="M=2190-2348"/>
</dbReference>
<dbReference type="PDB" id="1FAC">
    <property type="method" value="NMR"/>
    <property type="chains" value="A=2322-2342"/>
</dbReference>
<dbReference type="PDB" id="1IQD">
    <property type="method" value="X-ray"/>
    <property type="resolution" value="2.00 A"/>
    <property type="chains" value="C=2193-2348"/>
</dbReference>
<dbReference type="PDB" id="2R7E">
    <property type="method" value="X-ray"/>
    <property type="resolution" value="3.70 A"/>
    <property type="chains" value="A=19-760, B=1582-2351"/>
</dbReference>
<dbReference type="PDB" id="3CDZ">
    <property type="method" value="X-ray"/>
    <property type="resolution" value="3.98 A"/>
    <property type="chains" value="A=20-764, B=1668-2351"/>
</dbReference>
<dbReference type="PDB" id="3HNB">
    <property type="method" value="X-ray"/>
    <property type="resolution" value="1.15 A"/>
    <property type="chains" value="M=2189-2347"/>
</dbReference>
<dbReference type="PDB" id="3HNY">
    <property type="method" value="X-ray"/>
    <property type="resolution" value="1.07 A"/>
    <property type="chains" value="M=2189-2347"/>
</dbReference>
<dbReference type="PDB" id="3HOB">
    <property type="method" value="X-ray"/>
    <property type="resolution" value="2.07 A"/>
    <property type="chains" value="A/M=2189-2347"/>
</dbReference>
<dbReference type="PDB" id="3J2Q">
    <property type="method" value="EM"/>
    <property type="resolution" value="15.00 A"/>
    <property type="chains" value="A=20-764, B=1668-2351"/>
</dbReference>
<dbReference type="PDB" id="3J2S">
    <property type="method" value="EM"/>
    <property type="resolution" value="15.00 A"/>
    <property type="chains" value="B=1710-2351"/>
</dbReference>
<dbReference type="PDB" id="4BDV">
    <property type="method" value="X-ray"/>
    <property type="resolution" value="3.98 A"/>
    <property type="chains" value="A=20-769, B=1667-2351"/>
</dbReference>
<dbReference type="PDB" id="4KI5">
    <property type="method" value="X-ray"/>
    <property type="resolution" value="2.47 A"/>
    <property type="chains" value="M=2190-2351"/>
</dbReference>
<dbReference type="PDB" id="4PT6">
    <property type="method" value="X-ray"/>
    <property type="resolution" value="2.10 A"/>
    <property type="chains" value="A/B=2190-2215, A/B=2222-2351"/>
</dbReference>
<dbReference type="PDB" id="4XZU">
    <property type="method" value="X-ray"/>
    <property type="resolution" value="2.61 A"/>
    <property type="chains" value="G/M=2193-2346"/>
</dbReference>
<dbReference type="PDB" id="5K8D">
    <property type="method" value="X-ray"/>
    <property type="resolution" value="4.19 A"/>
    <property type="chains" value="A=20-759, B=1713-2350"/>
</dbReference>
<dbReference type="PDB" id="6MF0">
    <property type="method" value="X-ray"/>
    <property type="resolution" value="3.20 A"/>
    <property type="chains" value="A/B=406-761, A/B=2039-2351"/>
</dbReference>
<dbReference type="PDB" id="6MF2">
    <property type="method" value="X-ray"/>
    <property type="resolution" value="3.61 A"/>
    <property type="chains" value="A=19-2351"/>
</dbReference>
<dbReference type="PDB" id="7K66">
    <property type="method" value="X-ray"/>
    <property type="resolution" value="3.92 A"/>
    <property type="chains" value="A=406-761, A=2039-2351"/>
</dbReference>
<dbReference type="PDB" id="7KBT">
    <property type="method" value="X-ray"/>
    <property type="resolution" value="4.15 A"/>
    <property type="chains" value="A=406-761, A=2039-2351"/>
</dbReference>
<dbReference type="PDB" id="7KWO">
    <property type="method" value="EM"/>
    <property type="resolution" value="2.90 A"/>
    <property type="chains" value="A=1-2351"/>
</dbReference>
<dbReference type="PDB" id="8G6I">
    <property type="method" value="EM"/>
    <property type="resolution" value="4.23 A"/>
    <property type="chains" value="A=406-761, A=2039-2351"/>
</dbReference>
<dbReference type="PDB" id="8TY1">
    <property type="method" value="EM"/>
    <property type="resolution" value="3.46 A"/>
    <property type="chains" value="A=406-761, A=2039-2351"/>
</dbReference>
<dbReference type="PDB" id="9D5D">
    <property type="method" value="X-ray"/>
    <property type="resolution" value="1.83 A"/>
    <property type="chains" value="M=2191-2351"/>
</dbReference>
<dbReference type="PDBsum" id="1CFG"/>
<dbReference type="PDBsum" id="1D7P"/>
<dbReference type="PDBsum" id="1FAC"/>
<dbReference type="PDBsum" id="1IQD"/>
<dbReference type="PDBsum" id="2R7E"/>
<dbReference type="PDBsum" id="3CDZ"/>
<dbReference type="PDBsum" id="3HNB"/>
<dbReference type="PDBsum" id="3HNY"/>
<dbReference type="PDBsum" id="3HOB"/>
<dbReference type="PDBsum" id="3J2Q"/>
<dbReference type="PDBsum" id="3J2S"/>
<dbReference type="PDBsum" id="4BDV"/>
<dbReference type="PDBsum" id="4KI5"/>
<dbReference type="PDBsum" id="4PT6"/>
<dbReference type="PDBsum" id="4XZU"/>
<dbReference type="PDBsum" id="5K8D"/>
<dbReference type="PDBsum" id="6MF0"/>
<dbReference type="PDBsum" id="6MF2"/>
<dbReference type="PDBsum" id="7K66"/>
<dbReference type="PDBsum" id="7KBT"/>
<dbReference type="PDBsum" id="7KWO"/>
<dbReference type="PDBsum" id="8G6I"/>
<dbReference type="PDBsum" id="8TY1"/>
<dbReference type="PDBsum" id="9D5D"/>
<dbReference type="EMDB" id="EMD-23057"/>
<dbReference type="EMDB" id="EMD-29770"/>
<dbReference type="EMDB" id="EMD-41710"/>
<dbReference type="EMDB" id="EMD-5540"/>
<dbReference type="EMDB" id="EMD-5559"/>
<dbReference type="SMR" id="P00451"/>
<dbReference type="BioGRID" id="108455">
    <property type="interactions" value="19"/>
</dbReference>
<dbReference type="ComplexPortal" id="CPX-6235">
    <property type="entry name" value="Coagulation factor VIIIa complex, heavy chain variant 2"/>
</dbReference>
<dbReference type="ComplexPortal" id="CPX-929">
    <property type="entry name" value="Coagulation factor VIIIa complex, heavy chain variant 1"/>
</dbReference>
<dbReference type="CORUM" id="P00451"/>
<dbReference type="DIP" id="DIP-29774N"/>
<dbReference type="FunCoup" id="P00451">
    <property type="interactions" value="182"/>
</dbReference>
<dbReference type="IntAct" id="P00451">
    <property type="interactions" value="12"/>
</dbReference>
<dbReference type="MINT" id="P00451"/>
<dbReference type="STRING" id="9606.ENSP00000353393"/>
<dbReference type="BindingDB" id="P00451"/>
<dbReference type="ChEMBL" id="CHEMBL3143"/>
<dbReference type="DrugBank" id="DB13884">
    <property type="generic name" value="Albutrepenonacog alfa"/>
</dbReference>
<dbReference type="DrugBank" id="DB13151">
    <property type="generic name" value="Anti-inhibitor coagulant complex"/>
</dbReference>
<dbReference type="DrugBank" id="DB00100">
    <property type="generic name" value="Coagulation Factor IX (Recombinant)"/>
</dbReference>
<dbReference type="DrugBank" id="DB13152">
    <property type="generic name" value="Coagulation Factor IX Human"/>
</dbReference>
<dbReference type="DrugBank" id="DB09130">
    <property type="generic name" value="Copper"/>
</dbReference>
<dbReference type="DrugBank" id="DB14700">
    <property type="generic name" value="Damoctocog alfa pegol"/>
</dbReference>
<dbReference type="DrugBank" id="DB00055">
    <property type="generic name" value="Drotrecogin alfa"/>
</dbReference>
<dbReference type="DrugBank" id="DB11571">
    <property type="generic name" value="Human thrombin"/>
</dbReference>
<dbReference type="DrugBank" id="DB15257">
    <property type="generic name" value="Milademetan"/>
</dbReference>
<dbReference type="DrugBank" id="DB13933">
    <property type="generic name" value="Nonacog beta pegol"/>
</dbReference>
<dbReference type="DrugBank" id="DB11312">
    <property type="generic name" value="Protein C"/>
</dbReference>
<dbReference type="DrugBank" id="DB16007">
    <property type="generic name" value="Rurioctocog alfa pegol"/>
</dbReference>
<dbReference type="DrugBank" id="DB06050">
    <property type="generic name" value="TB-402"/>
</dbReference>
<dbReference type="DrugBank" id="DB11300">
    <property type="generic name" value="Thrombin"/>
</dbReference>
<dbReference type="DrugBank" id="DB11572">
    <property type="generic name" value="Thrombin alfa"/>
</dbReference>
<dbReference type="DrugBank" id="DB13133">
    <property type="generic name" value="Von Willebrand factor human"/>
</dbReference>
<dbReference type="DrugBank" id="DB12872">
    <property type="generic name" value="Vonicog alfa"/>
</dbReference>
<dbReference type="Allergome" id="9868">
    <property type="allergen name" value="Hom s Factor VIII"/>
</dbReference>
<dbReference type="CarbonylDB" id="P00451"/>
<dbReference type="GlyConnect" id="99">
    <property type="glycosylation" value="32 N-Linked glycans (10 sites)"/>
</dbReference>
<dbReference type="GlyCosmos" id="P00451">
    <property type="glycosylation" value="26 sites, 52 glycans"/>
</dbReference>
<dbReference type="GlyGen" id="P00451">
    <property type="glycosylation" value="28 sites, 58 N-linked glycans (15 sites), 2 O-linked glycans (3 sites)"/>
</dbReference>
<dbReference type="iPTMnet" id="P00451"/>
<dbReference type="PhosphoSitePlus" id="P00451"/>
<dbReference type="BioMuta" id="F8"/>
<dbReference type="DMDM" id="119767"/>
<dbReference type="CPTAC" id="non-CPTAC-1099"/>
<dbReference type="jPOST" id="P00451"/>
<dbReference type="MassIVE" id="P00451"/>
<dbReference type="PaxDb" id="9606-ENSP00000353393"/>
<dbReference type="PeptideAtlas" id="P00451"/>
<dbReference type="ProteomicsDB" id="51252">
    <molecule id="P00451-1"/>
</dbReference>
<dbReference type="ProteomicsDB" id="51253">
    <molecule id="P00451-2"/>
</dbReference>
<dbReference type="ABCD" id="P00451">
    <property type="antibodies" value="25 sequenced antibodies"/>
</dbReference>
<dbReference type="Antibodypedia" id="393">
    <property type="antibodies" value="1227 antibodies from 41 providers"/>
</dbReference>
<dbReference type="DNASU" id="2157"/>
<dbReference type="Ensembl" id="ENST00000330287.10">
    <molecule id="P00451-2"/>
    <property type="protein sequence ID" value="ENSP00000327895.6"/>
    <property type="gene ID" value="ENSG00000185010.15"/>
</dbReference>
<dbReference type="Ensembl" id="ENST00000360256.9">
    <molecule id="P00451-1"/>
    <property type="protein sequence ID" value="ENSP00000353393.4"/>
    <property type="gene ID" value="ENSG00000185010.15"/>
</dbReference>
<dbReference type="GeneID" id="2157"/>
<dbReference type="KEGG" id="hsa:2157"/>
<dbReference type="MANE-Select" id="ENST00000360256.9">
    <property type="protein sequence ID" value="ENSP00000353393.4"/>
    <property type="RefSeq nucleotide sequence ID" value="NM_000132.4"/>
    <property type="RefSeq protein sequence ID" value="NP_000123.1"/>
</dbReference>
<dbReference type="UCSC" id="uc004fms.4">
    <molecule id="P00451-1"/>
    <property type="organism name" value="human"/>
</dbReference>
<dbReference type="AGR" id="HGNC:3546"/>
<dbReference type="CTD" id="2157"/>
<dbReference type="DisGeNET" id="2157"/>
<dbReference type="GeneCards" id="F8"/>
<dbReference type="GeneReviews" id="F8"/>
<dbReference type="HGNC" id="HGNC:3546">
    <property type="gene designation" value="F8"/>
</dbReference>
<dbReference type="HPA" id="ENSG00000185010">
    <property type="expression patterns" value="Tissue enhanced (heart)"/>
</dbReference>
<dbReference type="MalaCards" id="F8"/>
<dbReference type="MIM" id="134500">
    <property type="type" value="phenotype"/>
</dbReference>
<dbReference type="MIM" id="300841">
    <property type="type" value="gene"/>
</dbReference>
<dbReference type="MIM" id="301071">
    <property type="type" value="phenotype"/>
</dbReference>
<dbReference type="MIM" id="306700">
    <property type="type" value="phenotype"/>
</dbReference>
<dbReference type="neXtProt" id="NX_P00451"/>
<dbReference type="OpenTargets" id="ENSG00000185010"/>
<dbReference type="Orphanet" id="177926">
    <property type="disease" value="Bleeding disorder in hemophilia A carriers"/>
</dbReference>
<dbReference type="Orphanet" id="169808">
    <property type="disease" value="Mild hemophilia A"/>
</dbReference>
<dbReference type="Orphanet" id="169805">
    <property type="disease" value="Moderate hemophilia A"/>
</dbReference>
<dbReference type="Orphanet" id="169802">
    <property type="disease" value="Severe hemophilia A"/>
</dbReference>
<dbReference type="PharmGKB" id="PA27952"/>
<dbReference type="VEuPathDB" id="HostDB:ENSG00000185010"/>
<dbReference type="eggNOG" id="ENOG502QSFZ">
    <property type="taxonomic scope" value="Eukaryota"/>
</dbReference>
<dbReference type="GeneTree" id="ENSGT00940000160294"/>
<dbReference type="HOGENOM" id="CLU_030066_1_0_1"/>
<dbReference type="InParanoid" id="P00451"/>
<dbReference type="OMA" id="TWDYAPH"/>
<dbReference type="OrthoDB" id="2121828at2759"/>
<dbReference type="PAN-GO" id="P00451">
    <property type="GO annotations" value="2 GO annotations based on evolutionary models"/>
</dbReference>
<dbReference type="PhylomeDB" id="P00451"/>
<dbReference type="TreeFam" id="TF329807"/>
<dbReference type="BioCyc" id="MetaCyc:MONOMER66-42680"/>
<dbReference type="PathwayCommons" id="P00451"/>
<dbReference type="Reactome" id="R-HSA-114608">
    <property type="pathway name" value="Platelet degranulation"/>
</dbReference>
<dbReference type="Reactome" id="R-HSA-140837">
    <property type="pathway name" value="Intrinsic Pathway of Fibrin Clot Formation"/>
</dbReference>
<dbReference type="Reactome" id="R-HSA-140875">
    <property type="pathway name" value="Common Pathway of Fibrin Clot Formation"/>
</dbReference>
<dbReference type="Reactome" id="R-HSA-163841">
    <property type="pathway name" value="Gamma carboxylation, hypusinylation, hydroxylation, and arylsulfatase activation"/>
</dbReference>
<dbReference type="Reactome" id="R-HSA-204005">
    <property type="pathway name" value="COPII-mediated vesicle transport"/>
</dbReference>
<dbReference type="Reactome" id="R-HSA-5694530">
    <property type="pathway name" value="Cargo concentration in the ER"/>
</dbReference>
<dbReference type="Reactome" id="R-HSA-9672383">
    <property type="pathway name" value="Defective factor IX causes thrombophilia"/>
</dbReference>
<dbReference type="Reactome" id="R-HSA-9672387">
    <property type="pathway name" value="Defective F8 accelerates dissociation of the A2 domain"/>
</dbReference>
<dbReference type="Reactome" id="R-HSA-9672391">
    <property type="pathway name" value="Defective F8 cleavage by thrombin"/>
</dbReference>
<dbReference type="Reactome" id="R-HSA-9672393">
    <property type="pathway name" value="Defective F8 binding to von Willebrand factor"/>
</dbReference>
<dbReference type="Reactome" id="R-HSA-9672395">
    <property type="pathway name" value="Defective F8 binding to the cell membrane"/>
</dbReference>
<dbReference type="Reactome" id="R-HSA-9672396">
    <property type="pathway name" value="Defective cofactor function of FVIIIa variant"/>
</dbReference>
<dbReference type="Reactome" id="R-HSA-9672397">
    <property type="pathway name" value="Defective F8 secretion"/>
</dbReference>
<dbReference type="Reactome" id="R-HSA-9673202">
    <property type="pathway name" value="Defective F9 variant does not activate FX"/>
</dbReference>
<dbReference type="Reactome" id="R-HSA-9674519">
    <property type="pathway name" value="Defective F8 sulfation at Y1699"/>
</dbReference>
<dbReference type="SABIO-RK" id="P00451"/>
<dbReference type="SignaLink" id="P00451"/>
<dbReference type="SIGNOR" id="P00451"/>
<dbReference type="BioGRID-ORCS" id="2157">
    <property type="hits" value="6 hits in 775 CRISPR screens"/>
</dbReference>
<dbReference type="CD-CODE" id="91857CE7">
    <property type="entry name" value="Nucleolus"/>
</dbReference>
<dbReference type="ChiTaRS" id="F8">
    <property type="organism name" value="human"/>
</dbReference>
<dbReference type="EvolutionaryTrace" id="P00451"/>
<dbReference type="GeneWiki" id="Factor_VIII"/>
<dbReference type="GenomeRNAi" id="2157"/>
<dbReference type="Pharos" id="P00451">
    <property type="development level" value="Tbio"/>
</dbReference>
<dbReference type="PRO" id="PR:P00451"/>
<dbReference type="Proteomes" id="UP000005640">
    <property type="component" value="Chromosome X"/>
</dbReference>
<dbReference type="RNAct" id="P00451">
    <property type="molecule type" value="protein"/>
</dbReference>
<dbReference type="Bgee" id="ENSG00000185010">
    <property type="expression patterns" value="Expressed in left ventricle myocardium and 187 other cell types or tissues"/>
</dbReference>
<dbReference type="ExpressionAtlas" id="P00451">
    <property type="expression patterns" value="baseline and differential"/>
</dbReference>
<dbReference type="GO" id="GO:0030134">
    <property type="term" value="C:COPII-coated ER to Golgi transport vesicle"/>
    <property type="evidence" value="ECO:0000304"/>
    <property type="project" value="Reactome"/>
</dbReference>
<dbReference type="GO" id="GO:0005788">
    <property type="term" value="C:endoplasmic reticulum lumen"/>
    <property type="evidence" value="ECO:0000304"/>
    <property type="project" value="Reactome"/>
</dbReference>
<dbReference type="GO" id="GO:0033116">
    <property type="term" value="C:endoplasmic reticulum-Golgi intermediate compartment membrane"/>
    <property type="evidence" value="ECO:0000304"/>
    <property type="project" value="Reactome"/>
</dbReference>
<dbReference type="GO" id="GO:0005576">
    <property type="term" value="C:extracellular region"/>
    <property type="evidence" value="ECO:0000304"/>
    <property type="project" value="Reactome"/>
</dbReference>
<dbReference type="GO" id="GO:0005615">
    <property type="term" value="C:extracellular space"/>
    <property type="evidence" value="ECO:0000318"/>
    <property type="project" value="GO_Central"/>
</dbReference>
<dbReference type="GO" id="GO:0005796">
    <property type="term" value="C:Golgi lumen"/>
    <property type="evidence" value="ECO:0000304"/>
    <property type="project" value="Reactome"/>
</dbReference>
<dbReference type="GO" id="GO:0005886">
    <property type="term" value="C:plasma membrane"/>
    <property type="evidence" value="ECO:0000304"/>
    <property type="project" value="Reactome"/>
</dbReference>
<dbReference type="GO" id="GO:0031093">
    <property type="term" value="C:platelet alpha granule lumen"/>
    <property type="evidence" value="ECO:0000304"/>
    <property type="project" value="Reactome"/>
</dbReference>
<dbReference type="GO" id="GO:0005507">
    <property type="term" value="F:copper ion binding"/>
    <property type="evidence" value="ECO:0007669"/>
    <property type="project" value="InterPro"/>
</dbReference>
<dbReference type="GO" id="GO:0016491">
    <property type="term" value="F:oxidoreductase activity"/>
    <property type="evidence" value="ECO:0007669"/>
    <property type="project" value="InterPro"/>
</dbReference>
<dbReference type="GO" id="GO:0006953">
    <property type="term" value="P:acute-phase response"/>
    <property type="evidence" value="ECO:0007669"/>
    <property type="project" value="UniProtKB-KW"/>
</dbReference>
<dbReference type="GO" id="GO:0007596">
    <property type="term" value="P:blood coagulation"/>
    <property type="evidence" value="ECO:0000304"/>
    <property type="project" value="ProtInc"/>
</dbReference>
<dbReference type="GO" id="GO:0007597">
    <property type="term" value="P:blood coagulation, intrinsic pathway"/>
    <property type="evidence" value="ECO:0000318"/>
    <property type="project" value="GO_Central"/>
</dbReference>
<dbReference type="CDD" id="cd14452">
    <property type="entry name" value="CuRO_1_FVIII_like"/>
    <property type="match status" value="1"/>
</dbReference>
<dbReference type="CDD" id="cd11015">
    <property type="entry name" value="CuRO_2_FVIII_like"/>
    <property type="match status" value="1"/>
</dbReference>
<dbReference type="CDD" id="cd04227">
    <property type="entry name" value="CuRO_3_FVIII_like"/>
    <property type="match status" value="1"/>
</dbReference>
<dbReference type="CDD" id="cd11016">
    <property type="entry name" value="CuRO_4_FVIII_like"/>
    <property type="match status" value="1"/>
</dbReference>
<dbReference type="CDD" id="cd04228">
    <property type="entry name" value="CuRO_5_FVIII_like"/>
    <property type="match status" value="1"/>
</dbReference>
<dbReference type="CDD" id="cd11018">
    <property type="entry name" value="CuRO_6_FVIII_like"/>
    <property type="match status" value="1"/>
</dbReference>
<dbReference type="CDD" id="cd00057">
    <property type="entry name" value="FA58C"/>
    <property type="match status" value="2"/>
</dbReference>
<dbReference type="FunFam" id="2.60.120.260:FF:000002">
    <property type="entry name" value="Coagulation factor VIII"/>
    <property type="match status" value="2"/>
</dbReference>
<dbReference type="FunFam" id="2.60.40.420:FF:000047">
    <property type="entry name" value="Coagulation factor VIII"/>
    <property type="match status" value="1"/>
</dbReference>
<dbReference type="FunFam" id="2.60.40.420:FF:000051">
    <property type="entry name" value="Coagulation factor VIII"/>
    <property type="match status" value="1"/>
</dbReference>
<dbReference type="FunFam" id="2.60.40.420:FF:000011">
    <property type="entry name" value="Coagulation factor VIII (Predicted)"/>
    <property type="match status" value="1"/>
</dbReference>
<dbReference type="FunFam" id="2.60.40.420:FF:000026">
    <property type="entry name" value="Coagulation factor VIII (Predicted)"/>
    <property type="match status" value="1"/>
</dbReference>
<dbReference type="FunFam" id="2.60.40.420:FF:000032">
    <property type="entry name" value="Coagulation factor VIII (Predicted)"/>
    <property type="match status" value="1"/>
</dbReference>
<dbReference type="FunFam" id="2.60.40.420:FF:000035">
    <property type="entry name" value="Coagulation factor VIII (Predicted)"/>
    <property type="match status" value="1"/>
</dbReference>
<dbReference type="Gene3D" id="2.60.40.420">
    <property type="entry name" value="Cupredoxins - blue copper proteins"/>
    <property type="match status" value="6"/>
</dbReference>
<dbReference type="Gene3D" id="2.60.120.260">
    <property type="entry name" value="Galactose-binding domain-like"/>
    <property type="match status" value="2"/>
</dbReference>
<dbReference type="InterPro" id="IPR011707">
    <property type="entry name" value="Cu-oxidase-like_N"/>
</dbReference>
<dbReference type="InterPro" id="IPR011706">
    <property type="entry name" value="Cu-oxidase_C"/>
</dbReference>
<dbReference type="InterPro" id="IPR033138">
    <property type="entry name" value="Cu_oxidase_CS"/>
</dbReference>
<dbReference type="InterPro" id="IPR008972">
    <property type="entry name" value="Cupredoxin"/>
</dbReference>
<dbReference type="InterPro" id="IPR000421">
    <property type="entry name" value="FA58C"/>
</dbReference>
<dbReference type="InterPro" id="IPR024715">
    <property type="entry name" value="Factor_5/8-like"/>
</dbReference>
<dbReference type="InterPro" id="IPR008979">
    <property type="entry name" value="Galactose-bd-like_sf"/>
</dbReference>
<dbReference type="InterPro" id="IPR050633">
    <property type="entry name" value="Neuropilin_MCO_CoagFactor"/>
</dbReference>
<dbReference type="PANTHER" id="PTHR46806:SF7">
    <property type="entry name" value="COAGULATION FACTOR VIII"/>
    <property type="match status" value="1"/>
</dbReference>
<dbReference type="PANTHER" id="PTHR46806">
    <property type="entry name" value="F5/8 TYPE C DOMAIN-CONTAINING PROTEIN"/>
    <property type="match status" value="1"/>
</dbReference>
<dbReference type="Pfam" id="PF07731">
    <property type="entry name" value="Cu-oxidase_2"/>
    <property type="match status" value="1"/>
</dbReference>
<dbReference type="Pfam" id="PF07732">
    <property type="entry name" value="Cu-oxidase_3"/>
    <property type="match status" value="2"/>
</dbReference>
<dbReference type="Pfam" id="PF00754">
    <property type="entry name" value="F5_F8_type_C"/>
    <property type="match status" value="2"/>
</dbReference>
<dbReference type="PIRSF" id="PIRSF000354">
    <property type="entry name" value="Factors_V_VIII"/>
    <property type="match status" value="1"/>
</dbReference>
<dbReference type="SMART" id="SM00231">
    <property type="entry name" value="FA58C"/>
    <property type="match status" value="2"/>
</dbReference>
<dbReference type="SUPFAM" id="SSF49503">
    <property type="entry name" value="Cupredoxins"/>
    <property type="match status" value="6"/>
</dbReference>
<dbReference type="SUPFAM" id="SSF49785">
    <property type="entry name" value="Galactose-binding domain-like"/>
    <property type="match status" value="2"/>
</dbReference>
<dbReference type="PROSITE" id="PS01285">
    <property type="entry name" value="FA58C_1"/>
    <property type="match status" value="2"/>
</dbReference>
<dbReference type="PROSITE" id="PS01286">
    <property type="entry name" value="FA58C_2"/>
    <property type="match status" value="2"/>
</dbReference>
<dbReference type="PROSITE" id="PS50022">
    <property type="entry name" value="FA58C_3"/>
    <property type="match status" value="2"/>
</dbReference>
<dbReference type="PROSITE" id="PS00079">
    <property type="entry name" value="MULTICOPPER_OXIDASE1"/>
    <property type="match status" value="3"/>
</dbReference>
<feature type="signal peptide">
    <location>
        <begin position="1"/>
        <end position="19"/>
    </location>
</feature>
<feature type="chain" id="PRO_0000002967" description="Coagulation factor VIII">
    <location>
        <begin position="20"/>
        <end position="2351"/>
    </location>
</feature>
<feature type="chain" id="PRO_0000002968" description="Factor VIIIa heavy chain, 200 kDa isoform">
    <location>
        <begin position="20"/>
        <end position="1332"/>
    </location>
</feature>
<feature type="chain" id="PRO_0000002969" description="Factor VIIIa heavy chain, 92 kDa isoform">
    <location>
        <begin position="20"/>
        <end position="759"/>
    </location>
</feature>
<feature type="chain" id="PRO_0000002970" description="Factor VIII B chain">
    <location>
        <begin position="760"/>
        <end position="1332"/>
    </location>
</feature>
<feature type="chain" id="PRO_0000002971" description="Factor VIIIa light chain">
    <location>
        <begin position="1668"/>
        <end position="2351"/>
    </location>
</feature>
<feature type="domain" description="F5/8 type A 1">
    <location>
        <begin position="20"/>
        <end position="348"/>
    </location>
</feature>
<feature type="domain" description="Plastocyanin-like 1">
    <location>
        <begin position="20"/>
        <end position="198"/>
    </location>
</feature>
<feature type="domain" description="Plastocyanin-like 2">
    <location>
        <begin position="206"/>
        <end position="348"/>
    </location>
</feature>
<feature type="domain" description="F5/8 type A 2">
    <location>
        <begin position="399"/>
        <end position="730"/>
    </location>
</feature>
<feature type="domain" description="Plastocyanin-like 3">
    <location>
        <begin position="399"/>
        <end position="573"/>
    </location>
</feature>
<feature type="domain" description="Plastocyanin-like 4">
    <location>
        <begin position="583"/>
        <end position="730"/>
    </location>
</feature>
<feature type="domain" description="F5/8 type A 3">
    <location>
        <begin position="1713"/>
        <end position="2040"/>
    </location>
</feature>
<feature type="domain" description="Plastocyanin-like 5">
    <location>
        <begin position="1713"/>
        <end position="1877"/>
    </location>
</feature>
<feature type="domain" description="Plastocyanin-like 6">
    <location>
        <begin position="1887"/>
        <end position="2040"/>
    </location>
</feature>
<feature type="domain" description="F5/8 type C 1" evidence="2">
    <location>
        <begin position="2040"/>
        <end position="2188"/>
    </location>
</feature>
<feature type="domain" description="F5/8 type C 2" evidence="2">
    <location>
        <begin position="2193"/>
        <end position="2345"/>
    </location>
</feature>
<feature type="region of interest" description="B">
    <location>
        <begin position="760"/>
        <end position="1667"/>
    </location>
</feature>
<feature type="region of interest" description="Disordered" evidence="3">
    <location>
        <begin position="906"/>
        <end position="928"/>
    </location>
</feature>
<feature type="region of interest" description="Disordered" evidence="3">
    <location>
        <begin position="941"/>
        <end position="961"/>
    </location>
</feature>
<feature type="site" description="Cleavage; by thrombin">
    <location>
        <begin position="391"/>
        <end position="392"/>
    </location>
</feature>
<feature type="site" description="Cleavage; by thrombin">
    <location>
        <begin position="759"/>
        <end position="760"/>
    </location>
</feature>
<feature type="site" description="Cleavage (activation)">
    <location>
        <begin position="1332"/>
        <end position="1333"/>
    </location>
</feature>
<feature type="site" description="Cleavage (activation)">
    <location>
        <begin position="1667"/>
        <end position="1668"/>
    </location>
</feature>
<feature type="site" description="Cleavage; by thrombin">
    <location>
        <begin position="1708"/>
        <end position="1709"/>
    </location>
</feature>
<feature type="modified residue" description="Sulfotyrosine" evidence="6 40">
    <location>
        <position position="365"/>
    </location>
</feature>
<feature type="modified residue" description="Sulfotyrosine" evidence="6">
    <location>
        <position position="737"/>
    </location>
</feature>
<feature type="modified residue" description="Sulfotyrosine" evidence="6">
    <location>
        <position position="738"/>
    </location>
</feature>
<feature type="modified residue" description="Sulfotyrosine" evidence="6">
    <location>
        <position position="742"/>
    </location>
</feature>
<feature type="modified residue" description="Sulfotyrosine" evidence="6 40">
    <location>
        <position position="1683"/>
    </location>
</feature>
<feature type="modified residue" description="Sulfotyrosine" evidence="6 40 49">
    <location>
        <position position="1699"/>
    </location>
</feature>
<feature type="glycosylation site" description="N-linked (GlcNAc...) asparagine" evidence="1">
    <location>
        <position position="60"/>
    </location>
</feature>
<feature type="glycosylation site" description="N-linked (GlcNAc...) asparagine" evidence="1">
    <location>
        <position position="258"/>
    </location>
</feature>
<feature type="glycosylation site" description="N-linked (GlcNAc...) asparagine" evidence="43">
    <location>
        <position position="601"/>
    </location>
</feature>
<feature type="glycosylation site" description="N-linked (GlcNAc...) asparagine" evidence="1">
    <location>
        <position position="776"/>
    </location>
</feature>
<feature type="glycosylation site" description="N-linked (GlcNAc...) asparagine" evidence="1">
    <location>
        <position position="803"/>
    </location>
</feature>
<feature type="glycosylation site" description="N-linked (GlcNAc...) asparagine" evidence="1">
    <location>
        <position position="847"/>
    </location>
</feature>
<feature type="glycosylation site" description="N-linked (GlcNAc...) asparagine" evidence="1">
    <location>
        <position position="919"/>
    </location>
</feature>
<feature type="glycosylation site" description="N-linked (GlcNAc...) asparagine" evidence="1">
    <location>
        <position position="962"/>
    </location>
</feature>
<feature type="glycosylation site" description="N-linked (GlcNAc...) asparagine" evidence="1">
    <location>
        <position position="982"/>
    </location>
</feature>
<feature type="glycosylation site" description="N-linked (GlcNAc...) asparagine" evidence="1">
    <location>
        <position position="1020"/>
    </location>
</feature>
<feature type="glycosylation site" description="N-linked (GlcNAc...) asparagine" evidence="1">
    <location>
        <position position="1024"/>
    </location>
</feature>
<feature type="glycosylation site" description="N-linked (GlcNAc...) asparagine" evidence="1">
    <location>
        <position position="1074"/>
    </location>
</feature>
<feature type="glycosylation site" description="N-linked (GlcNAc...) asparagine" evidence="1">
    <location>
        <position position="1085"/>
    </location>
</feature>
<feature type="glycosylation site" description="N-linked (GlcNAc...) asparagine" evidence="1">
    <location>
        <position position="1204"/>
    </location>
</feature>
<feature type="glycosylation site" description="N-linked (GlcNAc...) asparagine" evidence="1">
    <location>
        <position position="1274"/>
    </location>
</feature>
<feature type="glycosylation site" description="N-linked (GlcNAc...) asparagine" evidence="1">
    <location>
        <position position="1278"/>
    </location>
</feature>
<feature type="glycosylation site" description="N-linked (GlcNAc...) asparagine" evidence="1">
    <location>
        <position position="1301"/>
    </location>
</feature>
<feature type="glycosylation site" description="N-linked (GlcNAc...) asparagine" evidence="1">
    <location>
        <position position="1319"/>
    </location>
</feature>
<feature type="glycosylation site" description="N-linked (GlcNAc...) asparagine" evidence="1">
    <location>
        <position position="1431"/>
    </location>
</feature>
<feature type="glycosylation site" description="N-linked (GlcNAc...) asparagine" evidence="1">
    <location>
        <position position="1461"/>
    </location>
</feature>
<feature type="glycosylation site" description="N-linked (GlcNAc...) asparagine" evidence="1">
    <location>
        <position position="1829"/>
    </location>
</feature>
<feature type="glycosylation site" description="N-linked (GlcNAc...) asparagine" evidence="1">
    <location>
        <position position="2137"/>
    </location>
</feature>
<feature type="disulfide bond" evidence="2 75">
    <location>
        <begin position="172"/>
        <end position="198"/>
    </location>
</feature>
<feature type="disulfide bond" evidence="2 75">
    <location>
        <begin position="267"/>
        <end position="348"/>
    </location>
</feature>
<feature type="disulfide bond" evidence="2 75">
    <location>
        <begin position="547"/>
        <end position="573"/>
    </location>
</feature>
<feature type="disulfide bond" evidence="2 75">
    <location>
        <begin position="649"/>
        <end position="730"/>
    </location>
</feature>
<feature type="disulfide bond" evidence="2 75">
    <location>
        <begin position="1851"/>
        <end position="1877"/>
    </location>
</feature>
<feature type="disulfide bond" evidence="2 75">
    <location>
        <begin position="1918"/>
        <end position="1922"/>
    </location>
</feature>
<feature type="disulfide bond" evidence="2 75">
    <location>
        <begin position="2040"/>
        <end position="2188"/>
    </location>
</feature>
<feature type="disulfide bond" evidence="2">
    <location>
        <begin position="2193"/>
        <end position="2345"/>
    </location>
</feature>
<feature type="splice variant" id="VSP_042656" description="In isoform 2." evidence="96 97 98">
    <original>MQIELSTC</original>
    <variation>MRIQDPGK</variation>
    <location>
        <begin position="1"/>
        <end position="8"/>
    </location>
</feature>
<feature type="splice variant" id="VSP_042657" description="In isoform 2." evidence="96 97 98">
    <location>
        <begin position="9"/>
        <end position="2143"/>
    </location>
</feature>
<feature type="sequence variant" id="VAR_028447" description="In HEMA; dbSNP:rs2124174458." evidence="5">
    <original>S</original>
    <variation>R</variation>
    <location>
        <position position="19"/>
    </location>
</feature>
<feature type="sequence variant" id="VAR_028448" description="In HEMA; severe." evidence="24">
    <original>R</original>
    <variation>T</variation>
    <location>
        <position position="22"/>
    </location>
</feature>
<feature type="sequence variant" id="VAR_028449" description="In HEMA." evidence="7">
    <original>Y</original>
    <variation>C</variation>
    <location>
        <position position="24"/>
    </location>
</feature>
<feature type="sequence variant" id="VAR_028450" description="In HEMA; mild; dbSNP:rs2124174443." evidence="24">
    <original>Y</original>
    <variation>C</variation>
    <location>
        <position position="25"/>
    </location>
</feature>
<feature type="sequence variant" id="VAR_028451" description="In HEMA; severe." evidence="24">
    <original>L</original>
    <variation>P</variation>
    <location>
        <position position="26"/>
    </location>
</feature>
<feature type="sequence variant" id="VAR_001045" description="In HEMA; severe; dbSNP:rs137852377." evidence="7 33 81">
    <original>L</original>
    <variation>R</variation>
    <location>
        <position position="26"/>
    </location>
</feature>
<feature type="sequence variant" id="VAR_001046" description="In HEMA; mild; dbSNP:rs137852378." evidence="36">
    <original>E</original>
    <variation>V</variation>
    <location>
        <position position="30"/>
    </location>
</feature>
<feature type="sequence variant" id="VAR_028452" description="In HEMA; moderate." evidence="86">
    <original>W</original>
    <variation>G</variation>
    <location>
        <position position="33"/>
    </location>
</feature>
<feature type="sequence variant" id="VAR_028453" description="In HEMA; mild/severe; dbSNP:rs137852476." evidence="30">
    <original>Y</original>
    <variation>C</variation>
    <location>
        <position position="35"/>
    </location>
</feature>
<feature type="sequence variant" id="VAR_028454" description="In HEMA; severe." evidence="12">
    <original>Y</original>
    <variation>H</variation>
    <location>
        <position position="35"/>
    </location>
</feature>
<feature type="sequence variant" id="VAR_001047" description="In HEMA; severe/moderate; dbSNP:rs137852379." evidence="72">
    <original>G</original>
    <variation>C</variation>
    <location>
        <position position="41"/>
    </location>
</feature>
<feature type="sequence variant" id="VAR_028455" description="In HEMA; dbSNP:rs1261929809." evidence="81">
    <original>R</original>
    <variation>K</variation>
    <location>
        <position position="48"/>
    </location>
</feature>
<feature type="sequence variant" id="VAR_028456" description="In HEMA; severe." evidence="25">
    <original>K</original>
    <variation>E</variation>
    <location>
        <position position="67"/>
    </location>
</feature>
<feature type="sequence variant" id="VAR_028457" description="In HEMA." evidence="22">
    <original>K</original>
    <variation>N</variation>
    <location>
        <position position="67"/>
    </location>
</feature>
<feature type="sequence variant" id="VAR_028458" description="In HEMA; moderate-severe; dbSNP:rs944567323." evidence="14">
    <original>L</original>
    <variation>P</variation>
    <location>
        <position position="69"/>
    </location>
</feature>
<feature type="sequence variant" id="VAR_017330" description="In HEMA; moderate." evidence="34">
    <original>E</original>
    <variation>K</variation>
    <location>
        <position position="72"/>
    </location>
</feature>
<feature type="sequence variant" id="VAR_028459" description="In HEMA; moderate." evidence="76">
    <original>D</original>
    <variation>E</variation>
    <location>
        <position position="75"/>
    </location>
</feature>
<feature type="sequence variant" id="VAR_001049" description="In dbSNP:rs1800288.">
    <original>D</original>
    <variation>V</variation>
    <location>
        <position position="75"/>
    </location>
</feature>
<feature type="sequence variant" id="VAR_028460" description="In HEMA; moderate-severe." evidence="14">
    <original>D</original>
    <variation>Y</variation>
    <location>
        <position position="75"/>
    </location>
</feature>
<feature type="sequence variant" id="VAR_065303" description="In HEMA; dbSNP:rs781974394." evidence="46">
    <original>P</original>
    <variation>R</variation>
    <location>
        <position position="83"/>
    </location>
</feature>
<feature type="sequence variant" id="VAR_028461" description="In HEMA; severe." evidence="25">
    <location>
        <begin position="84"/>
        <end position="85"/>
    </location>
</feature>
<feature type="sequence variant" id="VAR_028462" description="In HEMA; moderate; dbSNP:rs1218133483." evidence="25">
    <location>
        <position position="85"/>
    </location>
</feature>
<feature type="sequence variant" id="VAR_001050" description="In HEMA; severe; dbSNP:rs137852380." evidence="19 81">
    <original>G</original>
    <variation>D</variation>
    <location>
        <position position="89"/>
    </location>
</feature>
<feature type="sequence variant" id="VAR_001051" description="In HEMA; mild; dbSNP:rs137852380." evidence="36">
    <original>G</original>
    <variation>V</variation>
    <location>
        <position position="89"/>
    </location>
</feature>
<feature type="sequence variant" id="VAR_028463" description="In HEMA; dbSNP:rs137852381." evidence="21">
    <original>G</original>
    <variation>A</variation>
    <location>
        <position position="92"/>
    </location>
</feature>
<feature type="sequence variant" id="VAR_028464" description="In HEMA; mild; dbSNP:rs137852381." evidence="36">
    <original>G</original>
    <variation>V</variation>
    <location>
        <position position="92"/>
    </location>
</feature>
<feature type="sequence variant" id="VAR_017331" description="In HEMA; dbSNP:rs2073621626." evidence="27">
    <original>A</original>
    <variation>P</variation>
    <location>
        <position position="97"/>
    </location>
</feature>
<feature type="sequence variant" id="VAR_028465" description="In HEMA; severe; dbSNP:rs1296842178." evidence="94">
    <original>E</original>
    <variation>K</variation>
    <location>
        <position position="98"/>
    </location>
</feature>
<feature type="sequence variant" id="VAR_001052" description="In HEMA; severe; dbSNP:rs137852382." evidence="19 81">
    <original>V</original>
    <variation>D</variation>
    <location>
        <position position="99"/>
    </location>
</feature>
<feature type="sequence variant" id="VAR_028466" description="In HEMA; severe; dbSNP:rs1312347909." evidence="94">
    <original>D</original>
    <variation>G</variation>
    <location>
        <position position="101"/>
    </location>
</feature>
<feature type="sequence variant" id="VAR_028467" description="In HEMA; severe sporadic." evidence="19">
    <original>D</original>
    <variation>H</variation>
    <location>
        <position position="101"/>
    </location>
</feature>
<feature type="sequence variant" id="VAR_028468" description="In HEMA." evidence="81">
    <original>D</original>
    <variation>V</variation>
    <location>
        <position position="101"/>
    </location>
</feature>
<feature type="sequence variant" id="VAR_001053" description="In HEMA; mild; dbSNP:rs137852383." evidence="36">
    <original>V</original>
    <variation>D</variation>
    <location>
        <position position="104"/>
    </location>
</feature>
<feature type="sequence variant" id="VAR_001054" description="In HEMA; mild; dbSNP:rs137852384." evidence="50">
    <original>K</original>
    <variation>T</variation>
    <location>
        <position position="108"/>
    </location>
</feature>
<feature type="sequence variant" id="VAR_001055" description="In HEMA; moderate; dbSNP:rs137852385." evidence="50">
    <original>M</original>
    <variation>V</variation>
    <location>
        <position position="110"/>
    </location>
</feature>
<feature type="sequence variant" id="VAR_028469" description="In HEMA; severe; dbSNP:rs1255132066." evidence="41">
    <original>A</original>
    <variation>T</variation>
    <location>
        <position position="111"/>
    </location>
</feature>
<feature type="sequence variant" id="VAR_028470" description="In HEMA; moderate." evidence="24">
    <original>A</original>
    <variation>V</variation>
    <location>
        <position position="111"/>
    </location>
</feature>
<feature type="sequence variant" id="VAR_028471" description="In HEMA; mild." evidence="74">
    <original>H</original>
    <variation>R</variation>
    <location>
        <position position="113"/>
    </location>
</feature>
<feature type="sequence variant" id="VAR_028472" description="In HEMA; dbSNP:rs2073620893." evidence="7">
    <original>H</original>
    <variation>Y</variation>
    <location>
        <position position="113"/>
    </location>
</feature>
<feature type="sequence variant" id="VAR_028473" description="In HEMA; mild; dbSNP:rs782481755." evidence="22">
    <original>L</original>
    <variation>F</variation>
    <location>
        <position position="117"/>
    </location>
</feature>
<feature type="sequence variant" id="VAR_001056" description="In HEMA; severe; dbSNP:rs137852386." evidence="81">
    <original>L</original>
    <variation>R</variation>
    <location>
        <position position="117"/>
    </location>
</feature>
<feature type="sequence variant" id="VAR_028474" description="In HEMA." evidence="7">
    <original>G</original>
    <variation>S</variation>
    <location>
        <position position="121"/>
    </location>
</feature>
<feature type="sequence variant" id="VAR_001057" description="In HEMA; severe." evidence="87">
    <original>E</original>
    <variation>V</variation>
    <location>
        <position position="129"/>
    </location>
</feature>
<feature type="sequence variant" id="VAR_001058" description="In HEMA; severe; dbSNP:rs137852387." evidence="72">
    <original>G</original>
    <variation>R</variation>
    <location>
        <position position="130"/>
    </location>
</feature>
<feature type="sequence variant" id="VAR_001059" description="In HEMA; severe; dbSNP:rs137852388." evidence="20 91">
    <original>E</original>
    <variation>D</variation>
    <location>
        <position position="132"/>
    </location>
</feature>
<feature type="sequence variant" id="VAR_001060" description="In HEMA; mild; dbSNP:rs137852389." evidence="92 94">
    <original>Y</original>
    <variation>C</variation>
    <location>
        <position position="133"/>
    </location>
</feature>
<feature type="sequence variant" id="VAR_001061" description="In HEMA; severe; dbSNP:rs137852390." evidence="81">
    <original>D</original>
    <variation>G</variation>
    <location>
        <position position="135"/>
    </location>
</feature>
<feature type="sequence variant" id="VAR_028475" description="In HEMA; severe sporadic; dbSNP:rs2073597882." evidence="19">
    <original>D</original>
    <variation>Y</variation>
    <location>
        <position position="135"/>
    </location>
</feature>
<feature type="sequence variant" id="VAR_028476" description="In HEMA; severe." evidence="22">
    <original>T</original>
    <variation>A</variation>
    <location>
        <position position="137"/>
    </location>
</feature>
<feature type="sequence variant" id="VAR_001062" description="In HEMA; moderate; dbSNP:rs137852391." evidence="72">
    <original>T</original>
    <variation>I</variation>
    <location>
        <position position="137"/>
    </location>
</feature>
<feature type="sequence variant" id="VAR_028477" description="In HEMA; mild." evidence="24">
    <original>S</original>
    <variation>R</variation>
    <location>
        <position position="138"/>
    </location>
</feature>
<feature type="sequence variant" id="VAR_028478" description="In HEMA; severe familial; dbSNP:rs1388356765." evidence="20">
    <original>E</original>
    <variation>K</variation>
    <location>
        <position position="141"/>
    </location>
</feature>
<feature type="sequence variant" id="VAR_028479" description="In HEMA; moderate; dbSNP:rs1433420305." evidence="94">
    <original>D</original>
    <variation>H</variation>
    <location>
        <position position="145"/>
    </location>
</feature>
<feature type="sequence variant" id="VAR_028480" description="In HEMA; severe." evidence="26">
    <original>V</original>
    <variation>D</variation>
    <location>
        <position position="147"/>
    </location>
</feature>
<feature type="sequence variant" id="VAR_017332" description="In HEMA; moderate; dbSNP:rs1281943689." evidence="34">
    <original>Y</original>
    <variation>H</variation>
    <location>
        <position position="155"/>
    </location>
</feature>
<feature type="sequence variant" id="VAR_028481" description="In HEMA; moderate; dbSNP:rs2124141036." evidence="94">
    <original>V</original>
    <variation>A</variation>
    <location>
        <position position="159"/>
    </location>
</feature>
<feature type="sequence variant" id="VAR_028482" description="In HEMA; moderate." evidence="94">
    <original>N</original>
    <variation>K</variation>
    <location>
        <position position="163"/>
    </location>
</feature>
<feature type="sequence variant" id="VAR_028483" description="In HEMA; moderate; dbSNP:rs137852392." evidence="94">
    <original>G</original>
    <variation>D</variation>
    <location>
        <position position="164"/>
    </location>
</feature>
<feature type="sequence variant" id="VAR_001063" description="In HEMA; mild; dbSNP:rs137852392." evidence="36">
    <original>G</original>
    <variation>V</variation>
    <location>
        <position position="164"/>
    </location>
</feature>
<feature type="sequence variant" id="VAR_001064" description="In HEMA; severe; dbSNP:rs137852393." evidence="72">
    <original>P</original>
    <variation>S</variation>
    <location>
        <position position="165"/>
    </location>
</feature>
<feature type="sequence variant" id="VAR_028484" description="In HEMA; dbSNP:rs1473856613." evidence="7 29">
    <original>C</original>
    <variation>W</variation>
    <location>
        <position position="172"/>
    </location>
</feature>
<feature type="sequence variant" id="VAR_028485" description="In HEMA." evidence="7">
    <original>S</original>
    <variation>P</variation>
    <location>
        <position position="176"/>
    </location>
</feature>
<feature type="sequence variant" id="VAR_028486" description="In HEMA; moderate; dbSNP:rs1455943875." evidence="94">
    <original>S</original>
    <variation>P</variation>
    <location>
        <position position="179"/>
    </location>
</feature>
<feature type="sequence variant" id="VAR_017333" description="In HEMA; mild." evidence="34">
    <original>V</original>
    <variation>E</variation>
    <location>
        <position position="181"/>
    </location>
</feature>
<feature type="sequence variant" id="VAR_001065" description="In HEMA; mild/moderate; dbSNP:rs137852394." evidence="7 23 25 36 76 94">
    <original>V</original>
    <variation>M</variation>
    <location>
        <position position="181"/>
    </location>
</feature>
<feature type="sequence variant" id="VAR_001066" description="In HEMA; mild; dbSNP:rs137852395." evidence="52">
    <original>K</original>
    <variation>T</variation>
    <location>
        <position position="185"/>
    </location>
</feature>
<feature type="sequence variant" id="VAR_028487" description="In HEMA; mild." evidence="24">
    <original>D</original>
    <variation>G</variation>
    <location>
        <position position="186"/>
    </location>
</feature>
<feature type="sequence variant" id="VAR_065304" description="In HEMA." evidence="46">
    <original>D</original>
    <variation>N</variation>
    <location>
        <position position="186"/>
    </location>
</feature>
<feature type="sequence variant" id="VAR_028488" description="In HEMA; severe." evidence="25">
    <original>D</original>
    <variation>Y</variation>
    <location>
        <position position="186"/>
    </location>
</feature>
<feature type="sequence variant" id="VAR_001067" description="In HEMA; moderate; dbSNP:rs137852367." evidence="64 80">
    <original>S</original>
    <variation>L</variation>
    <location>
        <position position="189"/>
    </location>
</feature>
<feature type="sequence variant" id="VAR_065305" description="In HEMA; dbSNP:rs1341730743." evidence="59">
    <original>L</original>
    <variation>F</variation>
    <location>
        <position position="191"/>
    </location>
</feature>
<feature type="sequence variant" id="VAR_028489" description="In HEMA; severe familial." evidence="18">
    <original>G</original>
    <variation>R</variation>
    <location>
        <position position="193"/>
    </location>
</feature>
<feature type="sequence variant" id="VAR_065306" description="In HEMA." evidence="46">
    <original>L</original>
    <variation>P</variation>
    <location>
        <position position="195"/>
    </location>
</feature>
<feature type="sequence variant" id="VAR_028490" description="In HEMA; severe; dbSNP:rs137852475." evidence="31">
    <original>C</original>
    <variation>G</variation>
    <location>
        <position position="198"/>
    </location>
</feature>
<feature type="sequence variant" id="VAR_028491" description="In HEMA; mild; dbSNP:rs1603436218." evidence="74">
    <original>S</original>
    <variation>N</variation>
    <location>
        <position position="202"/>
    </location>
</feature>
<feature type="sequence variant" id="VAR_008123" description="In HEMA; mild; dbSNP:rs1603436217." evidence="8">
    <original>S</original>
    <variation>R</variation>
    <location>
        <position position="202"/>
    </location>
</feature>
<feature type="sequence variant" id="VAR_028492" description="In HEMA; dbSNP:rs2073563995." evidence="7">
    <original>F</original>
    <variation>V</variation>
    <location>
        <position position="214"/>
    </location>
</feature>
<feature type="sequence variant" id="VAR_028493" description="In HEMA; moderate." evidence="77">
    <original>L</original>
    <variation>H</variation>
    <location>
        <position position="217"/>
    </location>
</feature>
<feature type="sequence variant" id="VAR_028494" description="In HEMA." evidence="81">
    <original>A</original>
    <variation>D</variation>
    <location>
        <position position="219"/>
    </location>
</feature>
<feature type="sequence variant" id="VAR_028495" description="In HEMA; dbSNP:rs2073563836." evidence="7">
    <original>A</original>
    <variation>T</variation>
    <location>
        <position position="219"/>
    </location>
</feature>
<feature type="sequence variant" id="VAR_028496" description="In HEMA; mild; dbSNP:rs2073563801." evidence="25">
    <original>V</original>
    <variation>G</variation>
    <location>
        <position position="220"/>
    </location>
</feature>
<feature type="sequence variant" id="VAR_001068" description="In HEMA; moderate; dbSNP:rs137852396." evidence="72">
    <original>D</original>
    <variation>V</variation>
    <location>
        <position position="222"/>
    </location>
</feature>
<feature type="sequence variant" id="VAR_028497" description="In HEMA; severe." evidence="89">
    <original>E</original>
    <variation>K</variation>
    <location>
        <position position="223"/>
    </location>
</feature>
<feature type="sequence variant" id="VAR_001069" description="In HEMA; moderate; dbSNP:rs137852397." evidence="52">
    <original>G</original>
    <variation>W</variation>
    <location>
        <position position="224"/>
    </location>
</feature>
<feature type="sequence variant" id="VAR_028498" description="In HEMA; moderate; dbSNP:rs1464962436." evidence="32">
    <original>T</original>
    <variation>I</variation>
    <location>
        <position position="252"/>
    </location>
</feature>
<feature type="sequence variant" id="VAR_001070" description="In HEMA; severe." evidence="91">
    <original>V</original>
    <variation>F</variation>
    <location>
        <position position="253"/>
    </location>
</feature>
<feature type="sequence variant" id="VAR_017334" description="In HEMA; severe." evidence="34">
    <original>N</original>
    <variation>I</variation>
    <location>
        <position position="254"/>
    </location>
</feature>
<feature type="sequence variant" id="VAR_015127" description="In HEMA; severe." evidence="17">
    <original>G</original>
    <variation>V</variation>
    <location>
        <position position="255"/>
    </location>
</feature>
<feature type="sequence variant" id="VAR_065307" description="In HEMA." evidence="46">
    <original>L</original>
    <variation>P</variation>
    <location>
        <position position="261"/>
    </location>
</feature>
<feature type="sequence variant" id="VAR_028499" description="In HEMA; moderate." evidence="25">
    <original>P</original>
    <variation>L</variation>
    <location>
        <position position="262"/>
    </location>
</feature>
<feature type="sequence variant" id="VAR_028500" description="In HEMA; dbSNP:rs1406126933." evidence="80">
    <original>G</original>
    <variation>S</variation>
    <location>
        <position position="263"/>
    </location>
</feature>
<feature type="sequence variant" id="VAR_001071" description="In HEMA; severe; dbSNP:rs137852398." evidence="72">
    <original>G</original>
    <variation>E</variation>
    <location>
        <position position="266"/>
    </location>
</feature>
<feature type="sequence variant" id="VAR_028501" description="In HEMA; moderate; dbSNP:rs1208703993." evidence="22">
    <original>C</original>
    <variation>Y</variation>
    <location>
        <position position="267"/>
    </location>
</feature>
<feature type="sequence variant" id="VAR_028502" description="In HEMA; dbSNP:rs34371500." evidence="85">
    <original>W</original>
    <variation>C</variation>
    <location>
        <position position="274"/>
    </location>
</feature>
<feature type="sequence variant" id="VAR_028503" description="In HEMA; mild." evidence="74">
    <original>H</original>
    <variation>L</variation>
    <location>
        <position position="275"/>
    </location>
</feature>
<feature type="sequence variant" id="VAR_001072" description="In HEMA; severe; dbSNP:rs137852399." evidence="81">
    <original>G</original>
    <variation>R</variation>
    <location>
        <position position="278"/>
    </location>
</feature>
<feature type="sequence variant" id="VAR_065308" description="In HEMA." evidence="46">
    <original>G</original>
    <variation>D</variation>
    <location>
        <position position="280"/>
    </location>
</feature>
<feature type="sequence variant" id="VAR_028504" description="In HEMA; moderate." evidence="24">
    <original>E</original>
    <variation>K</variation>
    <location>
        <position position="284"/>
    </location>
</feature>
<feature type="sequence variant" id="VAR_001073" description="In HEMA; mild; dbSNP:rs137852400." evidence="50 74">
    <original>V</original>
    <variation>G</variation>
    <location>
        <position position="285"/>
    </location>
</feature>
<feature type="sequence variant" id="VAR_001074" description="In HEMA; mild; dbSNP:rs137852359." evidence="68">
    <original>E</original>
    <variation>G</variation>
    <location>
        <position position="291"/>
    </location>
</feature>
<feature type="sequence variant" id="VAR_028505" description="In HEMA; mild; dbSNP:rs868988809." evidence="7 29 39 94">
    <original>E</original>
    <variation>K</variation>
    <location>
        <position position="291"/>
    </location>
</feature>
<feature type="sequence variant" id="VAR_001075" description="In HEMA; moderate; dbSNP:rs137852401." evidence="72">
    <original>T</original>
    <variation>I</variation>
    <location>
        <position position="294"/>
    </location>
</feature>
<feature type="sequence variant" id="VAR_028506" description="In HEMA; moderate." evidence="12">
    <original>F</original>
    <variation>L</variation>
    <location>
        <position position="295"/>
    </location>
</feature>
<feature type="sequence variant" id="VAR_028507" description="In HEMA; mild; dbSNP:rs2073443675." evidence="94">
    <original>V</original>
    <variation>A</variation>
    <location>
        <position position="297"/>
    </location>
</feature>
<feature type="sequence variant" id="VAR_001076" description="In HEMA; mild; dbSNP:rs137852402." evidence="77 78">
    <original>N</original>
    <variation>I</variation>
    <location>
        <position position="299"/>
    </location>
</feature>
<feature type="sequence variant" id="VAR_028508" description="In HEMA; severe/mild; dbSNP:rs1401805753." evidence="22 26 29 74">
    <original>R</original>
    <variation>C</variation>
    <location>
        <position position="301"/>
    </location>
</feature>
<feature type="sequence variant" id="VAR_001077" description="In HEMA; severe; dbSNP:rs137852403." evidence="5 8 22 50">
    <original>R</original>
    <variation>H</variation>
    <location>
        <position position="301"/>
    </location>
</feature>
<feature type="sequence variant" id="VAR_001078" description="In HEMA; severe; dbSNP:rs137852403." evidence="81">
    <original>R</original>
    <variation>L</variation>
    <location>
        <position position="301"/>
    </location>
</feature>
<feature type="sequence variant" id="VAR_028509" description="In HEMA." evidence="81">
    <location>
        <position position="302"/>
    </location>
</feature>
<feature type="sequence variant" id="VAR_028510" description="In HEMA; mild." evidence="82 94">
    <original>A</original>
    <variation>E</variation>
    <location>
        <position position="303"/>
    </location>
</feature>
<feature type="sequence variant" id="VAR_028511" description="In HEMA; mild; dbSNP:rs2073443358." evidence="83">
    <original>A</original>
    <variation>P</variation>
    <location>
        <position position="303"/>
    </location>
</feature>
<feature type="sequence variant" id="VAR_028512" description="In HEMA; moderate." evidence="12">
    <original>I</original>
    <variation>S</variation>
    <location>
        <position position="307"/>
    </location>
</feature>
<feature type="sequence variant" id="VAR_001079" description="In HEMA; moderate; dbSNP:rs137852404." evidence="5 79 82">
    <original>S</original>
    <variation>L</variation>
    <location>
        <position position="308"/>
    </location>
</feature>
<feature type="sequence variant" id="VAR_001080" description="In HEMA; mild/moderate; dbSNP:rs137852405." evidence="50 94">
    <original>F</original>
    <variation>S</variation>
    <location>
        <position position="312"/>
    </location>
</feature>
<feature type="sequence variant" id="VAR_001081" description="In HEMA; mild; dbSNP:rs137852406." evidence="7 52">
    <original>T</original>
    <variation>A</variation>
    <location>
        <position position="314"/>
    </location>
</feature>
<feature type="sequence variant" id="VAR_001082" description="In HEMA; moderate." evidence="91">
    <original>T</original>
    <variation>I</variation>
    <location>
        <position position="314"/>
    </location>
</feature>
<feature type="sequence variant" id="VAR_028513" description="In HEMA." evidence="7">
    <original>A</original>
    <variation>V</variation>
    <location>
        <position position="315"/>
    </location>
</feature>
<feature type="sequence variant" id="VAR_028514" description="In HEMA; severe.">
    <location>
        <position position="320"/>
    </location>
</feature>
<feature type="sequence variant" id="VAR_015128" description="In HEMA; severe." evidence="17">
    <original>G</original>
    <variation>E</variation>
    <location>
        <position position="323"/>
    </location>
</feature>
<feature type="sequence variant" id="VAR_028515" description="In HEMA." evidence="33">
    <original>L</original>
    <variation>P</variation>
    <location>
        <position position="326"/>
    </location>
</feature>
<feature type="sequence variant" id="VAR_001083" description="In HEMA; severe; dbSNP:rs137852407." evidence="19 81">
    <original>L</original>
    <variation>P</variation>
    <location>
        <position position="327"/>
    </location>
</feature>
<feature type="sequence variant" id="VAR_028516" description="In HEMA; mild; dbSNP:rs1603435395." evidence="24">
    <original>L</original>
    <variation>V</variation>
    <location>
        <position position="327"/>
    </location>
</feature>
<feature type="sequence variant" id="VAR_028517" description="In HEMA; dbSNP:rs137852409." evidence="33">
    <original>C</original>
    <variation>F</variation>
    <location>
        <position position="329"/>
    </location>
</feature>
<feature type="sequence variant" id="VAR_001084" description="In HEMA; mild." evidence="91">
    <original>I</original>
    <variation>V</variation>
    <location>
        <position position="331"/>
    </location>
</feature>
<feature type="sequence variant" id="VAR_028518" description="In HEMA; moderate." evidence="23">
    <original>M</original>
    <variation>T</variation>
    <location>
        <position position="339"/>
    </location>
</feature>
<feature type="sequence variant" id="VAR_028519" description="In HEMA; dbSNP:rs781954986." evidence="7">
    <original>E</original>
    <variation>K</variation>
    <location>
        <position position="340"/>
    </location>
</feature>
<feature type="sequence variant" id="VAR_028520" description="In HEMA; dbSNP:rs1189348665." evidence="29">
    <original>V</original>
    <variation>A</variation>
    <location>
        <position position="345"/>
    </location>
</feature>
<feature type="sequence variant" id="VAR_001085" description="In HEMA; severe; dbSNP:rs137852371." evidence="58">
    <original>V</original>
    <variation>L</variation>
    <location>
        <position position="345"/>
    </location>
</feature>
<feature type="sequence variant" id="VAR_001086" description="In HEMA; severe; dbSNP:rs137852370." evidence="58">
    <original>C</original>
    <variation>R</variation>
    <location>
        <position position="348"/>
    </location>
</feature>
<feature type="sequence variant" id="VAR_001087" description="In HEMA; moderate; dbSNP:rs137852410." evidence="72">
    <original>C</original>
    <variation>S</variation>
    <location>
        <position position="348"/>
    </location>
</feature>
<feature type="sequence variant" id="VAR_001088" description="In HEMA; mild/severe." evidence="22">
    <original>C</original>
    <variation>Y</variation>
    <location>
        <position position="348"/>
    </location>
</feature>
<feature type="sequence variant" id="VAR_028521" description="In HEMA; mild; dbSNP:rs375241473." evidence="24 42">
    <original>Y</original>
    <variation>C</variation>
    <location>
        <position position="365"/>
    </location>
</feature>
<feature type="sequence variant" id="VAR_001089" description="In HEMA; Okayama; moderate/severe; abolishes the normal cleavage by thrombin; dbSNP:rs137852364." evidence="17 18 53 63">
    <original>R</original>
    <variation>C</variation>
    <location>
        <position position="391"/>
    </location>
</feature>
<feature type="sequence variant" id="VAR_001090" description="In HEMA; Kumamoto; mild/moderate; abolishes the normal cleavage by thrombin; dbSNP:rs28935499." evidence="29 33 61 79 94">
    <original>R</original>
    <variation>H</variation>
    <location>
        <position position="391"/>
    </location>
</feature>
<feature type="sequence variant" id="VAR_001091" description="In HEMA; severe; abolishes the normal cleavage by thrombin." evidence="72">
    <original>R</original>
    <variation>P</variation>
    <location>
        <position position="391"/>
    </location>
</feature>
<feature type="sequence variant" id="VAR_001092" description="In HEMA; mild; abolishes normal cleavage by thrombin; dbSNP:rs28933668." evidence="72">
    <original>S</original>
    <variation>L</variation>
    <location>
        <position position="392"/>
    </location>
</feature>
<feature type="sequence variant" id="VAR_001093" description="In HEMA; mild; dbSNP:rs28933669." evidence="72">
    <original>S</original>
    <variation>P</variation>
    <location>
        <position position="392"/>
    </location>
</feature>
<feature type="sequence variant" id="VAR_065309" description="In HEMA." evidence="46">
    <original>A</original>
    <variation>S</variation>
    <location>
        <position position="394"/>
    </location>
</feature>
<feature type="sequence variant" id="VAR_028522" description="In HEMA." evidence="33">
    <original>W</original>
    <variation>G</variation>
    <location>
        <position position="401"/>
    </location>
</feature>
<feature type="sequence variant" id="VAR_028523" description="In HEMA; uncertain significance." evidence="7">
    <original>I</original>
    <variation>F</variation>
    <location>
        <position position="405"/>
    </location>
</feature>
<feature type="sequence variant" id="VAR_001094" description="In HEMA; severe; dbSNP:rs28933670." evidence="72">
    <original>I</original>
    <variation>S</variation>
    <location>
        <position position="405"/>
    </location>
</feature>
<feature type="sequence variant" id="VAR_001095" description="In HEMA; severe/moderate; dbSNP:rs28933671." evidence="19">
    <original>E</original>
    <variation>G</variation>
    <location>
        <position position="409"/>
    </location>
</feature>
<feature type="sequence variant" id="VAR_028524" description="In HEMA." evidence="7">
    <original>W</original>
    <variation>G</variation>
    <location>
        <position position="412"/>
    </location>
</feature>
<feature type="sequence variant" id="VAR_028525" description="In HEMA; severe; dbSNP:rs1234456704." evidence="25">
    <original>W</original>
    <variation>R</variation>
    <location>
        <position position="412"/>
    </location>
</feature>
<feature type="sequence variant" id="VAR_028526" description="In HEMA; mild; dbSNP:rs782486949." evidence="94">
    <original>K</original>
    <variation>I</variation>
    <location>
        <position position="427"/>
    </location>
</feature>
<feature type="sequence variant" id="VAR_001096" description="In HEMA; moderate; dbSNP:rs28933672." evidence="52">
    <original>L</original>
    <variation>F</variation>
    <location>
        <position position="431"/>
    </location>
</feature>
<feature type="sequence variant" id="VAR_028527" description="In HEMA; moderate." evidence="24">
    <original>L</original>
    <variation>S</variation>
    <location>
        <position position="431"/>
    </location>
</feature>
<feature type="sequence variant" id="VAR_028528" description="In HEMA; severe." evidence="24">
    <original>R</original>
    <variation>P</variation>
    <location>
        <position position="437"/>
    </location>
</feature>
<feature type="sequence variant" id="VAR_028529" description="In HEMA; mild; dbSNP:rs2073422011." evidence="94">
    <original>R</original>
    <variation>W</variation>
    <location>
        <position position="437"/>
    </location>
</feature>
<feature type="sequence variant" id="VAR_028530" description="In HEMA; not severe; dbSNP:rs1258333672." evidence="25">
    <original>I</original>
    <variation>F</variation>
    <location>
        <position position="438"/>
    </location>
</feature>
<feature type="sequence variant" id="VAR_028531" description="In HEMA; severe; dbSNP:rs1362305882." evidence="25">
    <original>G</original>
    <variation>D</variation>
    <location>
        <position position="439"/>
    </location>
</feature>
<feature type="sequence variant" id="VAR_017335" description="In HEMA; moderate; dbSNP:rs2073421914." evidence="34 65">
    <original>G</original>
    <variation>S</variation>
    <location>
        <position position="439"/>
    </location>
</feature>
<feature type="sequence variant" id="VAR_001097" description="In HEMA; severe; dbSNP:rs1362305882." evidence="29 93">
    <original>G</original>
    <variation>V</variation>
    <location>
        <position position="439"/>
    </location>
</feature>
<feature type="sequence variant" id="VAR_028532" description="In HEMA; dbSNP:rs1441830456." evidence="29">
    <original>Y</original>
    <variation>C</variation>
    <location>
        <position position="442"/>
    </location>
</feature>
<feature type="sequence variant" id="VAR_001098" description="In HEMA; severe; dbSNP:rs28937272." evidence="50">
    <original>K</original>
    <variation>R</variation>
    <location>
        <position position="444"/>
    </location>
</feature>
<feature type="sequence variant" id="VAR_028533" description="In HEMA; severe." evidence="41">
    <original>Y</original>
    <variation>D</variation>
    <location>
        <position position="450"/>
    </location>
</feature>
<feature type="sequence variant" id="VAR_001099" description="In HEMA; mild/moderate; dbSNP:rs111033616." evidence="77 78 94">
    <original>Y</original>
    <variation>N</variation>
    <location>
        <position position="450"/>
    </location>
</feature>
<feature type="sequence variant" id="VAR_028534" description="In HEMA; mild; dbSNP:rs1557281952." evidence="94">
    <original>T</original>
    <variation>I</variation>
    <location>
        <position position="454"/>
    </location>
</feature>
<feature type="sequence variant" id="VAR_028535" description="In HEMA; mild-moderate/severe; dbSNP:rs1603435217." evidence="23 24">
    <original>F</original>
    <variation>C</variation>
    <location>
        <position position="455"/>
    </location>
</feature>
<feature type="sequence variant" id="VAR_028536" description="In HEMA; severe sporadic; dbSNP:rs1304348198." evidence="20">
    <original>G</original>
    <variation>E</variation>
    <location>
        <position position="466"/>
    </location>
</feature>
<feature type="sequence variant" id="VAR_028537" description="In HEMA; mild; dbSNP:rs1240470740." evidence="29 94">
    <original>P</original>
    <variation>L</variation>
    <location>
        <position position="470"/>
    </location>
</feature>
<feature type="sequence variant" id="VAR_028538" description="In HEMA; mild; dbSNP:rs1240470740." evidence="25">
    <original>P</original>
    <variation>R</variation>
    <location>
        <position position="470"/>
    </location>
</feature>
<feature type="sequence variant" id="VAR_028539" description="In HEMA; mild sporadic." evidence="7 20 42">
    <original>P</original>
    <variation>T</variation>
    <location>
        <position position="470"/>
    </location>
</feature>
<feature type="sequence variant" id="VAR_028540" description="In HEMA; dbSNP:rs2073421004." evidence="7">
    <original>G</original>
    <variation>E</variation>
    <location>
        <position position="474"/>
    </location>
</feature>
<feature type="sequence variant" id="VAR_001100" description="In HEMA; severe; dbSNP:rs1345538633." evidence="91">
    <original>G</original>
    <variation>R</variation>
    <location>
        <position position="474"/>
    </location>
</feature>
<feature type="sequence variant" id="VAR_065310" description="In HEMA." evidence="46">
    <original>G</original>
    <variation>V</variation>
    <location>
        <position position="474"/>
    </location>
</feature>
<feature type="sequence variant" id="VAR_028541" description="In HEMA; moderate." evidence="22">
    <original>E</original>
    <variation>K</variation>
    <location>
        <position position="475"/>
    </location>
</feature>
<feature type="sequence variant" id="VAR_028542" description="In HEMA; moderate; dbSNP:rs2124105158." evidence="28">
    <original>G</original>
    <variation>V</variation>
    <location>
        <position position="477"/>
    </location>
</feature>
<feature type="sequence variant" id="VAR_028543" description="In HEMA." evidence="7">
    <original>D</original>
    <variation>N</variation>
    <location>
        <position position="478"/>
    </location>
</feature>
<feature type="sequence variant" id="VAR_028545" description="In HEMA." evidence="7">
    <original>F</original>
    <variation>C</variation>
    <location>
        <position position="484"/>
    </location>
</feature>
<feature type="sequence variant" id="VAR_001101" description="In HEMA; moderate; dbSNP:rs782485864." evidence="72">
    <original>A</original>
    <variation>G</variation>
    <location>
        <position position="488"/>
    </location>
</feature>
<feature type="sequence variant" id="VAR_028546" description="In HEMA; dbSNP:rs1603435026." evidence="7">
    <original>R</original>
    <variation>G</variation>
    <location>
        <position position="490"/>
    </location>
</feature>
<feature type="sequence variant" id="VAR_001103" description="In HEMA; moderate; dbSNP:rs137852412." evidence="52 85">
    <original>Y</original>
    <variation>C</variation>
    <location>
        <position position="492"/>
    </location>
</feature>
<feature type="sequence variant" id="VAR_001102" description="In HEMA; mild; dbSNP:rs137852411." evidence="50">
    <original>Y</original>
    <variation>H</variation>
    <location>
        <position position="492"/>
    </location>
</feature>
<feature type="sequence variant" id="VAR_001104" description="In HEMA; mild; dbSNP:rs137852413." evidence="72">
    <original>I</original>
    <variation>T</variation>
    <location>
        <position position="494"/>
    </location>
</feature>
<feature type="sequence variant" id="VAR_065311" description="In HEMA." evidence="46">
    <original>P</original>
    <variation>R</variation>
    <location>
        <position position="496"/>
    </location>
</feature>
<feature type="sequence variant" id="VAR_001105" description="In HEMA; severe/moderate; dbSNP:rs137852414." evidence="7 19 85 91 92">
    <original>G</original>
    <variation>R</variation>
    <location>
        <position position="498"/>
    </location>
</feature>
<feature type="sequence variant" id="VAR_028547" description="In HEMA; benign; dbSNP:rs35383156." evidence="20">
    <original>R</original>
    <variation>H</variation>
    <location>
        <position position="503"/>
    </location>
</feature>
<feature type="sequence variant" id="VAR_028548" description="In HEMA; moderate; dbSNP:rs1269117966." evidence="25">
    <original>G</original>
    <variation>S</variation>
    <location>
        <position position="513"/>
    </location>
</feature>
<feature type="sequence variant" id="VAR_065312" description="In HEMA; dbSNP:rs1603434867." evidence="46">
    <original>G</original>
    <variation>V</variation>
    <location>
        <position position="513"/>
    </location>
</feature>
<feature type="sequence variant" id="VAR_028549" description="In HEMA; requires 2 nucleotide substitutions." evidence="33">
    <original>I</original>
    <variation>Y</variation>
    <location>
        <position position="522"/>
    </location>
</feature>
<feature type="sequence variant" id="VAR_017336" description="In HEMA; moderate." evidence="34">
    <original>K</original>
    <variation>E</variation>
    <location>
        <position position="529"/>
    </location>
</feature>
<feature type="sequence variant" id="VAR_028550" description="In HEMA." evidence="29">
    <original>W</original>
    <variation>G</variation>
    <location>
        <position position="532"/>
    </location>
</feature>
<feature type="sequence variant" id="VAR_028551" description="In HEMA." evidence="33">
    <original>P</original>
    <variation>T</variation>
    <location>
        <position position="540"/>
    </location>
</feature>
<feature type="sequence variant" id="VAR_028552" description="In HEMA; mild; dbSNP:rs139526001." evidence="25 42 94">
    <original>T</original>
    <variation>S</variation>
    <location>
        <position position="541"/>
    </location>
</feature>
<feature type="sequence variant" id="VAR_001106" description="In HEMA; moderate; dbSNP:rs137852415." evidence="72">
    <original>D</original>
    <variation>N</variation>
    <location>
        <position position="544"/>
    </location>
</feature>
<feature type="sequence variant" id="VAR_001107" description="In HEMA; mild; dbSNP:rs137852416." evidence="7 23 33 52 77 79 83 94">
    <original>R</original>
    <variation>W</variation>
    <location>
        <position position="546"/>
    </location>
</feature>
<feature type="sequence variant" id="VAR_001108" description="In HEMA; mild/moderate; dbSNP:rs137852417." evidence="7 17 18 25 36 52 92 94">
    <original>R</original>
    <variation>C</variation>
    <location>
        <position position="550"/>
    </location>
</feature>
<feature type="sequence variant" id="VAR_001109" description="In HEMA; mild; dbSNP:rs137852417." evidence="52 88">
    <original>R</original>
    <variation>G</variation>
    <location>
        <position position="550"/>
    </location>
</feature>
<feature type="sequence variant" id="VAR_001110" description="In HEMA; mild/moderate; dbSNP:rs137852418." evidence="82 83 85 94">
    <original>R</original>
    <variation>H</variation>
    <location>
        <position position="550"/>
    </location>
</feature>
<feature type="sequence variant" id="VAR_028553" description="In HEMA; severe; dbSNP:rs2073368558." evidence="94">
    <original>S</original>
    <variation>P</variation>
    <location>
        <position position="553"/>
    </location>
</feature>
<feature type="sequence variant" id="VAR_028554" description="In HEMA; moderate." evidence="23">
    <original>S</original>
    <variation>C</variation>
    <location>
        <position position="554"/>
    </location>
</feature>
<feature type="sequence variant" id="VAR_001111" description="In HEMA; mild; dbSNP:rs137852419." evidence="25 36">
    <original>S</original>
    <variation>G</variation>
    <location>
        <position position="554"/>
    </location>
</feature>
<feature type="sequence variant" id="VAR_001112" description="In HEMA; moderate." evidence="92">
    <original>V</original>
    <variation>D</variation>
    <location>
        <position position="556"/>
    </location>
</feature>
<feature type="sequence variant" id="VAR_028555" description="In HEMA; mild." evidence="94">
    <original>R</original>
    <variation>T</variation>
    <location>
        <position position="560"/>
    </location>
</feature>
<feature type="sequence variant" id="VAR_028556" description="In HEMA; severe; dbSNP:rs137852420." evidence="50">
    <original>D</original>
    <variation>G</variation>
    <location>
        <position position="561"/>
    </location>
</feature>
<feature type="sequence variant" id="VAR_028557" description="In HEMA." evidence="7">
    <original>D</original>
    <variation>H</variation>
    <location>
        <position position="561"/>
    </location>
</feature>
<feature type="sequence variant" id="VAR_008967" description="In HEMA; severe." evidence="10 32">
    <original>D</original>
    <variation>Y</variation>
    <location>
        <position position="561"/>
    </location>
</feature>
<feature type="sequence variant" id="VAR_017337" description="In HEMA; mild; dbSNP:rs782193428." evidence="34">
    <original>I</original>
    <variation>T</variation>
    <location>
        <position position="567"/>
    </location>
</feature>
<feature type="sequence variant" id="VAR_065313" description="In HEMA." evidence="46">
    <original>P</original>
    <variation>R</variation>
    <location>
        <position position="569"/>
    </location>
</feature>
<feature type="sequence variant" id="VAR_001113" description="In HEMA; mild; dbSNP:rs28937282." evidence="79">
    <original>S</original>
    <variation>F</variation>
    <location>
        <position position="577"/>
    </location>
</feature>
<feature type="sequence variant" id="VAR_028558" description="In HEMA; mild." evidence="94">
    <original>V</original>
    <variation>A</variation>
    <location>
        <position position="578"/>
    </location>
</feature>
<feature type="sequence variant" id="VAR_028559" description="In HEMA; mild." evidence="22">
    <original>D</original>
    <variation>A</variation>
    <location>
        <position position="579"/>
    </location>
</feature>
<feature type="sequence variant" id="VAR_028560" description="In HEMA; mild." evidence="24">
    <original>D</original>
    <variation>H</variation>
    <location>
        <position position="579"/>
    </location>
</feature>
<feature type="sequence variant" id="VAR_028561" description="In HEMA; mild; dbSNP:rs782657516." evidence="25">
    <original>N</original>
    <variation>S</variation>
    <location>
        <position position="583"/>
    </location>
</feature>
<feature type="sequence variant" id="VAR_028562" description="In HEMA; mild." evidence="24">
    <original>Q</original>
    <variation>H</variation>
    <location>
        <position position="584"/>
    </location>
</feature>
<feature type="sequence variant" id="VAR_001114" description="In HEMA; moderate; dbSNP:rs137852422." evidence="52">
    <original>Q</original>
    <variation>K</variation>
    <location>
        <position position="584"/>
    </location>
</feature>
<feature type="sequence variant" id="VAR_028563" description="In HEMA; dbSNP:rs1354815715." evidence="7">
    <original>Q</original>
    <variation>R</variation>
    <location>
        <position position="584"/>
    </location>
</feature>
<feature type="sequence variant" id="VAR_028564" description="In HEMA; moderate-severe." evidence="14">
    <original>I</original>
    <variation>R</variation>
    <location>
        <position position="585"/>
    </location>
</feature>
<feature type="sequence variant" id="VAR_001115" description="In HEMA; severe/moderate; dbSNP:rs137852376." evidence="7">
    <original>I</original>
    <variation>T</variation>
    <location>
        <position position="585"/>
    </location>
</feature>
<feature type="sequence variant" id="VAR_015129" description="In HEMA; mild." evidence="17">
    <original>M</original>
    <variation>V</variation>
    <location>
        <position position="586"/>
    </location>
</feature>
<feature type="sequence variant" id="VAR_028565" description="In HEMA." evidence="7">
    <original>D</original>
    <variation>G</variation>
    <location>
        <position position="588"/>
    </location>
</feature>
<feature type="sequence variant" id="VAR_028566" description="In HEMA." evidence="33">
    <original>D</original>
    <variation>Y</variation>
    <location>
        <position position="588"/>
    </location>
</feature>
<feature type="sequence variant" id="VAR_028567" description="In HEMA; mild." evidence="25">
    <original>L</original>
    <variation>Q</variation>
    <location>
        <position position="594"/>
    </location>
</feature>
<feature type="sequence variant" id="VAR_001116" description="In HEMA; severe; dbSNP:rs137852423." evidence="72">
    <original>S</original>
    <variation>P</variation>
    <location>
        <position position="596"/>
    </location>
</feature>
<feature type="sequence variant" id="VAR_028568" description="In HEMA; dbSNP:rs1460318222." evidence="7">
    <original>N</original>
    <variation>D</variation>
    <location>
        <position position="601"/>
    </location>
</feature>
<feature type="sequence variant" id="VAR_028569" description="In HEMA; dbSNP:rs1299810903." evidence="7">
    <original>N</original>
    <variation>K</variation>
    <location>
        <position position="601"/>
    </location>
</feature>
<feature type="sequence variant" id="VAR_028570" description="In HEMA; mild familial; dbSNP:rs137852424." evidence="7 20 42">
    <original>R</original>
    <variation>G</variation>
    <location>
        <position position="602"/>
    </location>
</feature>
<feature type="sequence variant" id="VAR_001117" description="In HEMA; dbSNP:rs137852425." evidence="72">
    <original>S</original>
    <variation>I</variation>
    <location>
        <position position="603"/>
    </location>
</feature>
<feature type="sequence variant" id="VAR_028571" description="In HEMA; severe." evidence="19 94">
    <original>S</original>
    <variation>R</variation>
    <location>
        <position position="603"/>
    </location>
</feature>
<feature type="sequence variant" id="VAR_001118" description="In HEMA; severe; dbSNP:rs137852426." evidence="72">
    <original>W</original>
    <variation>C</variation>
    <location>
        <position position="604"/>
    </location>
</feature>
<feature type="sequence variant" id="VAR_028572" description="In HEMA; dbSNP:rs2073350830." evidence="7">
    <original>Y</original>
    <variation>H</variation>
    <location>
        <position position="605"/>
    </location>
</feature>
<feature type="sequence variant" id="VAR_001119" description="In HEMA; severe; dbSNP:rs137852427." evidence="72">
    <original>Y</original>
    <variation>S</variation>
    <location>
        <position position="605"/>
    </location>
</feature>
<feature type="sequence variant" id="VAR_028573" description="In HEMA; moderate; dbSNP:rs1253524555." evidence="25">
    <original>N</original>
    <variation>I</variation>
    <location>
        <position position="609"/>
    </location>
</feature>
<feature type="sequence variant" id="VAR_001120" description="In HEMA; mild/moderate; secretion impaired; dbSNP:rs137852428." evidence="7 11 18 22 25 26 36 41 50 77 90">
    <original>R</original>
    <variation>C</variation>
    <location>
        <position position="612"/>
    </location>
</feature>
<feature type="sequence variant" id="VAR_001121" description="In HEMA; severe." evidence="87">
    <original>N</original>
    <variation>K</variation>
    <location>
        <position position="631"/>
    </location>
</feature>
<feature type="sequence variant" id="VAR_001122" description="In HEMA; dbSNP:rs137852429." evidence="72">
    <original>N</original>
    <variation>S</variation>
    <location>
        <position position="631"/>
    </location>
</feature>
<feature type="sequence variant" id="VAR_028574" description="In HEMA; mild; dbSNP:rs2073350107." evidence="94">
    <original>M</original>
    <variation>I</variation>
    <location>
        <position position="633"/>
    </location>
</feature>
<feature type="sequence variant" id="VAR_028575" description="In HEMA; mild." evidence="25">
    <original>S</original>
    <variation>N</variation>
    <location>
        <position position="635"/>
    </location>
</feature>
<feature type="sequence variant" id="VAR_028576" description="In HEMA; severe sporadic/moderate; dbSNP:rs2073315404." evidence="19 74">
    <original>N</original>
    <variation>D</variation>
    <location>
        <position position="637"/>
    </location>
</feature>
<feature type="sequence variant" id="VAR_065314" description="In HEMA." evidence="46">
    <original>N</original>
    <variation>I</variation>
    <location>
        <position position="637"/>
    </location>
</feature>
<feature type="sequence variant" id="VAR_028577" description="In HEMA; mild; secretion impaired; dbSNP:rs2073315379." evidence="11">
    <original>N</original>
    <variation>S</variation>
    <location>
        <position position="637"/>
    </location>
</feature>
<feature type="sequence variant" id="VAR_028578" description="In HEMA; moderate." evidence="86">
    <original>Y</original>
    <variation>C</variation>
    <location>
        <position position="639"/>
    </location>
</feature>
<feature type="sequence variant" id="VAR_001123" description="In HEMA; mild; dbSNP:rs2124082414." evidence="91">
    <original>L</original>
    <variation>V</variation>
    <location>
        <position position="644"/>
    </location>
</feature>
<feature type="sequence variant" id="VAR_028579" description="In HEMA; mild; dbSNP:rs1557280438." evidence="24">
    <original>L</original>
    <variation>F</variation>
    <location>
        <position position="650"/>
    </location>
</feature>
<feature type="sequence variant" id="VAR_001124" description="In HEMA; mild; dbSNP:rs137852430." evidence="79">
    <original>V</original>
    <variation>A</variation>
    <location>
        <position position="653"/>
    </location>
</feature>
<feature type="sequence variant" id="VAR_001125" description="In HEMA; severe; dbSNP:rs137852431." evidence="29 79">
    <original>V</original>
    <variation>M</variation>
    <location>
        <position position="653"/>
    </location>
</feature>
<feature type="sequence variant" id="VAR_028580" description="In HEMA." evidence="81">
    <original>L</original>
    <variation>P</variation>
    <location>
        <position position="659"/>
    </location>
</feature>
<feature type="sequence variant" id="VAR_001126" description="In HEMA; mild; dbSNP:rs137852433." evidence="52">
    <original>A</original>
    <variation>V</variation>
    <location>
        <position position="663"/>
    </location>
</feature>
<feature type="sequence variant" id="VAR_028581" description="In HEMA; moderate-severe." evidence="14">
    <original>Q</original>
    <variation>P</variation>
    <location>
        <position position="664"/>
    </location>
</feature>
<feature type="sequence variant" id="VAR_001127" description="In HEMA; severe." evidence="79">
    <location>
        <position position="671"/>
    </location>
</feature>
<feature type="sequence variant" id="VAR_001128" description="In HEMA; moderate; dbSNP:rs137852434." evidence="72">
    <original>F</original>
    <variation>L</variation>
    <location>
        <position position="677"/>
    </location>
</feature>
<feature type="sequence variant" id="VAR_028582" description="In HEMA; mild; dbSNP:rs1603434460." evidence="24">
    <original>M</original>
    <variation>I</variation>
    <location>
        <position position="681"/>
    </location>
</feature>
<feature type="sequence variant" id="VAR_028583" description="In HEMA; dbSNP:rs1569559755." evidence="90">
    <original>V</original>
    <variation>F</variation>
    <location>
        <position position="682"/>
    </location>
</feature>
<feature type="sequence variant" id="VAR_028584" description="In HEMA; severe; dbSNP:rs1384374956." evidence="22 29 33">
    <original>Y</original>
    <variation>C</variation>
    <location>
        <position position="683"/>
    </location>
</feature>
<feature type="sequence variant" id="VAR_028585" description="In HEMA; mild; dbSNP:rs2073314166." evidence="94">
    <original>Y</original>
    <variation>N</variation>
    <location>
        <position position="683"/>
    </location>
</feature>
<feature type="sequence variant" id="VAR_028586" description="In HEMA." evidence="85">
    <original>T</original>
    <variation>R</variation>
    <location>
        <position position="686"/>
    </location>
</feature>
<feature type="sequence variant" id="VAR_028587" description="In HEMA." evidence="22">
    <original>F</original>
    <variation>L</variation>
    <location>
        <position position="698"/>
    </location>
</feature>
<feature type="sequence variant" id="VAR_028588" description="In HEMA; mild." evidence="25">
    <original>M</original>
    <variation>T</variation>
    <location>
        <position position="699"/>
    </location>
</feature>
<feature type="sequence variant" id="VAR_001129" description="In HEMA; severe." evidence="91">
    <original>M</original>
    <variation>V</variation>
    <location>
        <position position="699"/>
    </location>
</feature>
<feature type="sequence variant" id="VAR_028589" description="In HEMA; mild; dbSNP:rs2073313787." evidence="25">
    <original>M</original>
    <variation>I</variation>
    <location>
        <position position="701"/>
    </location>
</feature>
<feature type="sequence variant" id="VAR_028590" description="In HEMA; moderate; dbSNP:rs1300579988." evidence="77">
    <original>G</original>
    <variation>V</variation>
    <location>
        <position position="705"/>
    </location>
</feature>
<feature type="sequence variant" id="VAR_028591" description="In HEMA." evidence="22">
    <original>G</original>
    <variation>W</variation>
    <location>
        <position position="710"/>
    </location>
</feature>
<feature type="sequence variant" id="VAR_028592" description="In HEMA; mild." evidence="13">
    <original>N</original>
    <variation>I</variation>
    <location>
        <position position="713"/>
    </location>
</feature>
<feature type="sequence variant" id="VAR_028593" description="In HEMA; mild; dbSNP:rs942909873." evidence="82">
    <original>R</original>
    <variation>L</variation>
    <location>
        <position position="717"/>
    </location>
</feature>
<feature type="sequence variant" id="VAR_001130" description="In HEMA; mild; dbSNP:rs137852435." evidence="7 36 42 82">
    <original>R</original>
    <variation>W</variation>
    <location>
        <position position="717"/>
    </location>
</feature>
<feature type="sequence variant" id="VAR_001131" description="In HEMA; severe/moderate." evidence="76 91">
    <original>G</original>
    <variation>D</variation>
    <location>
        <position position="720"/>
    </location>
</feature>
<feature type="sequence variant" id="VAR_028594" description="In HEMA." evidence="33">
    <original>G</original>
    <variation>S</variation>
    <location>
        <position position="720"/>
    </location>
</feature>
<feature type="sequence variant" id="VAR_028595" description="In HEMA; severe; dbSNP:rs1218576358." evidence="25">
    <original>M</original>
    <variation>I</variation>
    <location>
        <position position="721"/>
    </location>
</feature>
<feature type="sequence variant" id="VAR_028596" description="In HEMA; mild; dbSNP:rs1305924233." evidence="94">
    <original>M</original>
    <variation>L</variation>
    <location>
        <position position="721"/>
    </location>
</feature>
<feature type="sequence variant" id="VAR_001132" description="In HEMA; moderate; dbSNP:rs137852436." evidence="50 65 88">
    <original>A</original>
    <variation>T</variation>
    <location>
        <position position="723"/>
    </location>
</feature>
<feature type="sequence variant" id="VAR_028597" description="In HEMA; severe." evidence="24">
    <original>L</original>
    <variation>Q</variation>
    <location>
        <position position="725"/>
    </location>
</feature>
<feature type="sequence variant" id="VAR_001133" description="In HEMA; severe; dbSNP:rs1485277601." evidence="91">
    <original>V</original>
    <variation>F</variation>
    <location>
        <position position="727"/>
    </location>
</feature>
<feature type="sequence variant" id="VAR_001134" description="In HEMA; mild; dbSNP:rs28937285." evidence="72">
    <original>E</original>
    <variation>K</variation>
    <location>
        <position position="739"/>
    </location>
</feature>
<feature type="sequence variant" id="VAR_028598" description="In HEMA; mild." evidence="94">
    <original>Y</original>
    <variation>C</variation>
    <location>
        <position position="742"/>
    </location>
</feature>
<feature type="sequence variant" id="VAR_024380" description="In dbSNP:rs2228152.">
    <original>R</original>
    <variation>G</variation>
    <location>
        <position position="795"/>
    </location>
</feature>
<feature type="sequence variant" id="VAR_028599" description="In HEMA; dbSNP:rs782318401." evidence="80">
    <original>P</original>
    <variation>R</variation>
    <location>
        <position position="947"/>
    </location>
</feature>
<feature type="sequence variant" id="VAR_028600" description="In HEMA." evidence="81">
    <original>V</original>
    <variation>L</variation>
    <location>
        <position position="1012"/>
    </location>
</feature>
<feature type="sequence variant" id="VAR_001135" description="In HEMA; moderate; dbSNP:rs28933673." evidence="52 80">
    <original>E</original>
    <variation>K</variation>
    <location>
        <position position="1057"/>
    </location>
</feature>
<feature type="sequence variant" id="VAR_028601" description="In HEMA; dbSNP:rs1196356883." evidence="33">
    <original>H</original>
    <variation>Y</variation>
    <location>
        <position position="1066"/>
    </location>
</feature>
<feature type="sequence variant" id="VAR_001136" description="In dbSNP:rs1800291." evidence="26 81 95">
    <original>D</original>
    <variation>E</variation>
    <location>
        <position position="1260"/>
    </location>
</feature>
<feature type="sequence variant" id="VAR_048438" description="In dbSNP:rs1800292.">
    <original>K</original>
    <variation>Q</variation>
    <location>
        <position position="1289"/>
    </location>
</feature>
<feature type="sequence variant" id="VAR_028602" description="In HEMA." evidence="29">
    <original>Q</original>
    <variation>K</variation>
    <location>
        <position position="1336"/>
    </location>
</feature>
<feature type="sequence variant" id="VAR_028603" description="In HEMA." evidence="79">
    <original>N</original>
    <variation>K</variation>
    <location>
        <position position="1460"/>
    </location>
</feature>
<feature type="sequence variant" id="VAR_001137" description="In dbSNP:rs1800294.">
    <original>L</original>
    <variation>P</variation>
    <location>
        <position position="1481"/>
    </location>
</feature>
<feature type="sequence variant" id="VAR_028604" description="In HEMA; dbSNP:rs782127226." evidence="80">
    <original>A</original>
    <variation>S</variation>
    <location>
        <position position="1610"/>
    </location>
</feature>
<feature type="sequence variant" id="VAR_028605" description="In HEMA; mild; dbSNP:rs2073173387." evidence="94">
    <original>I</original>
    <variation>T</variation>
    <location>
        <position position="1698"/>
    </location>
</feature>
<feature type="sequence variant" id="VAR_001138" description="In HEMA; severe; dbSNP:rs28935203." evidence="72">
    <original>Y</original>
    <variation>C</variation>
    <location>
        <position position="1699"/>
    </location>
</feature>
<feature type="sequence variant" id="VAR_001139" description="In HEMA; moderate; dbSNP:rs28935203." evidence="50 56">
    <original>Y</original>
    <variation>F</variation>
    <location>
        <position position="1699"/>
    </location>
</feature>
<feature type="sequence variant" id="VAR_028606" description="In HEMA; mild; dbSNP:rs2073173294." evidence="42">
    <original>E</original>
    <variation>K</variation>
    <location>
        <position position="1701"/>
    </location>
</feature>
<feature type="sequence variant" id="VAR_028607" description="In HEMA; mild sporadic." evidence="18">
    <original>Q</original>
    <variation>H</variation>
    <location>
        <position position="1705"/>
    </location>
</feature>
<feature type="sequence variant" id="VAR_001140" description="In HEMA; East Hartford; severe/moderate/mild; abolishes thrombin cleavage at the light chain; dbSNP:rs111033613." evidence="7 17 22 42 48 54 56 62 77 81 85">
    <original>R</original>
    <variation>C</variation>
    <location>
        <position position="1708"/>
    </location>
</feature>
<feature type="sequence variant" id="VAR_001141" description="In HEMA; mild; abolishes thrombin cleavage at the light chain; dbSNP:rs111033614." evidence="29 48 92">
    <original>R</original>
    <variation>H</variation>
    <location>
        <position position="1708"/>
    </location>
</feature>
<feature type="sequence variant" id="VAR_028608" description="In HEMA; moderate." evidence="28">
    <original>T</original>
    <variation>S</variation>
    <location>
        <position position="1714"/>
    </location>
</feature>
<feature type="sequence variant" id="VAR_001142" description="In HEMA; mild; dbSNP:rs137852439." evidence="38 94">
    <original>R</original>
    <variation>G</variation>
    <location>
        <position position="1715"/>
    </location>
</feature>
<feature type="sequence variant" id="VAR_065315" description="In HEMA." evidence="46">
    <original>A</original>
    <variation>V</variation>
    <location>
        <position position="1720"/>
    </location>
</feature>
<feature type="sequence variant" id="VAR_001143" description="In HEMA; severe; dbSNP:rs137852373." evidence="51">
    <original>E</original>
    <variation>K</variation>
    <location>
        <position position="1723"/>
    </location>
</feature>
<feature type="sequence variant" id="VAR_028609" description="In HEMA; mild." evidence="24 42">
    <original>D</original>
    <variation>V</variation>
    <location>
        <position position="1727"/>
    </location>
</feature>
<feature type="sequence variant" id="VAR_001144" description="In HEMA; moderate; dbSNP:rs137852362." evidence="57">
    <original>Y</original>
    <variation>C</variation>
    <location>
        <position position="1728"/>
    </location>
</feature>
<feature type="sequence variant" id="VAR_028610" description="In HEMA; mild." evidence="24">
    <original>R</original>
    <variation>G</variation>
    <location>
        <position position="1740"/>
    </location>
</feature>
<feature type="sequence variant" id="VAR_028611" description="In HEMA." evidence="7">
    <original>K</original>
    <variation>Q</variation>
    <location>
        <position position="1751"/>
    </location>
</feature>
<feature type="sequence variant" id="VAR_065316" description="In HEMA." evidence="46">
    <original>F</original>
    <variation>L</variation>
    <location>
        <position position="1762"/>
    </location>
</feature>
<feature type="sequence variant" id="VAR_028612" description="In HEMA; dbSNP:rs151202877." evidence="33">
    <original>R</original>
    <variation>H</variation>
    <location>
        <position position="1768"/>
    </location>
</feature>
<feature type="sequence variant" id="VAR_001145" description="In HEMA; mild; dbSNP:rs137852440." evidence="72">
    <original>G</original>
    <variation>R</variation>
    <location>
        <position position="1769"/>
    </location>
</feature>
<feature type="sequence variant" id="VAR_028613" description="In HEMA; dbSNP:rs2073038950." evidence="33">
    <original>L</original>
    <variation>P</variation>
    <location>
        <position position="1771"/>
    </location>
</feature>
<feature type="sequence variant" id="VAR_001147" description="In HEMA; mild; dbSNP:rs137852441." evidence="72">
    <original>L</original>
    <variation>F</variation>
    <location>
        <position position="1775"/>
    </location>
</feature>
<feature type="sequence variant" id="VAR_001146" description="In HEMA; moderate; dbSNP:rs28937287." evidence="72">
    <original>L</original>
    <variation>V</variation>
    <location>
        <position position="1775"/>
    </location>
</feature>
<feature type="sequence variant" id="VAR_028614" description="In HEMA; moderate." evidence="28">
    <original>L</original>
    <variation>P</variation>
    <location>
        <position position="1777"/>
    </location>
</feature>
<feature type="sequence variant" id="VAR_001148" description="In HEMA; severe/moderate; dbSNP:rs28937289." evidence="14">
    <original>G</original>
    <variation>E</variation>
    <location>
        <position position="1779"/>
    </location>
</feature>
<feature type="sequence variant" id="VAR_028615" description="In HEMA; severe; dbSNP:rs1168919288." evidence="25 94">
    <original>G</original>
    <variation>R</variation>
    <location>
        <position position="1779"/>
    </location>
</feature>
<feature type="sequence variant" id="VAR_028616" description="In HEMA; moderate." evidence="25">
    <original>P</original>
    <variation>L</variation>
    <location>
        <position position="1780"/>
    </location>
</feature>
<feature type="sequence variant" id="VAR_028617" description="In HEMA; severe sporadic; dbSNP:rs1466581271." evidence="18">
    <original>I</original>
    <variation>R</variation>
    <location>
        <position position="1782"/>
    </location>
</feature>
<feature type="sequence variant" id="VAR_028618" description="In HEMA; mild." evidence="22">
    <original>D</original>
    <variation>H</variation>
    <location>
        <position position="1788"/>
    </location>
</feature>
<feature type="sequence variant" id="VAR_001149" description="In HEMA; severe; dbSNP:rs137852375." evidence="25 94">
    <original>M</original>
    <variation>T</variation>
    <location>
        <position position="1791"/>
    </location>
</feature>
<feature type="sequence variant" id="VAR_028619" description="In HEMA; severe; dbSNP:rs1263565590." evidence="25">
    <original>A</original>
    <variation>P</variation>
    <location>
        <position position="1798"/>
    </location>
</feature>
<feature type="sequence variant" id="VAR_001151" description="In HEMA; moderate; dbSNP:rs137852443." evidence="17 37 93">
    <original>R</original>
    <variation>C</variation>
    <location>
        <position position="1800"/>
    </location>
</feature>
<feature type="sequence variant" id="VAR_001152" description="In HEMA; mild; dbSNP:rs137852443." evidence="72">
    <original>R</original>
    <variation>G</variation>
    <location>
        <position position="1800"/>
    </location>
</feature>
<feature type="sequence variant" id="VAR_001150" description="In HEMA; moderate/severe; dbSNP:rs137852442." evidence="7 25 33 41 50 86 87 94">
    <original>R</original>
    <variation>H</variation>
    <location>
        <position position="1800"/>
    </location>
</feature>
<feature type="sequence variant" id="VAR_028621" description="In HEMA; mild." evidence="94">
    <original>P</original>
    <variation>A</variation>
    <location>
        <position position="1801"/>
    </location>
</feature>
<feature type="sequence variant" id="VAR_028622" description="In HEMA; moderate." evidence="7 41">
    <original>Y</original>
    <variation>C</variation>
    <location>
        <position position="1802"/>
    </location>
</feature>
<feature type="sequence variant" id="VAR_001153" description="In HEMA; severe; dbSNP:rs137852444." evidence="50">
    <original>S</original>
    <variation>Y</variation>
    <location>
        <position position="1803"/>
    </location>
</feature>
<feature type="sequence variant" id="VAR_017338" description="In HEMA; severe." evidence="34">
    <original>F</original>
    <variation>S</variation>
    <location>
        <position position="1804"/>
    </location>
</feature>
<feature type="sequence variant" id="VAR_001154" description="In HEMA; mild; dbSNP:rs137852445." evidence="36 74">
    <original>L</original>
    <variation>F</variation>
    <location>
        <position position="1808"/>
    </location>
</feature>
<feature type="sequence variant" id="VAR_075624" description="In HEMA; uncertain significance; decreases binding with VWF and phospholipid; no effect on reaction with F9, F2 and F10; decreases specific activity by 30%; patient develops inhibitor alloantibodies." evidence="66">
    <original>P</original>
    <variation>L</variation>
    <location>
        <position position="1828"/>
    </location>
</feature>
<feature type="sequence variant" id="VAR_001155" description="In HEMA; moderate; dbSNP:rs28933674." evidence="72">
    <original>M</original>
    <variation>I</variation>
    <location>
        <position position="1842"/>
    </location>
</feature>
<feature type="sequence variant" id="VAR_001156" description="In HEMA; mild; dbSNP:rs28933675." evidence="52">
    <original>P</original>
    <variation>S</variation>
    <location>
        <position position="1844"/>
    </location>
</feature>
<feature type="sequence variant" id="VAR_001157" description="In HEMA; mild; dbSNP:rs28933676." evidence="44">
    <original>T</original>
    <variation>P</variation>
    <location>
        <position position="1845"/>
    </location>
</feature>
<feature type="sequence variant" id="VAR_028623" description="In HEMA; mild; dbSNP:rs2073029664." evidence="25">
    <original>E</original>
    <variation>G</variation>
    <location>
        <position position="1848"/>
    </location>
</feature>
<feature type="sequence variant" id="VAR_001158" description="In HEMA; moderate/severe; dbSNP:rs2073029579." evidence="7 20 76">
    <original>A</original>
    <variation>T</variation>
    <location>
        <position position="1853"/>
    </location>
</feature>
<feature type="sequence variant" id="VAR_001159" description="In HEMA; mild; dbSNP:rs28933677." evidence="72">
    <original>A</original>
    <variation>V</variation>
    <location>
        <position position="1853"/>
    </location>
</feature>
<feature type="sequence variant" id="VAR_028624" description="In HEMA; moderate." evidence="24">
    <original>S</original>
    <variation>C</variation>
    <location>
        <position position="1858"/>
    </location>
</feature>
<feature type="sequence variant" id="VAR_028625" description="In HEMA." evidence="7">
    <original>K</original>
    <variation>E</variation>
    <location>
        <position position="1864"/>
    </location>
</feature>
<feature type="sequence variant" id="VAR_001160" description="In HEMA; severe; dbSNP:rs28933678." evidence="81">
    <original>D</original>
    <variation>N</variation>
    <location>
        <position position="1865"/>
    </location>
</feature>
<feature type="sequence variant" id="VAR_001161" description="In HEMA; severe; dbSNP:rs28933678." evidence="72">
    <original>D</original>
    <variation>Y</variation>
    <location>
        <position position="1865"/>
    </location>
</feature>
<feature type="sequence variant" id="VAR_028626" description="In HEMA; mild." evidence="74">
    <original>H</original>
    <variation>P</variation>
    <location>
        <position position="1867"/>
    </location>
</feature>
<feature type="sequence variant" id="VAR_001162" description="In HEMA; moderate; dbSNP:rs28933679." evidence="52">
    <original>H</original>
    <variation>R</variation>
    <location>
        <position position="1867"/>
    </location>
</feature>
<feature type="sequence variant" id="VAR_028627" description="In HEMA; severe." evidence="24">
    <original>G</original>
    <variation>D</variation>
    <location>
        <position position="1869"/>
    </location>
</feature>
<feature type="sequence variant" id="VAR_001163" description="In HEMA; severe; dbSNP:rs1290383918." evidence="10 32 92">
    <original>G</original>
    <variation>V</variation>
    <location>
        <position position="1869"/>
    </location>
</feature>
<feature type="sequence variant" id="VAR_028628" description="In HEMA; severe sporadic." evidence="18">
    <original>G</original>
    <variation>E</variation>
    <location>
        <position position="1872"/>
    </location>
</feature>
<feature type="sequence variant" id="VAR_001164" description="In HEMA; severe; dbSNP:rs28933680." evidence="81">
    <original>P</original>
    <variation>R</variation>
    <location>
        <position position="1873"/>
    </location>
</feature>
<feature type="sequence variant" id="VAR_028629" description="In HEMA." evidence="29">
    <original>L</original>
    <variation>P</variation>
    <location>
        <position position="1875"/>
    </location>
</feature>
<feature type="sequence variant" id="VAR_028630" description="In HEMA; mild." evidence="22">
    <original>V</original>
    <variation>L</variation>
    <location>
        <position position="1876"/>
    </location>
</feature>
<feature type="sequence variant" id="VAR_028631" description="In HEMA; dbSNP:rs2073027361." evidence="29">
    <original>C</original>
    <variation>R</variation>
    <location>
        <position position="1877"/>
    </location>
</feature>
<feature type="sequence variant" id="VAR_065317" description="In HEMA." evidence="59">
    <original>C</original>
    <variation>Y</variation>
    <location>
        <position position="1877"/>
    </location>
</feature>
<feature type="sequence variant" id="VAR_028632" description="In HEMA; dbSNP:rs2073027196." evidence="7">
    <original>L</original>
    <variation>P</variation>
    <location>
        <position position="1882"/>
    </location>
</feature>
<feature type="sequence variant" id="VAR_001165" description="In HEMA; severe." evidence="7 42 76">
    <original>R</original>
    <variation>I</variation>
    <location>
        <position position="1888"/>
    </location>
</feature>
<feature type="sequence variant" id="VAR_001166" description="In HEMA; moderate." evidence="19 88">
    <original>E</original>
    <variation>G</variation>
    <location>
        <position position="1894"/>
    </location>
</feature>
<feature type="sequence variant" id="VAR_028633" description="In HEMA; mild; dbSNP:rs2073026757." evidence="94">
    <original>I</original>
    <variation>F</variation>
    <location>
        <position position="1901"/>
    </location>
</feature>
<feature type="sequence variant" id="VAR_028634" description="In HEMA; dbSNP:rs1416920499." evidence="33">
    <original>E</original>
    <variation>D</variation>
    <location>
        <position position="1904"/>
    </location>
</feature>
<feature type="sequence variant" id="VAR_001167" description="In HEMA; severe; dbSNP:rs28933681." evidence="72">
    <original>E</original>
    <variation>K</variation>
    <location>
        <position position="1904"/>
    </location>
</feature>
<feature type="sequence variant" id="VAR_028635" description="In HEMA; moderate; dbSNP:rs1160914716." evidence="25">
    <original>S</original>
    <variation>C</variation>
    <location>
        <position position="1907"/>
    </location>
</feature>
<feature type="sequence variant" id="VAR_028636" description="In HEMA; severe; dbSNP:rs1364158178." evidence="25">
    <original>S</original>
    <variation>R</variation>
    <location>
        <position position="1907"/>
    </location>
</feature>
<feature type="sequence variant" id="VAR_028637" description="In HEMA; mild." evidence="86">
    <original>W</original>
    <variation>L</variation>
    <location>
        <position position="1908"/>
    </location>
</feature>
<feature type="sequence variant" id="VAR_028638" description="In HEMA; moderate; dbSNP:rs2073026448." evidence="12">
    <original>Y</original>
    <variation>C</variation>
    <location>
        <position position="1909"/>
    </location>
</feature>
<feature type="sequence variant" id="VAR_028639" description="In HEMA; severe." evidence="25">
    <original>A</original>
    <variation>T</variation>
    <location>
        <position position="1939"/>
    </location>
</feature>
<feature type="sequence variant" id="VAR_028640" description="In HEMA; uncertain significance; dbSNP:rs1487941652." evidence="25">
    <original>A</original>
    <variation>V</variation>
    <location>
        <position position="1939"/>
    </location>
</feature>
<feature type="sequence variant" id="VAR_001168" description="In HEMA; severe/moderate; dbSNP:rs137852369." evidence="50 57">
    <original>N</original>
    <variation>D</variation>
    <location>
        <position position="1941"/>
    </location>
</feature>
<feature type="sequence variant" id="VAR_001169" description="In HEMA; severe/moderate; dbSNP:rs28933682." evidence="36 50">
    <original>N</original>
    <variation>S</variation>
    <location>
        <position position="1941"/>
    </location>
</feature>
<feature type="sequence variant" id="VAR_015130" description="In HEMA; moderate." evidence="17">
    <original>G</original>
    <variation>A</variation>
    <location>
        <position position="1942"/>
    </location>
</feature>
<feature type="sequence variant" id="VAR_028641" description="In HEMA; moderate." evidence="26">
    <original>M</original>
    <variation>V</variation>
    <location>
        <position position="1945"/>
    </location>
</feature>
<feature type="sequence variant" id="VAR_028642" description="In HEMA; mild." evidence="82">
    <original>L</original>
    <variation>F</variation>
    <location>
        <position position="1951"/>
    </location>
</feature>
<feature type="sequence variant" id="VAR_001171" description="In HEMA; moderate; dbSNP:rs28937294." evidence="35">
    <original>R</original>
    <variation>L</variation>
    <location>
        <position position="1960"/>
    </location>
</feature>
<feature type="sequence variant" id="VAR_001170" description="In HEMA; mild/moderate; dbSNP:rs28937294." evidence="39 74 85 94">
    <original>R</original>
    <variation>Q</variation>
    <location>
        <position position="1960"/>
    </location>
</feature>
<feature type="sequence variant" id="VAR_015131" description="In HEMA; severe." evidence="17">
    <original>L</original>
    <variation>P</variation>
    <location>
        <position position="1963"/>
    </location>
</feature>
<feature type="sequence variant" id="VAR_028643" description="In HEMA; dbSNP:rs2073023614." evidence="29">
    <original>S</original>
    <variation>I</variation>
    <location>
        <position position="1965"/>
    </location>
</feature>
<feature type="sequence variant" id="VAR_028644" description="In HEMA; mild." evidence="83">
    <original>M</original>
    <variation>I</variation>
    <location>
        <position position="1966"/>
    </location>
</feature>
<feature type="sequence variant" id="VAR_028645" description="In HEMA; mild; dbSNP:rs1603432970." evidence="42">
    <original>M</original>
    <variation>V</variation>
    <location>
        <position position="1966"/>
    </location>
</feature>
<feature type="sequence variant" id="VAR_001172" description="In HEMA; moderate; dbSNP:rs111033615." evidence="72">
    <original>G</original>
    <variation>D</variation>
    <location>
        <position position="1967"/>
    </location>
</feature>
<feature type="sequence variant" id="VAR_028646" description="In HEMA; mild." evidence="24">
    <original>S</original>
    <variation>R</variation>
    <location>
        <position position="1968"/>
    </location>
</feature>
<feature type="sequence variant" id="VAR_028647" description="In HEMA." evidence="81">
    <original>N</original>
    <variation>T</variation>
    <location>
        <position position="1971"/>
    </location>
</feature>
<feature type="sequence variant" id="VAR_028648" description="In HEMA; mild; dbSNP:rs1273080258." evidence="7 9">
    <original>H</original>
    <variation>L</variation>
    <location>
        <position position="1973"/>
    </location>
</feature>
<feature type="sequence variant" id="VAR_001173" description="In HEMA; moderate; dbSNP:rs137852450." evidence="72">
    <original>G</original>
    <variation>V</variation>
    <location>
        <position position="1979"/>
    </location>
</feature>
<feature type="sequence variant" id="VAR_028649" description="In HEMA." evidence="33">
    <original>H</original>
    <variation>P</variation>
    <location>
        <position position="1980"/>
    </location>
</feature>
<feature type="sequence variant" id="VAR_001174" description="In HEMA; mild; dbSNP:rs137852451." evidence="72">
    <original>H</original>
    <variation>Y</variation>
    <location>
        <position position="1980"/>
    </location>
</feature>
<feature type="sequence variant" id="VAR_028650" description="In HEMA; mild; dbSNP:rs2073023215." evidence="25">
    <original>F</original>
    <variation>I</variation>
    <location>
        <position position="1982"/>
    </location>
</feature>
<feature type="sequence variant" id="VAR_028651" description="In HEMA; mild; dbSNP:rs1490417405." evidence="20 25 94">
    <original>R</original>
    <variation>Q</variation>
    <location>
        <position position="1985"/>
    </location>
</feature>
<feature type="sequence variant" id="VAR_028652" description="In HEMA; moderate; dbSNP:rs1367630608." evidence="45">
    <original>L</original>
    <variation>P</variation>
    <location>
        <position position="1994"/>
    </location>
</feature>
<feature type="sequence variant" id="VAR_028653" description="In HEMA; mild; dbSNP:rs2073022685." evidence="24">
    <original>Y</original>
    <variation>C</variation>
    <location>
        <position position="1998"/>
    </location>
</feature>
<feature type="sequence variant" id="VAR_028654" description="In HEMA; moderate-severe; dbSNP:rs1603432913." evidence="14">
    <original>G</original>
    <variation>A</variation>
    <location>
        <position position="2000"/>
    </location>
</feature>
<feature type="sequence variant" id="VAR_028655" description="In HEMA; sporadic." evidence="20">
    <original>T</original>
    <variation>R</variation>
    <location>
        <position position="2004"/>
    </location>
</feature>
<feature type="sequence variant" id="VAR_028656" description="In HEMA; mild." evidence="94">
    <original>M</original>
    <variation>I</variation>
    <location>
        <position position="2007"/>
    </location>
</feature>
<feature type="sequence variant" id="VAR_065318" description="In HEMA." evidence="59">
    <original>G</original>
    <variation>R</variation>
    <location>
        <position position="2013"/>
    </location>
</feature>
<feature type="sequence variant" id="VAR_028657" description="In HEMA; moderate; dbSNP:rs1190563629." evidence="25">
    <original>W</original>
    <variation>C</variation>
    <location>
        <position position="2015"/>
    </location>
</feature>
<feature type="sequence variant" id="VAR_028658" description="In HEMA; severe familial." evidence="18">
    <original>R</original>
    <variation>P</variation>
    <location>
        <position position="2016"/>
    </location>
</feature>
<feature type="sequence variant" id="VAR_001175" description="In HEMA; severe/moderate/mild; dbSNP:rs137852453." evidence="7 18 20 22 25 42 52 77 81 94">
    <original>R</original>
    <variation>W</variation>
    <location>
        <position position="2016"/>
    </location>
</feature>
<feature type="sequence variant" id="VAR_028659" description="In HEMA; moderate; dbSNP:rs1406262850." evidence="42">
    <original>E</original>
    <variation>G</variation>
    <location>
        <position position="2018"/>
    </location>
</feature>
<feature type="sequence variant" id="VAR_028660" description="In HEMA; severe; dbSNP:rs1320622042." evidence="94">
    <original>G</original>
    <variation>D</variation>
    <location>
        <position position="2022"/>
    </location>
</feature>
<feature type="sequence variant" id="VAR_028661" description="In HEMA; dbSNP:rs1603432908." evidence="90">
    <original>G</original>
    <variation>R</variation>
    <location>
        <position position="2028"/>
    </location>
</feature>
<feature type="sequence variant" id="VAR_028662" description="In HEMA; mild; dbSNP:rs369414658." evidence="94">
    <original>S</original>
    <variation>N</variation>
    <location>
        <position position="2030"/>
    </location>
</feature>
<feature type="sequence variant" id="VAR_028663" description="In HEMA; dbSNP:rs1603432906." evidence="7">
    <original>V</original>
    <variation>A</variation>
    <location>
        <position position="2035"/>
    </location>
</feature>
<feature type="sequence variant" id="VAR_015132" description="In HEMA; moderate." evidence="17">
    <original>Y</original>
    <variation>C</variation>
    <location>
        <position position="2036"/>
    </location>
</feature>
<feature type="sequence variant" id="VAR_001176" description="In HEMA; mild/moderate; dbSNP:rs137852454." evidence="25 94">
    <original>N</original>
    <variation>S</variation>
    <location>
        <position position="2038"/>
    </location>
</feature>
<feature type="sequence variant" id="VAR_028664" description="In HEMA; dbSNP:rs2123993600." evidence="7">
    <original>C</original>
    <variation>Y</variation>
    <location>
        <position position="2040"/>
    </location>
</feature>
<feature type="sequence variant" id="VAR_028665" description="In HEMA; mild." evidence="22">
    <original>G</original>
    <variation>E</variation>
    <location>
        <position position="2045"/>
    </location>
</feature>
<feature type="sequence variant" id="VAR_028666" description="In HEMA; severe sporadic." evidence="19 89">
    <original>G</original>
    <variation>V</variation>
    <location>
        <position position="2045"/>
    </location>
</feature>
<feature type="sequence variant" id="VAR_017339" description="In HEMA; severe." evidence="34">
    <original>I</original>
    <variation>S</variation>
    <location>
        <position position="2051"/>
    </location>
</feature>
<feature type="sequence variant" id="VAR_028667" description="In HEMA; severe." evidence="24">
    <original>I</original>
    <variation>N</variation>
    <location>
        <position position="2056"/>
    </location>
</feature>
<feature type="sequence variant" id="VAR_028668" description="In HEMA; moderate." evidence="12">
    <original>A</original>
    <variation>P</variation>
    <location>
        <position position="2058"/>
    </location>
</feature>
<feature type="sequence variant" id="VAR_001177" description="In HEMA; moderate; dbSNP:rs137852455." evidence="36">
    <original>W</original>
    <variation>R</variation>
    <location>
        <position position="2065"/>
    </location>
</feature>
<feature type="sequence variant" id="VAR_028669" description="In HEMA; severe sporadic; dbSNP:rs1348849974." evidence="19 42">
    <original>P</original>
    <variation>L</variation>
    <location>
        <position position="2067"/>
    </location>
</feature>
<feature type="sequence variant" id="VAR_028670" description="In HEMA; mild." evidence="24">
    <original>A</original>
    <variation>V</variation>
    <location>
        <position position="2070"/>
    </location>
</feature>
<feature type="sequence variant" id="VAR_028671" description="In HEMA; severe; dbSNP:rs1569559494." evidence="24">
    <original>S</original>
    <variation>N</variation>
    <location>
        <position position="2082"/>
    </location>
</feature>
<feature type="sequence variant" id="VAR_001178" description="In HEMA; severe; dbSNP:rs137852456." evidence="72">
    <original>S</original>
    <variation>F</variation>
    <location>
        <position position="2088"/>
    </location>
</feature>
<feature type="sequence variant" id="VAR_001179" description="In HEMA; mild; dbSNP:rs137852457." evidence="72">
    <original>D</original>
    <variation>G</variation>
    <location>
        <position position="2093"/>
    </location>
</feature>
<feature type="sequence variant" id="VAR_028672" description="In HEMA; severe familial; dbSNP:rs2072978705." evidence="20">
    <original>D</original>
    <variation>Y</variation>
    <location>
        <position position="2093"/>
    </location>
</feature>
<feature type="sequence variant" id="VAR_065319" description="In HEMA; dbSNP:rs1603432783." evidence="46">
    <original>H</original>
    <variation>D</variation>
    <location>
        <position position="2101"/>
    </location>
</feature>
<feature type="sequence variant" id="VAR_001180" description="In HEMA; moderate." evidence="91">
    <original>T</original>
    <variation>N</variation>
    <location>
        <position position="2105"/>
    </location>
</feature>
<feature type="sequence variant" id="VAR_028673" description="In HEMA; mild; dbSNP:rs2072978358." evidence="16">
    <original>Q</original>
    <variation>E</variation>
    <location>
        <position position="2106"/>
    </location>
</feature>
<feature type="sequence variant" id="VAR_065320" description="In HEMA; dbSNP:rs2072978325." evidence="46">
    <original>Q</original>
    <variation>P</variation>
    <location>
        <position position="2106"/>
    </location>
</feature>
<feature type="sequence variant" id="VAR_028674" description="In HEMA; mild; dbSNP:rs2072978325." evidence="86">
    <original>Q</original>
    <variation>R</variation>
    <location>
        <position position="2106"/>
    </location>
</feature>
<feature type="sequence variant" id="VAR_001181" description="In HEMA; severe; dbSNP:rs1267586059." evidence="88">
    <original>G</original>
    <variation>S</variation>
    <location>
        <position position="2107"/>
    </location>
</feature>
<feature type="sequence variant" id="VAR_028675" description="In HEMA; mild; dbSNP:rs1475665992." evidence="16">
    <original>R</original>
    <variation>C</variation>
    <location>
        <position position="2109"/>
    </location>
</feature>
<feature type="sequence variant" id="VAR_028676" description="In HEMA; dbSNP:rs2072977903." evidence="29">
    <original>I</original>
    <variation>F</variation>
    <location>
        <position position="2117"/>
    </location>
</feature>
<feature type="sequence variant" id="VAR_028677" description="In HEMA; mild-moderate; affinity for VWF reduced 8-fold." evidence="15">
    <original>I</original>
    <variation>S</variation>
    <location>
        <position position="2117"/>
    </location>
</feature>
<feature type="sequence variant" id="VAR_028678" description="In HEMA; moderate." evidence="77">
    <original>Q</original>
    <variation>R</variation>
    <location>
        <position position="2119"/>
    </location>
</feature>
<feature type="sequence variant" id="VAR_028679" description="In HEMA." evidence="7">
    <original>F</original>
    <variation>C</variation>
    <location>
        <position position="2120"/>
    </location>
</feature>
<feature type="sequence variant" id="VAR_001182" description="In HEMA; mild; dbSNP:rs137852458." evidence="52">
    <original>F</original>
    <variation>L</variation>
    <location>
        <position position="2120"/>
    </location>
</feature>
<feature type="sequence variant" id="VAR_001183" description="In HEMA; mild; dbSNP:rs137852459." evidence="17 90">
    <original>Y</original>
    <variation>C</variation>
    <location>
        <position position="2124"/>
    </location>
</feature>
<feature type="sequence variant" id="VAR_001184" description="In HEMA; severe; dbSNP:rs137852366." evidence="71">
    <original>R</original>
    <variation>P</variation>
    <location>
        <position position="2135"/>
    </location>
</feature>
<feature type="sequence variant" id="VAR_001185" description="In HEMA; moderate; affinity for VWF reduced 80-fold; dbSNP:rs137852460." evidence="15 52">
    <original>S</original>
    <variation>Y</variation>
    <location>
        <position position="2138"/>
    </location>
</feature>
<feature type="sequence variant" id="VAR_017340" description="In HEMA; severe." evidence="34">
    <original>T</original>
    <variation>N</variation>
    <location>
        <position position="2141"/>
    </location>
</feature>
<feature type="sequence variant" id="VAR_065321" description="In HEMA." evidence="46">
    <original>M</original>
    <variation>V</variation>
    <location>
        <position position="2143"/>
    </location>
</feature>
<feature type="sequence variant" id="VAR_028680" description="In HEMA; mild; dbSNP:rs1603431562." evidence="7 24">
    <original>F</original>
    <variation>C</variation>
    <location>
        <position position="2145"/>
    </location>
</feature>
<feature type="sequence variant" id="VAR_001186" description="In HEMA; moderate; dbSNP:rs1321311878." evidence="15 92">
    <original>N</original>
    <variation>S</variation>
    <location>
        <position position="2148"/>
    </location>
</feature>
<feature type="sequence variant" id="VAR_028681" description="In HEMA; mild; dbSNP:rs2072707018." evidence="24">
    <original>N</original>
    <variation>D</variation>
    <location>
        <position position="2157"/>
    </location>
</feature>
<feature type="sequence variant" id="VAR_028682" description="In HEMA; severe; dbSNP:rs1450770782." evidence="42">
    <original>P</original>
    <variation>L</variation>
    <location>
        <position position="2162"/>
    </location>
</feature>
<feature type="sequence variant" id="VAR_028683" description="In HEMA; mild; dbSNP:rs782641941." evidence="16 33">
    <original>R</original>
    <variation>C</variation>
    <location>
        <position position="2169"/>
    </location>
</feature>
<feature type="sequence variant" id="VAR_001187" description="In HEMA; severe/mild; affinity for VWF reduced 3-fold; dbSNP:rs137852461." evidence="5 7 14 15 18 20 25 33 36 50 52 74 80 85 90 92 93">
    <original>R</original>
    <variation>H</variation>
    <location>
        <position position="2169"/>
    </location>
</feature>
<feature type="sequence variant" id="VAR_065322" description="In HEMA." evidence="46">
    <original>P</original>
    <variation>L</variation>
    <location>
        <position position="2172"/>
    </location>
</feature>
<feature type="sequence variant" id="VAR_001188" description="In HEMA; moderate; dbSNP:rs137852462." evidence="15">
    <original>P</original>
    <variation>Q</variation>
    <location>
        <position position="2172"/>
    </location>
</feature>
<feature type="sequence variant" id="VAR_015133" description="In HEMA; severe." evidence="17 19">
    <original>P</original>
    <variation>R</variation>
    <location>
        <position position="2172"/>
    </location>
</feature>
<feature type="sequence variant" id="VAR_028684" description="In HEMA; mild." evidence="24">
    <original>T</original>
    <variation>A</variation>
    <location>
        <position position="2173"/>
    </location>
</feature>
<feature type="sequence variant" id="VAR_001189" description="In HEMA; mild; dbSNP:rs137852463." evidence="37">
    <original>T</original>
    <variation>I</variation>
    <location>
        <position position="2173"/>
    </location>
</feature>
<feature type="sequence variant" id="VAR_028685" description="In HEMA." evidence="33">
    <original>H</original>
    <variation>D</variation>
    <location>
        <position position="2174"/>
    </location>
</feature>
<feature type="sequence variant" id="VAR_001190" description="In HEMA; mild/moderate; dbSNP:rs137852464." evidence="7 16 22 23 26 33 36 52 74 79 85">
    <original>R</original>
    <variation>C</variation>
    <location>
        <position position="2178"/>
    </location>
</feature>
<feature type="sequence variant" id="VAR_001191" description="In HEMA; mild; dbSNP:rs137852465." evidence="33">
    <original>R</original>
    <variation>H</variation>
    <location>
        <position position="2178"/>
    </location>
</feature>
<feature type="sequence variant" id="VAR_001192" description="In HEMA; mild; dbSNP:rs137852465." evidence="72">
    <original>R</original>
    <variation>L</variation>
    <location>
        <position position="2178"/>
    </location>
</feature>
<feature type="sequence variant" id="VAR_001193" description="In HEMA; severe/moderate; dbSNP:rs137852467." evidence="16 17 19 22 29 33">
    <original>R</original>
    <variation>C</variation>
    <location>
        <position position="2182"/>
    </location>
</feature>
<feature type="sequence variant" id="VAR_001194" description="In HEMA; severe/moderate; dbSNP:rs137852466." evidence="4 7 18 20 22 42 90 93">
    <original>R</original>
    <variation>H</variation>
    <location>
        <position position="2182"/>
    </location>
</feature>
<feature type="sequence variant" id="VAR_028686" description="In HEMA; moderate/severe." evidence="22">
    <original>R</original>
    <variation>P</variation>
    <location>
        <position position="2182"/>
    </location>
</feature>
<feature type="sequence variant" id="VAR_028687" description="In HEMA; moderate; dbSNP:rs1405473814." evidence="16">
    <original>M</original>
    <variation>R</variation>
    <location>
        <position position="2183"/>
    </location>
</feature>
<feature type="sequence variant" id="VAR_001195" description="In HEMA; mild; dbSNP:rs781797728." evidence="7 92">
    <original>M</original>
    <variation>V</variation>
    <location>
        <position position="2183"/>
    </location>
</feature>
<feature type="sequence variant" id="VAR_001196" description="In HEMA; severe; dbSNP:rs137852365." evidence="19">
    <original>L</original>
    <variation>S</variation>
    <location>
        <position position="2185"/>
    </location>
</feature>
<feature type="sequence variant" id="VAR_028688" description="In HEMA." evidence="29">
    <original>L</original>
    <variation>W</variation>
    <location>
        <position position="2185"/>
    </location>
</feature>
<feature type="sequence variant" id="VAR_028689" description="In HEMA; mild; dbSNP:rs782098979." evidence="16 25">
    <original>S</original>
    <variation>I</variation>
    <location>
        <position position="2192"/>
    </location>
</feature>
<feature type="sequence variant" id="VAR_017341" description="In HEMA." evidence="27">
    <original>C</original>
    <variation>G</variation>
    <location>
        <position position="2193"/>
    </location>
</feature>
<feature type="sequence variant" id="VAR_028691" description="In HEMA; severe sporadic." evidence="7 20">
    <original>G</original>
    <variation>V</variation>
    <location>
        <position position="2198"/>
    </location>
</feature>
<feature type="sequence variant" id="VAR_028692" description="In HEMA." evidence="90">
    <original>E</original>
    <variation>D</variation>
    <location>
        <position position="2200"/>
    </location>
</feature>
<feature type="sequence variant" id="VAR_001197" description="In HEMA; mild." evidence="88">
    <original>I</original>
    <variation>T</variation>
    <location>
        <position position="2204"/>
    </location>
</feature>
<feature type="sequence variant" id="VAR_001198" description="In HEMA; moderate." evidence="92">
    <original>I</original>
    <variation>N</variation>
    <location>
        <position position="2209"/>
    </location>
</feature>
<feature type="sequence variant" id="VAR_001199" description="In HEMA; moderate; dbSNP:rs137852468." evidence="72">
    <original>A</original>
    <variation>P</variation>
    <location>
        <position position="2211"/>
    </location>
</feature>
<feature type="sequence variant" id="VAR_028693" description="In HEMA; mild; dbSNP:rs782548763." evidence="16">
    <original>A</original>
    <variation>P</variation>
    <location>
        <position position="2220"/>
    </location>
</feature>
<feature type="sequence variant" id="VAR_001200" description="In HEMA; severe/moderate.">
    <location>
        <position position="2223"/>
    </location>
</feature>
<feature type="sequence variant" id="VAR_028695" description="In HEMA; dbSNP:rs2072693210." evidence="29">
    <original>P</original>
    <variation>L</variation>
    <location>
        <position position="2224"/>
    </location>
</feature>
<feature type="sequence variant" id="VAR_028694" description="In HEMA; moderate; dbSNP:rs1229477261." evidence="44">
    <location>
        <position position="2224"/>
    </location>
</feature>
<feature type="sequence variant" id="VAR_001201" description="In HEMA; severe; dbSNP:rs137852355." evidence="33">
    <original>R</original>
    <variation>G</variation>
    <location>
        <position position="2228"/>
    </location>
</feature>
<feature type="sequence variant" id="VAR_001202" description="In HEMA; moderate; dbSNP:rs137852358." evidence="72">
    <original>R</original>
    <variation>L</variation>
    <location>
        <position position="2228"/>
    </location>
</feature>
<feature type="sequence variant" id="VAR_028696" description="In HEMA; moderate-severe." evidence="14">
    <original>R</original>
    <variation>P</variation>
    <location>
        <position position="2228"/>
    </location>
</feature>
<feature type="sequence variant" id="VAR_001203" description="In HEMA; severe/moderate; dbSNP:rs137852358." evidence="5 12 17 20 50 55 67 81">
    <original>R</original>
    <variation>Q</variation>
    <location>
        <position position="2228"/>
    </location>
</feature>
<feature type="sequence variant" id="VAR_028697" description="In HEMA; dbSNP:rs1603431508." evidence="33">
    <original>L</original>
    <variation>F</variation>
    <location>
        <position position="2229"/>
    </location>
</feature>
<feature type="sequence variant" id="VAR_001204" description="In dbSNP:rs782654096." evidence="80">
    <original>V</original>
    <variation>M</variation>
    <location>
        <position position="2242"/>
    </location>
</feature>
<feature type="sequence variant" id="VAR_001205" description="In HEMA; moderate; dbSNP:rs137852469." evidence="7 36 90">
    <original>W</original>
    <variation>C</variation>
    <location>
        <position position="2248"/>
    </location>
</feature>
<feature type="sequence variant" id="VAR_028698" description="In HEMA; moderate." evidence="32">
    <original>W</original>
    <variation>S</variation>
    <location>
        <position position="2248"/>
    </location>
</feature>
<feature type="sequence variant" id="VAR_028699" description="In HEMA; mild; dbSNP:rs782479558." evidence="16 41">
    <original>V</original>
    <variation>A</variation>
    <location>
        <position position="2251"/>
    </location>
</feature>
<feature type="sequence variant" id="VAR_028700" description="In HEMA; dbSNP:rs782479558." evidence="29">
    <original>V</original>
    <variation>E</variation>
    <location>
        <position position="2251"/>
    </location>
</feature>
<feature type="sequence variant" id="VAR_021356" description="In dbSNP:rs1800297." evidence="74 89 95">
    <original>M</original>
    <variation>V</variation>
    <location>
        <position position="2257"/>
    </location>
</feature>
<feature type="sequence variant" id="VAR_017342" description="In HEMA; moderate." evidence="34">
    <original>V</original>
    <variation>VQ</variation>
    <location>
        <position position="2262"/>
    </location>
</feature>
<feature type="sequence variant" id="VAR_028701" description="In HEMA." evidence="85">
    <original>T</original>
    <variation>A</variation>
    <location>
        <position position="2264"/>
    </location>
</feature>
<feature type="sequence variant" id="VAR_001206" description="In HEMA; moderate; dbSNP:rs137852470." evidence="72">
    <original>Q</original>
    <variation>R</variation>
    <location>
        <position position="2265"/>
    </location>
</feature>
<feature type="sequence variant" id="VAR_028702" description="In HEMA; severe sporadic." evidence="19 89">
    <original>F</original>
    <variation>C</variation>
    <location>
        <position position="2279"/>
    </location>
</feature>
<feature type="sequence variant" id="VAR_028703" description="In HEMA; dbSNP:rs782717799." evidence="90">
    <original>F</original>
    <variation>I</variation>
    <location>
        <position position="2279"/>
    </location>
</feature>
<feature type="sequence variant" id="VAR_028704" description="In HEMA; severe." evidence="74">
    <original>I</original>
    <variation>T</variation>
    <location>
        <position position="2281"/>
    </location>
</feature>
<feature type="sequence variant" id="VAR_065323" description="In HEMA." evidence="46">
    <original>D</original>
    <variation>G</variation>
    <location>
        <position position="2286"/>
    </location>
</feature>
<feature type="sequence variant" id="VAR_028705" description="In HEMA." evidence="29">
    <original>W</original>
    <variation>L</variation>
    <location>
        <position position="2290"/>
    </location>
</feature>
<feature type="sequence variant" id="VAR_028706" description="In HEMA; dbSNP:rs1353848654." evidence="85">
    <original>G</original>
    <variation>V</variation>
    <location>
        <position position="2304"/>
    </location>
</feature>
<feature type="sequence variant" id="VAR_015134" description="In HEMA; moderate/mild; dbSNP:rs1603430929." evidence="17 22">
    <original>D</original>
    <variation>A</variation>
    <location>
        <position position="2307"/>
    </location>
</feature>
<feature type="sequence variant" id="VAR_001207" description="In HEMA; mild/severe; dbSNP:rs137852472." evidence="16 19 33 52">
    <original>P</original>
    <variation>L</variation>
    <location>
        <position position="2319"/>
    </location>
</feature>
<feature type="sequence variant" id="VAR_001208" description="In HEMA; mild; dbSNP:rs137852374." evidence="51 93">
    <original>P</original>
    <variation>S</variation>
    <location>
        <position position="2319"/>
    </location>
</feature>
<feature type="sequence variant" id="VAR_001209" description="In HEMA; severe/moderate; may cause reduced phospholipid binding; dbSNP:rs137852473." evidence="16 29 33 50">
    <original>R</original>
    <variation>C</variation>
    <location>
        <position position="2323"/>
    </location>
</feature>
<feature type="sequence variant" id="VAR_028707" description="In HEMA; moderate; dbSNP:rs137852473." evidence="16">
    <original>R</original>
    <variation>G</variation>
    <location>
        <position position="2323"/>
    </location>
</feature>
<feature type="sequence variant" id="VAR_001210" description="In HEMA; mild; may cause reduced phospholipid binding; dbSNP:rs137852474." evidence="33">
    <original>R</original>
    <variation>H</variation>
    <location>
        <position position="2323"/>
    </location>
</feature>
<feature type="sequence variant" id="VAR_028708" description="In HEMA; mild." evidence="22">
    <original>R</original>
    <variation>L</variation>
    <location>
        <position position="2323"/>
    </location>
</feature>
<feature type="sequence variant" id="VAR_028709" description="In HEMA." evidence="7">
    <original>R</original>
    <variation>G</variation>
    <location>
        <position position="2326"/>
    </location>
</feature>
<feature type="sequence variant" id="VAR_001211" description="In HEMA; severe/moderate; may cause reduced phospholipid binding; dbSNP:rs137852360." evidence="19 25 55 60 81">
    <original>R</original>
    <variation>L</variation>
    <location>
        <position position="2326"/>
    </location>
</feature>
<feature type="sequence variant" id="VAR_028710" description="In HEMA; severe sporadic; dbSNP:rs137852360." evidence="19 23">
    <original>R</original>
    <variation>P</variation>
    <location>
        <position position="2326"/>
    </location>
</feature>
<feature type="sequence variant" id="VAR_001212" description="In HEMA; moderate/mild; may cause reduced phospholipid binding; dbSNP:rs137852360." evidence="5 16 26 70">
    <original>R</original>
    <variation>Q</variation>
    <location>
        <position position="2326"/>
    </location>
</feature>
<feature type="sequence variant" id="VAR_028711" description="In HEMA; severe." evidence="24 28">
    <original>Q</original>
    <variation>P</variation>
    <location>
        <position position="2330"/>
    </location>
</feature>
<feature type="sequence variant" id="VAR_028712" description="In HEMA; severe." evidence="12">
    <original>W</original>
    <variation>R</variation>
    <location>
        <position position="2332"/>
    </location>
</feature>
<feature type="sequence variant" id="VAR_065324" description="In HEMA." evidence="46">
    <original>I</original>
    <variation>F</variation>
    <location>
        <position position="2336"/>
    </location>
</feature>
<feature type="sequence variant" id="VAR_028713" description="In HEMA; moderate." evidence="16">
    <original>R</original>
    <variation>T</variation>
    <location>
        <position position="2339"/>
    </location>
</feature>
<feature type="sequence variant" id="VAR_008968" description="In HEMA; moderate." evidence="10 32">
    <original>G</original>
    <variation>C</variation>
    <location>
        <position position="2344"/>
    </location>
</feature>
<feature type="sequence variant" id="VAR_065325" description="In HEMA; dbSNP:rs1557271042." evidence="59">
    <original>G</original>
    <variation>D</variation>
    <location>
        <position position="2344"/>
    </location>
</feature>
<feature type="sequence variant" id="VAR_028714" description="In HEMA." evidence="81">
    <original>G</original>
    <variation>S</variation>
    <location>
        <position position="2344"/>
    </location>
</feature>
<feature type="sequence variant" id="VAR_028715" description="In HEMA." evidence="33">
    <original>C</original>
    <variation>S</variation>
    <location>
        <position position="2345"/>
    </location>
</feature>
<feature type="sequence variant" id="VAR_028716" description="In HEMA." evidence="29">
    <original>C</original>
    <variation>Y</variation>
    <location>
        <position position="2345"/>
    </location>
</feature>
<feature type="sequence conflict" description="In Ref. 2; CAA25619." evidence="99" ref="2">
    <original>P</original>
    <variation>R</variation>
    <location>
        <position position="768"/>
    </location>
</feature>
<feature type="sequence conflict" description="In Ref. 5; AAA52420." evidence="99" ref="5">
    <original>C</original>
    <variation>S</variation>
    <location>
        <position position="1922"/>
    </location>
</feature>
<feature type="strand" evidence="103">
    <location>
        <begin position="21"/>
        <end position="33"/>
    </location>
</feature>
<feature type="strand" evidence="103">
    <location>
        <begin position="65"/>
        <end position="75"/>
    </location>
</feature>
<feature type="strand" evidence="103">
    <location>
        <begin position="95"/>
        <end position="98"/>
    </location>
</feature>
<feature type="strand" evidence="103">
    <location>
        <begin position="102"/>
        <end position="108"/>
    </location>
</feature>
<feature type="strand" evidence="103">
    <location>
        <begin position="111"/>
        <end position="113"/>
    </location>
</feature>
<feature type="strand" evidence="103">
    <location>
        <begin position="118"/>
        <end position="124"/>
    </location>
</feature>
<feature type="helix" evidence="103">
    <location>
        <begin position="139"/>
        <end position="141"/>
    </location>
</feature>
<feature type="turn" evidence="103">
    <location>
        <begin position="143"/>
        <end position="145"/>
    </location>
</feature>
<feature type="strand" evidence="103">
    <location>
        <begin position="152"/>
        <end position="158"/>
    </location>
</feature>
<feature type="strand" evidence="103">
    <location>
        <begin position="167"/>
        <end position="169"/>
    </location>
</feature>
<feature type="strand" evidence="103">
    <location>
        <begin position="171"/>
        <end position="178"/>
    </location>
</feature>
<feature type="helix" evidence="103">
    <location>
        <begin position="183"/>
        <end position="189"/>
    </location>
</feature>
<feature type="strand" evidence="103">
    <location>
        <begin position="192"/>
        <end position="198"/>
    </location>
</feature>
<feature type="strand" evidence="103">
    <location>
        <begin position="213"/>
        <end position="222"/>
    </location>
</feature>
<feature type="helix" evidence="103">
    <location>
        <begin position="223"/>
        <end position="225"/>
    </location>
</feature>
<feature type="strand" evidence="103">
    <location>
        <begin position="249"/>
        <end position="253"/>
    </location>
</feature>
<feature type="strand" evidence="103">
    <location>
        <begin position="268"/>
        <end position="279"/>
    </location>
</feature>
<feature type="strand" evidence="103">
    <location>
        <begin position="286"/>
        <end position="290"/>
    </location>
</feature>
<feature type="strand" evidence="103">
    <location>
        <begin position="295"/>
        <end position="297"/>
    </location>
</feature>
<feature type="strand" evidence="103">
    <location>
        <begin position="300"/>
        <end position="307"/>
    </location>
</feature>
<feature type="strand" evidence="103">
    <location>
        <begin position="309"/>
        <end position="318"/>
    </location>
</feature>
<feature type="strand" evidence="103">
    <location>
        <begin position="323"/>
        <end position="329"/>
    </location>
</feature>
<feature type="helix" evidence="103">
    <location>
        <begin position="332"/>
        <end position="334"/>
    </location>
</feature>
<feature type="turn" evidence="103">
    <location>
        <begin position="335"/>
        <end position="338"/>
    </location>
</feature>
<feature type="strand" evidence="103">
    <location>
        <begin position="340"/>
        <end position="345"/>
    </location>
</feature>
<feature type="strand" evidence="103">
    <location>
        <begin position="400"/>
        <end position="415"/>
    </location>
</feature>
<feature type="helix" evidence="103">
    <location>
        <begin position="426"/>
        <end position="430"/>
    </location>
</feature>
<feature type="strand" evidence="103">
    <location>
        <begin position="440"/>
        <end position="452"/>
    </location>
</feature>
<feature type="strand" evidence="102">
    <location>
        <begin position="456"/>
        <end position="458"/>
    </location>
</feature>
<feature type="turn" evidence="103">
    <location>
        <begin position="463"/>
        <end position="467"/>
    </location>
</feature>
<feature type="strand" evidence="103">
    <location>
        <begin position="472"/>
        <end position="475"/>
    </location>
</feature>
<feature type="strand" evidence="103">
    <location>
        <begin position="479"/>
        <end position="486"/>
    </location>
</feature>
<feature type="strand" evidence="103">
    <location>
        <begin position="488"/>
        <end position="490"/>
    </location>
</feature>
<feature type="strand" evidence="103">
    <location>
        <begin position="495"/>
        <end position="498"/>
    </location>
</feature>
<feature type="strand" evidence="103">
    <location>
        <begin position="501"/>
        <end position="504"/>
    </location>
</feature>
<feature type="strand" evidence="102">
    <location>
        <begin position="511"/>
        <end position="513"/>
    </location>
</feature>
<feature type="turn" evidence="102">
    <location>
        <begin position="517"/>
        <end position="519"/>
    </location>
</feature>
<feature type="strand" evidence="103">
    <location>
        <begin position="527"/>
        <end position="533"/>
    </location>
</feature>
<feature type="turn" evidence="103">
    <location>
        <begin position="536"/>
        <end position="538"/>
    </location>
</feature>
<feature type="strand" evidence="103">
    <location>
        <begin position="542"/>
        <end position="544"/>
    </location>
</feature>
<feature type="strand" evidence="103">
    <location>
        <begin position="546"/>
        <end position="553"/>
    </location>
</feature>
<feature type="helix" evidence="103">
    <location>
        <begin position="558"/>
        <end position="564"/>
    </location>
</feature>
<feature type="strand" evidence="103">
    <location>
        <begin position="567"/>
        <end position="573"/>
    </location>
</feature>
<feature type="strand" evidence="103">
    <location>
        <begin position="591"/>
        <end position="599"/>
    </location>
</feature>
<feature type="helix" evidence="103">
    <location>
        <begin position="600"/>
        <end position="602"/>
    </location>
</feature>
<feature type="helix" evidence="103">
    <location>
        <begin position="606"/>
        <end position="613"/>
    </location>
</feature>
<feature type="turn" evidence="104">
    <location>
        <begin position="621"/>
        <end position="623"/>
    </location>
</feature>
<feature type="helix" evidence="103">
    <location>
        <begin position="625"/>
        <end position="629"/>
    </location>
</feature>
<feature type="strand" evidence="103">
    <location>
        <begin position="632"/>
        <end position="636"/>
    </location>
</feature>
<feature type="strand" evidence="103">
    <location>
        <begin position="645"/>
        <end position="649"/>
    </location>
</feature>
<feature type="strand" evidence="104">
    <location>
        <begin position="650"/>
        <end position="652"/>
    </location>
</feature>
<feature type="strand" evidence="103">
    <location>
        <begin position="653"/>
        <end position="660"/>
    </location>
</feature>
<feature type="strand" evidence="103">
    <location>
        <begin position="668"/>
        <end position="672"/>
    </location>
</feature>
<feature type="strand" evidence="103">
    <location>
        <begin position="677"/>
        <end position="679"/>
    </location>
</feature>
<feature type="strand" evidence="103">
    <location>
        <begin position="682"/>
        <end position="685"/>
    </location>
</feature>
<feature type="strand" evidence="103">
    <location>
        <begin position="687"/>
        <end position="689"/>
    </location>
</feature>
<feature type="strand" evidence="103">
    <location>
        <begin position="693"/>
        <end position="700"/>
    </location>
</feature>
<feature type="strand" evidence="103">
    <location>
        <begin position="705"/>
        <end position="712"/>
    </location>
</feature>
<feature type="helix" evidence="103">
    <location>
        <begin position="714"/>
        <end position="718"/>
    </location>
</feature>
<feature type="strand" evidence="103">
    <location>
        <begin position="723"/>
        <end position="728"/>
    </location>
</feature>
<feature type="strand" evidence="103">
    <location>
        <begin position="1696"/>
        <end position="1698"/>
    </location>
</feature>
<feature type="strand" evidence="103">
    <location>
        <begin position="1714"/>
        <end position="1726"/>
    </location>
</feature>
<feature type="strand" evidence="103">
    <location>
        <begin position="1749"/>
        <end position="1759"/>
    </location>
</feature>
<feature type="turn" evidence="103">
    <location>
        <begin position="1770"/>
        <end position="1772"/>
    </location>
</feature>
<feature type="helix" evidence="103">
    <location>
        <begin position="1773"/>
        <end position="1775"/>
    </location>
</feature>
<feature type="strand" evidence="103">
    <location>
        <begin position="1782"/>
        <end position="1785"/>
    </location>
</feature>
<feature type="strand" evidence="103">
    <location>
        <begin position="1789"/>
        <end position="1796"/>
    </location>
</feature>
<feature type="strand" evidence="103">
    <location>
        <begin position="1798"/>
        <end position="1800"/>
    </location>
</feature>
<feature type="strand" evidence="103">
    <location>
        <begin position="1831"/>
        <end position="1837"/>
    </location>
</feature>
<feature type="helix" evidence="103">
    <location>
        <begin position="1840"/>
        <end position="1842"/>
    </location>
</feature>
<feature type="strand" evidence="103">
    <location>
        <begin position="1846"/>
        <end position="1848"/>
    </location>
</feature>
<feature type="strand" evidence="103">
    <location>
        <begin position="1850"/>
        <end position="1857"/>
    </location>
</feature>
<feature type="helix" evidence="103">
    <location>
        <begin position="1864"/>
        <end position="1868"/>
    </location>
</feature>
<feature type="strand" evidence="103">
    <location>
        <begin position="1872"/>
        <end position="1877"/>
    </location>
</feature>
<feature type="turn" evidence="103">
    <location>
        <begin position="1884"/>
        <end position="1886"/>
    </location>
</feature>
<feature type="strand" evidence="103">
    <location>
        <begin position="1892"/>
        <end position="1903"/>
    </location>
</feature>
<feature type="helix" evidence="103">
    <location>
        <begin position="1904"/>
        <end position="1906"/>
    </location>
</feature>
<feature type="helix" evidence="103">
    <location>
        <begin position="1910"/>
        <end position="1917"/>
    </location>
</feature>
<feature type="helix" evidence="103">
    <location>
        <begin position="1932"/>
        <end position="1935"/>
    </location>
</feature>
<feature type="strand" evidence="103">
    <location>
        <begin position="1936"/>
        <end position="1940"/>
    </location>
</feature>
<feature type="strand" evidence="103">
    <location>
        <begin position="1952"/>
        <end position="1954"/>
    </location>
</feature>
<feature type="strand" evidence="103">
    <location>
        <begin position="1959"/>
        <end position="1965"/>
    </location>
</feature>
<feature type="strand" evidence="103">
    <location>
        <begin position="1973"/>
        <end position="1977"/>
    </location>
</feature>
<feature type="strand" evidence="103">
    <location>
        <begin position="1982"/>
        <end position="1997"/>
    </location>
</feature>
<feature type="strand" evidence="103">
    <location>
        <begin position="2002"/>
        <end position="2007"/>
    </location>
</feature>
<feature type="strand" evidence="103">
    <location>
        <begin position="2013"/>
        <end position="2019"/>
    </location>
</feature>
<feature type="helix" evidence="103">
    <location>
        <begin position="2022"/>
        <end position="2026"/>
    </location>
</feature>
<feature type="strand" evidence="103">
    <location>
        <begin position="2030"/>
        <end position="2036"/>
    </location>
</feature>
<feature type="turn" evidence="103">
    <location>
        <begin position="2046"/>
        <end position="2048"/>
    </location>
</feature>
<feature type="helix" evidence="103">
    <location>
        <begin position="2053"/>
        <end position="2055"/>
    </location>
</feature>
<feature type="strand" evidence="103">
    <location>
        <begin position="2056"/>
        <end position="2059"/>
    </location>
</feature>
<feature type="turn" evidence="102">
    <location>
        <begin position="2062"/>
        <end position="2064"/>
    </location>
</feature>
<feature type="helix" evidence="103">
    <location>
        <begin position="2067"/>
        <end position="2069"/>
    </location>
</feature>
<feature type="strand" evidence="103">
    <location>
        <begin position="2076"/>
        <end position="2078"/>
    </location>
</feature>
<feature type="strand" evidence="102">
    <location>
        <begin position="2080"/>
        <end position="2083"/>
    </location>
</feature>
<feature type="strand" evidence="103">
    <location>
        <begin position="2084"/>
        <end position="2087"/>
    </location>
</feature>
<feature type="strand" evidence="103">
    <location>
        <begin position="2090"/>
        <end position="2106"/>
    </location>
</feature>
<feature type="strand" evidence="104">
    <location>
        <begin position="2108"/>
        <end position="2110"/>
    </location>
</feature>
<feature type="strand" evidence="103">
    <location>
        <begin position="2117"/>
        <end position="2129"/>
    </location>
</feature>
<feature type="strand" evidence="103">
    <location>
        <begin position="2139"/>
        <end position="2142"/>
    </location>
</feature>
<feature type="strand" evidence="103">
    <location>
        <begin position="2149"/>
        <end position="2152"/>
    </location>
</feature>
<feature type="strand" evidence="103">
    <location>
        <begin position="2155"/>
        <end position="2178"/>
    </location>
</feature>
<feature type="strand" evidence="103">
    <location>
        <begin position="2181"/>
        <end position="2188"/>
    </location>
</feature>
<feature type="turn" evidence="101">
    <location>
        <begin position="2199"/>
        <end position="2201"/>
    </location>
</feature>
<feature type="strand" evidence="101">
    <location>
        <begin position="2202"/>
        <end position="2204"/>
    </location>
</feature>
<feature type="helix" evidence="101">
    <location>
        <begin position="2206"/>
        <end position="2208"/>
    </location>
</feature>
<feature type="strand" evidence="101">
    <location>
        <begin position="2209"/>
        <end position="2212"/>
    </location>
</feature>
<feature type="strand" evidence="100">
    <location>
        <begin position="2215"/>
        <end position="2217"/>
    </location>
</feature>
<feature type="strand" evidence="100">
    <location>
        <begin position="2220"/>
        <end position="2222"/>
    </location>
</feature>
<feature type="helix" evidence="101">
    <location>
        <begin position="2224"/>
        <end position="2226"/>
    </location>
</feature>
<feature type="strand" evidence="101">
    <location>
        <begin position="2233"/>
        <end position="2235"/>
    </location>
</feature>
<feature type="strand" evidence="101">
    <location>
        <begin position="2249"/>
        <end position="2265"/>
    </location>
</feature>
<feature type="strand" evidence="101">
    <location>
        <begin position="2267"/>
        <end position="2269"/>
    </location>
</feature>
<feature type="strand" evidence="101">
    <location>
        <begin position="2272"/>
        <end position="2289"/>
    </location>
</feature>
<feature type="strand" evidence="103">
    <location>
        <begin position="2290"/>
        <end position="2292"/>
    </location>
</feature>
<feature type="strand" evidence="102">
    <location>
        <begin position="2296"/>
        <end position="2298"/>
    </location>
</feature>
<feature type="strand" evidence="101">
    <location>
        <begin position="2306"/>
        <end position="2310"/>
    </location>
</feature>
<feature type="strand" evidence="101">
    <location>
        <begin position="2312"/>
        <end position="2335"/>
    </location>
</feature>
<feature type="strand" evidence="101">
    <location>
        <begin position="2338"/>
        <end position="2346"/>
    </location>
</feature>
<organism>
    <name type="scientific">Homo sapiens</name>
    <name type="common">Human</name>
    <dbReference type="NCBI Taxonomy" id="9606"/>
    <lineage>
        <taxon>Eukaryota</taxon>
        <taxon>Metazoa</taxon>
        <taxon>Chordata</taxon>
        <taxon>Craniata</taxon>
        <taxon>Vertebrata</taxon>
        <taxon>Euteleostomi</taxon>
        <taxon>Mammalia</taxon>
        <taxon>Eutheria</taxon>
        <taxon>Euarchontoglires</taxon>
        <taxon>Primates</taxon>
        <taxon>Haplorrhini</taxon>
        <taxon>Catarrhini</taxon>
        <taxon>Hominidae</taxon>
        <taxon>Homo</taxon>
    </lineage>
</organism>
<protein>
    <recommendedName>
        <fullName>Coagulation factor VIII</fullName>
    </recommendedName>
    <alternativeName>
        <fullName>Antihemophilic factor</fullName>
        <shortName>AHF</shortName>
    </alternativeName>
    <alternativeName>
        <fullName>Procoagulant component</fullName>
    </alternativeName>
    <component>
        <recommendedName>
            <fullName>Factor VIIIa heavy chain, 200 kDa isoform</fullName>
        </recommendedName>
    </component>
    <component>
        <recommendedName>
            <fullName>Factor VIIIa heavy chain, 92 kDa isoform</fullName>
        </recommendedName>
    </component>
    <component>
        <recommendedName>
            <fullName>Factor VIII B chain</fullName>
        </recommendedName>
    </component>
    <component>
        <recommendedName>
            <fullName>Factor VIIIa light chain</fullName>
        </recommendedName>
    </component>
</protein>
<accession>P00451</accession>
<accession>Q14286</accession>
<accession>Q5HY69</accession>
<gene>
    <name type="primary">F8</name>
    <name type="synonym">F8C</name>
</gene>